<keyword id="KW-0002">3D-structure</keyword>
<keyword id="KW-0025">Alternative splicing</keyword>
<keyword id="KW-0067">ATP-binding</keyword>
<keyword id="KW-1003">Cell membrane</keyword>
<keyword id="KW-0217">Developmental protein</keyword>
<keyword id="KW-0903">Direct protein sequencing</keyword>
<keyword id="KW-0225">Disease variant</keyword>
<keyword id="KW-1015">Disulfide bond</keyword>
<keyword id="KW-0256">Endoplasmic reticulum</keyword>
<keyword id="KW-0967">Endosome</keyword>
<keyword id="KW-0325">Glycoprotein</keyword>
<keyword id="KW-0333">Golgi apparatus</keyword>
<keyword id="KW-1183">Host cell receptor for virus entry</keyword>
<keyword id="KW-0945">Host-virus interaction</keyword>
<keyword id="KW-0379">Hydroxylation</keyword>
<keyword id="KW-1017">Isopeptide bond</keyword>
<keyword id="KW-0418">Kinase</keyword>
<keyword id="KW-0449">Lipoprotein</keyword>
<keyword id="KW-0472">Membrane</keyword>
<keyword id="KW-0488">Methylation</keyword>
<keyword id="KW-0547">Nucleotide-binding</keyword>
<keyword id="KW-0539">Nucleus</keyword>
<keyword id="KW-0564">Palmitate</keyword>
<keyword id="KW-0597">Phosphoprotein</keyword>
<keyword id="KW-1267">Proteomics identification</keyword>
<keyword id="KW-0656">Proto-oncogene</keyword>
<keyword id="KW-0675">Receptor</keyword>
<keyword id="KW-1185">Reference proteome</keyword>
<keyword id="KW-0677">Repeat</keyword>
<keyword id="KW-0964">Secreted</keyword>
<keyword id="KW-0732">Signal</keyword>
<keyword id="KW-0808">Transferase</keyword>
<keyword id="KW-0812">Transmembrane</keyword>
<keyword id="KW-1133">Transmembrane helix</keyword>
<keyword id="KW-0829">Tyrosine-protein kinase</keyword>
<keyword id="KW-0832">Ubl conjugation</keyword>
<sequence>MRPSGTAGAALLALLAALCPASRALEEKKVCQGTSNKLTQLGTFEDHFLSLQRMFNNCEVVLGNLEITYVQRNYDLSFLKTIQEVAGYVLIALNTVERIPLENLQIIRGNMYYENSYALAVLSNYDANKTGLKELPMRNLQEILHGAVRFSNNPALCNVESIQWRDIVSSDFLSNMSMDFQNHLGSCQKCDPSCPNGSCWGAGEENCQKLTKIICAQQCSGRCRGKSPSDCCHNQCAAGCTGPRESDCLVCRKFRDEATCKDTCPPLMLYNPTTYQMDVNPEGKYSFGATCVKKCPRNYVVTDHGSCVRACGADSYEMEEDGVRKCKKCEGPCRKVCNGIGIGEFKDSLSINATNIKHFKNCTSISGDLHILPVAFRGDSFTHTPPLDPQELDILKTVKEITGFLLIQAWPENRTDLHAFENLEIIRGRTKQHGQFSLAVVSLNITSLGLRSLKEISDGDVIISGNKNLCYANTINWKKLFGTSGQKTKIISNRGENSCKATGQVCHALCSPEGCWGPEPRDCVSCRNVSRGRECVDKCNLLEGEPREFVENSECIQCHPECLPQAMNITCTGRGPDNCIQCAHYIDGPHCVKTCPAGVMGENNTLVWKYADAGHVCHLCHPNCTYGCTGPGLEGCPTNGPKIPSIATGMVGALLLLLVVALGIGLFMRRRHIVRKRTLRRLLQERELVEPLTPSGEAPNQALLRILKETEFKKIKVLGSGAFGTVYKGLWIPEGEKVKIPVAIKELREATSPKANKEILDEAYVMASVDNPHVCRLLGICLTSTVQLITQLMPFGCLLDYVREHKDNIGSQYLLNWCVQIAKGMNYLEDRRLVHRDLAARNVLVKTPQHVKITDFGLAKLLGAEEKEYHAEGGKVPIKWMALESILHRIYTHQSDVWSYGVTVWELMTFGSKPYDGIPASEISSILEKGERLPQPPICTIDVYMIMVKCWMIDADSRPKFRELIIEFSKMARDPQRYLVIQGDERMHLPSPTDSNFYRALMDEEDMDDVVDADEYLIPQQGFFSSPSTSRTPLLSSLSATSNNSTVACIDRNGLQSCPIKEDSFLQRYSSDPTGALTEDSIDDTFLPVPEYINQSVPKRPAGSVQNPVYHNQPLNPAPSRDPHYQDPHSTAVGNPEYLNTVQPTCVNSTFDSPAHWAQKGSHQISLDNPDYQQDFFPKEAKPNGIFKGSTAENAEYLRVAPQSSEFIGA</sequence>
<comment type="function">
    <text evidence="1 10 11 12 13 14 15 16 18 22 23 24 34 40 47 52 56 57 74 75 80 83 84 87">Receptor tyrosine kinase binding ligands of the EGF family and activating several signaling cascades to convert extracellular cues into appropriate cellular responses (PubMed:10805725, PubMed:27153536, PubMed:2790960, PubMed:35538033). Known ligands include EGF, TGFA/TGF-alpha, AREG, epigen/EPGN, BTC/betacellulin, epiregulin/EREG and HBEGF/heparin-binding EGF (PubMed:12297049, PubMed:15611079, PubMed:17909029, PubMed:20837704, PubMed:27153536, PubMed:2790960, PubMed:7679104, PubMed:8144591, PubMed:9419975). Ligand binding triggers receptor homo- and/or heterodimerization and autophosphorylation on key cytoplasmic residues. The phosphorylated receptor recruits adapter proteins like GRB2 which in turn activates complex downstream signaling cascades. Activates at least 4 major downstream signaling cascades including the RAS-RAF-MEK-ERK, PI3 kinase-AKT, PLCgamma-PKC and STATs modules (PubMed:27153536). May also activate the NF-kappa-B signaling cascade (PubMed:11116146). Also directly phosphorylates other proteins like RGS16, activating its GTPase activity and probably coupling the EGF receptor signaling to the G protein-coupled receptor signaling (PubMed:11602604). Also phosphorylates MUC1 and increases its interaction with SRC and CTNNB1/beta-catenin (PubMed:11483589). Positively regulates cell migration via interaction with CCDC88A/GIV which retains EGFR at the cell membrane following ligand stimulation, promoting EGFR signaling which triggers cell migration (PubMed:20462955). Plays a role in enhancing learning and memory performance (By similarity). Plays a role in mammalian pain signaling (long-lasting hypersensitivity) (By similarity).</text>
</comment>
<comment type="function">
    <text>Isoform 2 may act as an antagonist of EGF action.</text>
</comment>
<comment type="function">
    <text evidence="59">(Microbial infection) Acts as a receptor for hepatitis C virus (HCV) in hepatocytes and facilitates its cell entry. Mediates HCV entry by promoting the formation of the CD81-CLDN1 receptor complexes that are essential for HCV entry and by enhancing membrane fusion of cells expressing HCV envelope glycoproteins.</text>
</comment>
<comment type="catalytic activity">
    <reaction evidence="4 22 38 41 42 47 48">
        <text>L-tyrosyl-[protein] + ATP = O-phospho-L-tyrosyl-[protein] + ADP + H(+)</text>
        <dbReference type="Rhea" id="RHEA:10596"/>
        <dbReference type="Rhea" id="RHEA-COMP:10136"/>
        <dbReference type="Rhea" id="RHEA-COMP:20101"/>
        <dbReference type="ChEBI" id="CHEBI:15378"/>
        <dbReference type="ChEBI" id="CHEBI:30616"/>
        <dbReference type="ChEBI" id="CHEBI:46858"/>
        <dbReference type="ChEBI" id="CHEBI:61978"/>
        <dbReference type="ChEBI" id="CHEBI:456216"/>
        <dbReference type="EC" id="2.7.10.1"/>
    </reaction>
</comment>
<comment type="activity regulation">
    <text evidence="20 23 36 41 51 72">Endocytosis and inhibition of the activated EGFR by phosphatases like PTPRJ and PTPRK constitute immediate regulatory mechanisms. Upon EGF-binding phosphorylates EPS15 that regulates EGFR endocytosis and activity. Moreover, inducible feedback inhibitors including LRIG1, SOCS4, SOCS5 and ERRFI1 constitute alternative regulatory mechanisms for the EGFR signaling. Up-regulated by NEU3-mediated desialylation of N-linked glycan at Asn-528.</text>
</comment>
<comment type="subunit">
    <text evidence="1 6 7 10 11 12 15 16 18 20 22 23 26 28 30 34 35 36 40 41 43 45 46 47 48 50 51 52 53 54 55 56 57 60 62 63 64 65 66 67 69 70 73 76 80 82 85 88 89">Binding of the ligand triggers homo- and/or heterodimerization of the receptor triggering its autophosphorylation. Heterodimer with ERBB2 (PubMed:10805725). Forms a complex with CCDC88A/GIV (via SH2-like regions) and GNAI3 which leads to enhanced EGFR signaling and triggering of cell migration; binding to CCDC88A requires autophosphorylation of the EGFR C-terminal region, and ligand stimulation is required for recruitment of GNAI3 to the complex (PubMed:20462955, PubMed:25187647). Interacts with ERRFI1; inhibits dimerization of the kinase domain and autophosphorylation (PubMed:18046415). Part of a complex with ERBB2 and either PIK3C2A or PIK3C2B (PubMed:10805725). Interacts with GRB2; an adapter protein coupling the receptor to downstream signaling pathways. Interacts with GAB2; involved in signaling downstream of EGFR. Interacts with STAT3; mediates EGFR downstream signaling in cell proliferation. Interacts with RIPK1; involved in NF-kappa-B activation. Interacts (autophosphorylated) with CBL, CBLB and CBLC; involved in EGFR ubiquitination and regulation; interaction with CBL is reduced in the presence of tensin TNS4 (PubMed:23774213). Interacts with SOCS5; regulates EGFR degradation through ELOC- and ELOB-mediated ubiquitination and proteasomal degradation. Interacts with PRMT5; methylates EGFR and enhances interaction with PTPN6. Interacts (phosphorylated) with PTPN6; inhibits EGFR-dependent activation of MAPK/ERK. Interacts with COPG1; essential for regulation of EGF-dependent nuclear transport of EGFR by retrograde trafficking from the Golgi to the ER. Interacts with TNK2; this interaction is dependent on EGF stimulation and kinase activity of EGFR. Interacts with PCNA; positively regulates PCNA (PubMed:17115032). Interacts with PELP1. Interacts with MUC1. Interacts with AP2M1. Interacts with FER. May interact with EPS8; mediates EPS8 phosphorylation. Interacts (via SH2 domains) with GRB2, NCK1 and NCK2 (PubMed:10026169). Interacts with ATXN2. Interacts with GAREM1. Interacts (ubiquitinated) with ANKRD13A/B/D; the interaction is direct and may regulate EGFR internalization after EGF stimulation. Interacts with GPER1; the interaction occurs in an estrogen-dependent manner. Interacts (via C-terminal cytoplasmic kinase domain) with ZPR1 (via zinc fingers). Interacts with RNF115 and RNF126 (PubMed:23418353). Interacts with GPRC5A (via its transmembrane domain) (PubMed:25311788). Interacts with FAM83B; positively regulates EGFR inducing its autophosphorylation in absence of stimulation by EGF (PubMed:23912460). Interacts with LAPTM4B; positively correlates with EGFR activation (PubMed:28479384). Interacts with STX19 (PubMed:16420529). Interacts with CD44 (PubMed:23589287). Interacts with PGRMC1; the interaction requires PGRMC1 homodimerization (PubMed:26988023). Interacts with PIKFYVE (PubMed:17909029). Interacts with NEU3. Interacts with TRAF4 (PubMed:30352854). Interacts with the ant venom OMEGA-myrmeciitoxin(02)-Mg1a (By similarity). Interacts with CD82; this interaction facilitates ligand-induced endocytosis of the receptor and its subsequent desensitization (PubMed:35538033).</text>
</comment>
<comment type="interaction">
    <interactant intactId="EBI-297353">
        <id>P00533</id>
    </interactant>
    <interactant intactId="EBI-375543">
        <id>P00519</id>
        <label>ABL1</label>
    </interactant>
    <organismsDiffer>false</organismsDiffer>
    <experiments>3</experiments>
</comment>
<comment type="interaction">
    <interactant intactId="EBI-297353">
        <id>P00533</id>
    </interactant>
    <interactant intactId="EBI-1102694">
        <id>P42684</id>
        <label>ABL2</label>
    </interactant>
    <organismsDiffer>false</organismsDiffer>
    <experiments>9</experiments>
</comment>
<comment type="interaction">
    <interactant intactId="EBI-297353">
        <id>P00533</id>
    </interactant>
    <interactant intactId="EBI-1646426">
        <id>Q15109</id>
        <label>AGER</label>
    </interactant>
    <organismsDiffer>false</organismsDiffer>
    <experiments>2</experiments>
</comment>
<comment type="interaction">
    <interactant intactId="EBI-297353">
        <id>P00533</id>
    </interactant>
    <interactant intactId="EBI-528269">
        <id>Q9UKV8</id>
        <label>AGO2</label>
    </interactant>
    <organismsDiffer>false</organismsDiffer>
    <experiments>11</experiments>
</comment>
<comment type="interaction">
    <interactant intactId="EBI-297353">
        <id>P00533</id>
    </interactant>
    <interactant intactId="EBI-2555881">
        <id>Q09666</id>
        <label>AHNAK</label>
    </interactant>
    <organismsDiffer>false</organismsDiffer>
    <experiments>4</experiments>
</comment>
<comment type="interaction">
    <interactant intactId="EBI-297353">
        <id>P00533</id>
    </interactant>
    <interactant intactId="EBI-704197">
        <id>O00170</id>
        <label>AIP</label>
    </interactant>
    <organismsDiffer>false</organismsDiffer>
    <experiments>2</experiments>
</comment>
<comment type="interaction">
    <interactant intactId="EBI-297353">
        <id>P00533</id>
    </interactant>
    <interactant intactId="EBI-2562430">
        <id>Q02952</id>
        <label>AKAP12</label>
    </interactant>
    <organismsDiffer>false</organismsDiffer>
    <experiments>3</experiments>
</comment>
<comment type="interaction">
    <interactant intactId="EBI-297353">
        <id>P00533</id>
    </interactant>
    <interactant intactId="EBI-7121510">
        <id>P49418</id>
        <label>AMPH</label>
    </interactant>
    <organismsDiffer>false</organismsDiffer>
    <experiments>2</experiments>
</comment>
<comment type="interaction">
    <interactant intactId="EBI-297353">
        <id>P00533</id>
    </interactant>
    <interactant intactId="EBI-1048612">
        <id>Q92625</id>
        <label>ANKS1A</label>
    </interactant>
    <organismsDiffer>false</organismsDiffer>
    <experiments>7</experiments>
</comment>
<comment type="interaction">
    <interactant intactId="EBI-297353">
        <id>P00533</id>
    </interactant>
    <interactant intactId="EBI-354007">
        <id>P04083</id>
        <label>ANXA1</label>
    </interactant>
    <organismsDiffer>false</organismsDiffer>
    <experiments>3</experiments>
</comment>
<comment type="interaction">
    <interactant intactId="EBI-297353">
        <id>P00533</id>
    </interactant>
    <interactant intactId="EBI-352622">
        <id>P07355</id>
        <label>ANXA2</label>
    </interactant>
    <organismsDiffer>false</organismsDiffer>
    <experiments>4</experiments>
</comment>
<comment type="interaction">
    <interactant intactId="EBI-297353">
        <id>P00533</id>
    </interactant>
    <interactant intactId="EBI-1171303">
        <id>Q10567</id>
        <label>AP1B1</label>
    </interactant>
    <organismsDiffer>false</organismsDiffer>
    <experiments>4</experiments>
</comment>
<comment type="interaction">
    <interactant intactId="EBI-297353">
        <id>P00533</id>
    </interactant>
    <interactant intactId="EBI-297683">
        <id>Q96CW1</id>
        <label>AP2M1</label>
    </interactant>
    <organismsDiffer>false</organismsDiffer>
    <experiments>8</experiments>
</comment>
<comment type="interaction">
    <interactant intactId="EBI-297353">
        <id>P00533</id>
    </interactant>
    <interactant intactId="EBI-81694">
        <id>O00213</id>
        <label>APBB1</label>
    </interactant>
    <organismsDiffer>false</organismsDiffer>
    <experiments>4</experiments>
</comment>
<comment type="interaction">
    <interactant intactId="EBI-297353">
        <id>P00533</id>
    </interactant>
    <interactant intactId="EBI-79277">
        <id>Q92870</id>
        <label>APBB2</label>
    </interactant>
    <organismsDiffer>false</organismsDiffer>
    <experiments>7</experiments>
</comment>
<comment type="interaction">
    <interactant intactId="EBI-297353">
        <id>P00533</id>
    </interactant>
    <interactant intactId="EBI-286427">
        <id>O95704</id>
        <label>APBB3</label>
    </interactant>
    <organismsDiffer>false</organismsDiffer>
    <experiments>2</experiments>
</comment>
<comment type="interaction">
    <interactant intactId="EBI-297353">
        <id>P00533</id>
    </interactant>
    <interactant intactId="EBI-741243">
        <id>Q9UKG1</id>
        <label>APPL1</label>
    </interactant>
    <organismsDiffer>false</organismsDiffer>
    <experiments>3</experiments>
</comment>
<comment type="interaction">
    <interactant intactId="EBI-297353">
        <id>P00533</id>
    </interactant>
    <interactant intactId="EBI-448680">
        <id>O14965</id>
        <label>AURKA</label>
    </interactant>
    <organismsDiffer>false</organismsDiffer>
    <experiments>4</experiments>
</comment>
<comment type="interaction">
    <interactant intactId="EBI-297353">
        <id>P00533</id>
    </interactant>
    <interactant intactId="EBI-2850927">
        <id>P30530</id>
        <label>AXL</label>
    </interactant>
    <organismsDiffer>false</organismsDiffer>
    <experiments>4</experiments>
</comment>
<comment type="interaction">
    <interactant intactId="EBI-297353">
        <id>P00533</id>
    </interactant>
    <interactant intactId="EBI-525456">
        <id>Q9UQB8</id>
        <label>BAIAP2</label>
    </interactant>
    <organismsDiffer>false</organismsDiffer>
    <experiments>4</experiments>
</comment>
<comment type="interaction">
    <interactant intactId="EBI-297353">
        <id>P00533</id>
    </interactant>
    <interactant intactId="EBI-519884">
        <id>Q9BXH1</id>
        <label>BBC3</label>
    </interactant>
    <organismsDiffer>false</organismsDiffer>
    <experiments>10</experiments>
</comment>
<comment type="interaction">
    <interactant intactId="EBI-297353">
        <id>P00533</id>
    </interactant>
    <interactant intactId="EBI-949378">
        <id>Q14457</id>
        <label>BECN1</label>
    </interactant>
    <organismsDiffer>false</organismsDiffer>
    <experiments>7</experiments>
</comment>
<comment type="interaction">
    <interactant intactId="EBI-297353">
        <id>P00533</id>
    </interactant>
    <interactant intactId="EBI-2105445">
        <id>P51451</id>
        <label>BLK</label>
    </interactant>
    <organismsDiffer>false</organismsDiffer>
    <experiments>3</experiments>
</comment>
<comment type="interaction">
    <interactant intactId="EBI-297353">
        <id>P00533</id>
    </interactant>
    <interactant intactId="EBI-397435">
        <id>P62158</id>
        <label>CALM3</label>
    </interactant>
    <organismsDiffer>false</organismsDiffer>
    <experiments>6</experiments>
</comment>
<comment type="interaction">
    <interactant intactId="EBI-297353">
        <id>P00533</id>
    </interactant>
    <interactant intactId="EBI-1748958">
        <id>P49069</id>
        <label>CAMLG</label>
    </interactant>
    <organismsDiffer>false</organismsDiffer>
    <experiments>3</experiments>
</comment>
<comment type="interaction">
    <interactant intactId="EBI-297353">
        <id>P00533</id>
    </interactant>
    <interactant intactId="EBI-603614">
        <id>Q03135</id>
        <label>CAV1</label>
    </interactant>
    <organismsDiffer>false</organismsDiffer>
    <experiments>7</experiments>
</comment>
<comment type="interaction">
    <interactant intactId="EBI-297353">
        <id>P00533</id>
    </interactant>
    <interactant intactId="EBI-603607">
        <id>P51636</id>
        <label>CAV2</label>
    </interactant>
    <organismsDiffer>false</organismsDiffer>
    <experiments>3</experiments>
</comment>
<comment type="interaction">
    <interactant intactId="EBI-297353">
        <id>P00533</id>
    </interactant>
    <interactant intactId="EBI-518228">
        <id>P22681</id>
        <label>CBL</label>
    </interactant>
    <organismsDiffer>false</organismsDiffer>
    <experiments>22</experiments>
</comment>
<comment type="interaction">
    <interactant intactId="EBI-297353">
        <id>P00533</id>
    </interactant>
    <interactant intactId="EBI-295634">
        <id>Q16543</id>
        <label>CDC37</label>
    </interactant>
    <organismsDiffer>false</organismsDiffer>
    <experiments>13</experiments>
</comment>
<comment type="interaction">
    <interactant intactId="EBI-297353">
        <id>P00533</id>
    </interactant>
    <interactant intactId="EBI-727477">
        <id>P12830</id>
        <label>CDH1</label>
    </interactant>
    <organismsDiffer>false</organismsDiffer>
    <experiments>4</experiments>
</comment>
<comment type="interaction">
    <interactant intactId="EBI-297353">
        <id>P00533</id>
    </interactant>
    <interactant intactId="EBI-444308">
        <id>P06493</id>
        <label>CDK1</label>
    </interactant>
    <organismsDiffer>false</organismsDiffer>
    <experiments>3</experiments>
</comment>
<comment type="interaction">
    <interactant intactId="EBI-297353">
        <id>P00533</id>
    </interactant>
    <interactant intactId="EBI-352733">
        <id>P23528</id>
        <label>CFL1</label>
    </interactant>
    <organismsDiffer>false</organismsDiffer>
    <experiments>3</experiments>
</comment>
<comment type="interaction">
    <interactant intactId="EBI-297353">
        <id>P00533</id>
    </interactant>
    <interactant intactId="EBI-14357960">
        <id>Q9BZP6</id>
        <label>CHIA</label>
    </interactant>
    <organismsDiffer>false</organismsDiffer>
    <experiments>2</experiments>
</comment>
<comment type="interaction">
    <interactant intactId="EBI-297353">
        <id>P00533</id>
    </interactant>
    <interactant intactId="EBI-617866">
        <id>Q9NSE2</id>
        <label>CISH</label>
    </interactant>
    <organismsDiffer>false</organismsDiffer>
    <experiments>4</experiments>
</comment>
<comment type="interaction">
    <interactant intactId="EBI-297353">
        <id>P00533</id>
    </interactant>
    <interactant intactId="EBI-7878194">
        <id>Q7Z7G1</id>
        <label>CLNK</label>
    </interactant>
    <organismsDiffer>false</organismsDiffer>
    <experiments>2</experiments>
</comment>
<comment type="interaction">
    <interactant intactId="EBI-297353">
        <id>P00533</id>
    </interactant>
    <interactant intactId="EBI-1045119">
        <id>Q8WXI2</id>
        <label>CNKSR2</label>
    </interactant>
    <organismsDiffer>false</organismsDiffer>
    <experiments>2</experiments>
</comment>
<comment type="interaction">
    <interactant intactId="EBI-297353">
        <id>P00533</id>
    </interactant>
    <interactant intactId="EBI-886">
        <id>P46108</id>
        <label>CRK</label>
    </interactant>
    <organismsDiffer>false</organismsDiffer>
    <experiments>4</experiments>
</comment>
<comment type="interaction">
    <interactant intactId="EBI-297353">
        <id>P00533</id>
    </interactant>
    <interactant intactId="EBI-287556">
        <id>P46108-1</id>
        <label>CRK</label>
    </interactant>
    <organismsDiffer>false</organismsDiffer>
    <experiments>3</experiments>
</comment>
<comment type="interaction">
    <interactant intactId="EBI-297353">
        <id>P00533</id>
    </interactant>
    <interactant intactId="EBI-910">
        <id>P46109</id>
        <label>CRKL</label>
    </interactant>
    <organismsDiffer>false</organismsDiffer>
    <experiments>4</experiments>
</comment>
<comment type="interaction">
    <interactant intactId="EBI-297353">
        <id>P00533</id>
    </interactant>
    <interactant intactId="EBI-701927">
        <id>O60716</id>
        <label>CTNND1</label>
    </interactant>
    <organismsDiffer>false</organismsDiffer>
    <experiments>5</experiments>
</comment>
<comment type="interaction">
    <interactant intactId="EBI-297353">
        <id>P00533</id>
    </interactant>
    <interactant intactId="EBI-351886">
        <id>Q14247</id>
        <label>CTTN</label>
    </interactant>
    <organismsDiffer>false</organismsDiffer>
    <experiments>4</experiments>
</comment>
<comment type="interaction">
    <interactant intactId="EBI-297353">
        <id>P00533</id>
    </interactant>
    <interactant intactId="EBI-2834978">
        <id>Q7L591</id>
        <label>DOK3</label>
    </interactant>
    <organismsDiffer>false</organismsDiffer>
    <experiments>2</experiments>
</comment>
<comment type="interaction">
    <interactant intactId="EBI-297353">
        <id>P00533</id>
    </interactant>
    <interactant intactId="EBI-2880244">
        <id>Q6PKX4</id>
        <label>DOK6</label>
    </interactant>
    <organismsDiffer>false</organismsDiffer>
    <experiments>2</experiments>
</comment>
<comment type="interaction">
    <interactant intactId="EBI-297353">
        <id>P00533</id>
    </interactant>
    <interactant intactId="EBI-640857">
        <id>P01133</id>
        <label>EGF</label>
    </interactant>
    <organismsDiffer>false</organismsDiffer>
    <experiments>29</experiments>
</comment>
<comment type="interaction">
    <interactant intactId="EBI-297353">
        <id>P00533</id>
    </interactant>
    <interactant intactId="EBI-297353">
        <id>P00533</id>
        <label>EGFR</label>
    </interactant>
    <organismsDiffer>false</organismsDiffer>
    <experiments>30</experiments>
</comment>
<comment type="interaction">
    <interactant intactId="EBI-297353">
        <id>P00533</id>
    </interactant>
    <interactant intactId="EBI-15482510">
        <id>Q6UW88</id>
        <label>EPGN</label>
    </interactant>
    <organismsDiffer>false</organismsDiffer>
    <experiments>3</experiments>
</comment>
<comment type="interaction">
    <interactant intactId="EBI-297353">
        <id>P00533</id>
    </interactant>
    <interactant intactId="EBI-375576">
        <id>Q12929</id>
        <label>EPS8</label>
    </interactant>
    <organismsDiffer>false</organismsDiffer>
    <experiments>4</experiments>
</comment>
<comment type="interaction">
    <interactant intactId="EBI-297353">
        <id>P00533</id>
    </interactant>
    <interactant intactId="EBI-641062">
        <id>P04626</id>
        <label>ERBB2</label>
    </interactant>
    <organismsDiffer>false</organismsDiffer>
    <experiments>25</experiments>
</comment>
<comment type="interaction">
    <interactant intactId="EBI-297353">
        <id>P00533</id>
    </interactant>
    <interactant intactId="EBI-720706">
        <id>P21860</id>
        <label>ERBB3</label>
    </interactant>
    <organismsDiffer>false</organismsDiffer>
    <experiments>14</experiments>
</comment>
<comment type="interaction">
    <interactant intactId="EBI-297353">
        <id>P00533</id>
    </interactant>
    <interactant intactId="EBI-80371">
        <id>Q15303</id>
        <label>ERBB4</label>
    </interactant>
    <organismsDiffer>false</organismsDiffer>
    <experiments>3</experiments>
</comment>
<comment type="interaction">
    <interactant intactId="EBI-297353">
        <id>P00533</id>
    </interactant>
    <interactant intactId="EBI-750962">
        <id>P07992</id>
        <label>ERCC1</label>
    </interactant>
    <organismsDiffer>false</organismsDiffer>
    <experiments>21</experiments>
</comment>
<comment type="interaction">
    <interactant intactId="EBI-297353">
        <id>P00533</id>
    </interactant>
    <interactant intactId="EBI-17272224">
        <id>O14944</id>
        <label>EREG</label>
    </interactant>
    <organismsDiffer>false</organismsDiffer>
    <experiments>3</experiments>
</comment>
<comment type="interaction">
    <interactant intactId="EBI-297353">
        <id>P00533</id>
    </interactant>
    <interactant intactId="EBI-2941912">
        <id>Q9UJM3</id>
        <label>ERRFI1</label>
    </interactant>
    <organismsDiffer>false</organismsDiffer>
    <experiments>15</experiments>
</comment>
<comment type="interaction">
    <interactant intactId="EBI-297353">
        <id>P00533</id>
    </interactant>
    <interactant intactId="EBI-78473">
        <id>P03372</id>
        <label>ESR1</label>
    </interactant>
    <organismsDiffer>false</organismsDiffer>
    <experiments>2</experiments>
</comment>
<comment type="interaction">
    <interactant intactId="EBI-297353">
        <id>P00533</id>
    </interactant>
    <interactant intactId="EBI-4309277">
        <id>P03372-4</id>
        <label>ESR1</label>
    </interactant>
    <organismsDiffer>false</organismsDiffer>
    <experiments>4</experiments>
</comment>
<comment type="interaction">
    <interactant intactId="EBI-297353">
        <id>P00533</id>
    </interactant>
    <interactant intactId="EBI-78505">
        <id>Q92731</id>
        <label>ESR2</label>
    </interactant>
    <organismsDiffer>false</organismsDiffer>
    <experiments>8</experiments>
</comment>
<comment type="interaction">
    <interactant intactId="EBI-297353">
        <id>P00533</id>
    </interactant>
    <interactant intactId="EBI-355383">
        <id>Q96A65</id>
        <label>EXOC4</label>
    </interactant>
    <organismsDiffer>false</organismsDiffer>
    <experiments>2</experiments>
</comment>
<comment type="interaction">
    <interactant intactId="EBI-297353">
        <id>P00533</id>
    </interactant>
    <interactant intactId="EBI-1056902">
        <id>P15311</id>
        <label>EZR</label>
    </interactant>
    <organismsDiffer>false</organismsDiffer>
    <experiments>3</experiments>
</comment>
<comment type="interaction">
    <interactant intactId="EBI-297353">
        <id>P00533</id>
    </interactant>
    <interactant intactId="EBI-359343">
        <id>Q9BXW9</id>
        <label>FANCD2</label>
    </interactant>
    <organismsDiffer>false</organismsDiffer>
    <experiments>2</experiments>
</comment>
<comment type="interaction">
    <interactant intactId="EBI-297353">
        <id>P00533</id>
    </interactant>
    <interactant intactId="EBI-1383732">
        <id>P09769</id>
        <label>FGR</label>
    </interactant>
    <organismsDiffer>false</organismsDiffer>
    <experiments>3</experiments>
</comment>
<comment type="interaction">
    <interactant intactId="EBI-297353">
        <id>P00533</id>
    </interactant>
    <interactant intactId="EBI-306914">
        <id>Q13451</id>
        <label>FKBP5</label>
    </interactant>
    <organismsDiffer>false</organismsDiffer>
    <experiments>2</experiments>
</comment>
<comment type="interaction">
    <interactant intactId="EBI-297353">
        <id>P00533</id>
    </interactant>
    <interactant intactId="EBI-724839">
        <id>Q14318</id>
        <label>FKBP8</label>
    </interactant>
    <organismsDiffer>false</organismsDiffer>
    <experiments>4</experiments>
</comment>
<comment type="interaction">
    <interactant intactId="EBI-297353">
        <id>P00533</id>
    </interactant>
    <interactant intactId="EBI-517684">
        <id>Q13480</id>
        <label>GAB1</label>
    </interactant>
    <organismsDiffer>false</organismsDiffer>
    <experiments>5</experiments>
</comment>
<comment type="interaction">
    <interactant intactId="EBI-297353">
        <id>P00533</id>
    </interactant>
    <interactant intactId="EBI-975200">
        <id>Q9UQC2</id>
        <label>GAB2</label>
    </interactant>
    <organismsDiffer>false</organismsDiffer>
    <experiments>3</experiments>
</comment>
<comment type="interaction">
    <interactant intactId="EBI-297353">
        <id>P00533</id>
    </interactant>
    <interactant intactId="EBI-720116">
        <id>P60520</id>
        <label>GABARAPL2</label>
    </interactant>
    <organismsDiffer>false</organismsDiffer>
    <experiments>3</experiments>
</comment>
<comment type="interaction">
    <interactant intactId="EBI-297353">
        <id>P00533</id>
    </interactant>
    <interactant intactId="EBI-2685723">
        <id>P47869</id>
        <label>GABRA2</label>
    </interactant>
    <organismsDiffer>false</organismsDiffer>
    <experiments>2</experiments>
</comment>
<comment type="interaction">
    <interactant intactId="EBI-297353">
        <id>P00533</id>
    </interactant>
    <interactant intactId="EBI-354056">
        <id>P04406</id>
        <label>GAPDH</label>
    </interactant>
    <organismsDiffer>false</organismsDiffer>
    <experiments>7</experiments>
</comment>
<comment type="interaction">
    <interactant intactId="EBI-297353">
        <id>P00533</id>
    </interactant>
    <interactant intactId="EBI-712073">
        <id>Q8NBJ4</id>
        <label>GOLM1</label>
    </interactant>
    <organismsDiffer>false</organismsDiffer>
    <experiments>13</experiments>
</comment>
<comment type="interaction">
    <interactant intactId="EBI-297353">
        <id>P00533</id>
    </interactant>
    <interactant intactId="EBI-7250369">
        <id>Q14956</id>
        <label>GPNMB</label>
    </interactant>
    <organismsDiffer>false</organismsDiffer>
    <experiments>3</experiments>
</comment>
<comment type="interaction">
    <interactant intactId="EBI-297353">
        <id>P00533</id>
    </interactant>
    <interactant intactId="EBI-16191078">
        <id>Q14956-1</id>
        <label>GPNMB</label>
    </interactant>
    <organismsDiffer>false</organismsDiffer>
    <experiments>2</experiments>
</comment>
<comment type="interaction">
    <interactant intactId="EBI-297353">
        <id>P00533</id>
    </interactant>
    <interactant intactId="EBI-740418">
        <id>O75791</id>
        <label>GRAP2</label>
    </interactant>
    <organismsDiffer>false</organismsDiffer>
    <experiments>3</experiments>
</comment>
<comment type="interaction">
    <interactant intactId="EBI-297353">
        <id>P00533</id>
    </interactant>
    <interactant intactId="EBI-80275">
        <id>Q13322</id>
        <label>GRB10</label>
    </interactant>
    <organismsDiffer>false</organismsDiffer>
    <experiments>3</experiments>
</comment>
<comment type="interaction">
    <interactant intactId="EBI-297353">
        <id>P00533</id>
    </interactant>
    <interactant intactId="EBI-401755">
        <id>P62993</id>
        <label>GRB2</label>
    </interactant>
    <organismsDiffer>false</organismsDiffer>
    <experiments>48</experiments>
</comment>
<comment type="interaction">
    <interactant intactId="EBI-297353">
        <id>P00533</id>
    </interactant>
    <interactant intactId="EBI-7211558">
        <id>Q99075</id>
        <label>HBEGF</label>
    </interactant>
    <organismsDiffer>false</organismsDiffer>
    <experiments>3</experiments>
</comment>
<comment type="interaction">
    <interactant intactId="EBI-297353">
        <id>P00533</id>
    </interactant>
    <interactant intactId="EBI-346340">
        <id>P08631</id>
        <label>HCK</label>
    </interactant>
    <organismsDiffer>false</organismsDiffer>
    <experiments>3</experiments>
</comment>
<comment type="interaction">
    <interactant intactId="EBI-297353">
        <id>P00533</id>
    </interactant>
    <interactant intactId="EBI-301697">
        <id>Q9UBN7</id>
        <label>HDAC6</label>
    </interactant>
    <organismsDiffer>false</organismsDiffer>
    <experiments>12</experiments>
</comment>
<comment type="interaction">
    <interactant intactId="EBI-297353">
        <id>P00533</id>
    </interactant>
    <interactant intactId="EBI-1048378">
        <id>Q8WUI4</id>
        <label>HDAC7</label>
    </interactant>
    <organismsDiffer>false</organismsDiffer>
    <experiments>3</experiments>
</comment>
<comment type="interaction">
    <interactant intactId="EBI-297353">
        <id>P00533</id>
    </interactant>
    <interactant intactId="EBI-296047">
        <id>P07900</id>
        <label>HSP90AA1</label>
    </interactant>
    <organismsDiffer>false</organismsDiffer>
    <experiments>7</experiments>
</comment>
<comment type="interaction">
    <interactant intactId="EBI-297353">
        <id>P00533</id>
    </interactant>
    <interactant intactId="EBI-352572">
        <id>P08238</id>
        <label>HSP90AB1</label>
    </interactant>
    <organismsDiffer>false</organismsDiffer>
    <experiments>10</experiments>
</comment>
<comment type="interaction">
    <interactant intactId="EBI-297353">
        <id>P00533</id>
    </interactant>
    <interactant intactId="EBI-9356629">
        <id>Q6PK50</id>
        <label>HSP90AB1</label>
    </interactant>
    <organismsDiffer>false</organismsDiffer>
    <experiments>2</experiments>
</comment>
<comment type="interaction">
    <interactant intactId="EBI-297353">
        <id>P00533</id>
    </interactant>
    <interactant intactId="EBI-629985">
        <id>P08107</id>
        <label>HSPA1B</label>
    </interactant>
    <organismsDiffer>false</organismsDiffer>
    <experiments>6</experiments>
</comment>
<comment type="interaction">
    <interactant intactId="EBI-297353">
        <id>P00533</id>
    </interactant>
    <interactant intactId="EBI-356933">
        <id>P34932</id>
        <label>HSPA4</label>
    </interactant>
    <organismsDiffer>false</organismsDiffer>
    <experiments>3</experiments>
</comment>
<comment type="interaction">
    <interactant intactId="EBI-297353">
        <id>P00533</id>
    </interactant>
    <interactant intactId="EBI-351896">
        <id>P11142</id>
        <label>HSPA8</label>
    </interactant>
    <organismsDiffer>false</organismsDiffer>
    <experiments>7</experiments>
</comment>
<comment type="interaction">
    <interactant intactId="EBI-297353">
        <id>P00533</id>
    </interactant>
    <interactant intactId="EBI-354932">
        <id>P38646</id>
        <label>HSPA9</label>
    </interactant>
    <organismsDiffer>false</organismsDiffer>
    <experiments>5</experiments>
</comment>
<comment type="interaction">
    <interactant intactId="EBI-297353">
        <id>P00533</id>
    </interactant>
    <interactant intactId="EBI-715709">
        <id>P17936</id>
        <label>IGFBP3</label>
    </interactant>
    <organismsDiffer>false</organismsDiffer>
    <experiments>3</experiments>
</comment>
<comment type="interaction">
    <interactant intactId="EBI-297353">
        <id>P00533</id>
    </interactant>
    <interactant intactId="EBI-297509">
        <id>P46940</id>
        <label>IQGAP1</label>
    </interactant>
    <organismsDiffer>false</organismsDiffer>
    <experiments>4</experiments>
</comment>
<comment type="interaction">
    <interactant intactId="EBI-297353">
        <id>P00533</id>
    </interactant>
    <interactant intactId="EBI-356594">
        <id>O14654</id>
        <label>IRS4</label>
    </interactant>
    <organismsDiffer>false</organismsDiffer>
    <experiments>2</experiments>
</comment>
<comment type="interaction">
    <interactant intactId="EBI-297353">
        <id>P00533</id>
    </interactant>
    <interactant intactId="EBI-308689">
        <id>Q9NZM3</id>
        <label>ITSN2</label>
    </interactant>
    <organismsDiffer>false</organismsDiffer>
    <experiments>3</experiments>
</comment>
<comment type="interaction">
    <interactant intactId="EBI-297353">
        <id>P00533</id>
    </interactant>
    <interactant intactId="EBI-702484">
        <id>P14923</id>
        <label>JUP</label>
    </interactant>
    <organismsDiffer>false</organismsDiffer>
    <experiments>3</experiments>
</comment>
<comment type="interaction">
    <interactant intactId="EBI-297353">
        <id>P00533</id>
    </interactant>
    <interactant intactId="EBI-3267258">
        <id>Q86VI4</id>
        <label>LAPTM4B</label>
    </interactant>
    <organismsDiffer>false</organismsDiffer>
    <experiments>10</experiments>
</comment>
<comment type="interaction">
    <interactant intactId="EBI-297353">
        <id>P00533</id>
    </interactant>
    <interactant intactId="EBI-1222766">
        <id>O43561</id>
        <label>LAT</label>
    </interactant>
    <organismsDiffer>false</organismsDiffer>
    <experiments>3</experiments>
</comment>
<comment type="interaction">
    <interactant intactId="EBI-297353">
        <id>P00533</id>
    </interactant>
    <interactant intactId="EBI-346946">
        <id>Q13094</id>
        <label>LCP2</label>
    </interactant>
    <organismsDiffer>false</organismsDiffer>
    <experiments>3</experiments>
</comment>
<comment type="interaction">
    <interactant intactId="EBI-297353">
        <id>P00533</id>
    </interactant>
    <interactant intactId="EBI-719955">
        <id>Q96FE5</id>
        <label>LINGO1</label>
    </interactant>
    <organismsDiffer>false</organismsDiffer>
    <experiments>2</experiments>
</comment>
<comment type="interaction">
    <interactant intactId="EBI-297353">
        <id>P00533</id>
    </interactant>
    <interactant intactId="EBI-2865191">
        <id>Q96JA1</id>
        <label>LRIG1</label>
    </interactant>
    <organismsDiffer>false</organismsDiffer>
    <experiments>6</experiments>
</comment>
<comment type="interaction">
    <interactant intactId="EBI-297353">
        <id>P00533</id>
    </interactant>
    <interactant intactId="EBI-2830372">
        <id>O94898</id>
        <label>LRIG2</label>
    </interactant>
    <organismsDiffer>false</organismsDiffer>
    <experiments>4</experiments>
</comment>
<comment type="interaction">
    <interactant intactId="EBI-297353">
        <id>P00533</id>
    </interactant>
    <interactant intactId="EBI-1050422">
        <id>Q38SD2</id>
        <label>LRRK1</label>
    </interactant>
    <organismsDiffer>false</organismsDiffer>
    <experiments>2</experiments>
</comment>
<comment type="interaction">
    <interactant intactId="EBI-297353">
        <id>P00533</id>
    </interactant>
    <interactant intactId="EBI-79452">
        <id>P07948</id>
        <label>LYN</label>
    </interactant>
    <organismsDiffer>false</organismsDiffer>
    <experiments>7</experiments>
</comment>
<comment type="interaction">
    <interactant intactId="EBI-297353">
        <id>P00533</id>
    </interactant>
    <interactant intactId="EBI-6895930">
        <id>P07948-1</id>
        <label>LYN</label>
    </interactant>
    <organismsDiffer>false</organismsDiffer>
    <experiments>2</experiments>
</comment>
<comment type="interaction">
    <interactant intactId="EBI-297353">
        <id>P00533</id>
    </interactant>
    <interactant intactId="EBI-741037">
        <id>Q9BRK4</id>
        <label>LZTS2</label>
    </interactant>
    <organismsDiffer>false</organismsDiffer>
    <experiments>2</experiments>
</comment>
<comment type="interaction">
    <interactant intactId="EBI-297353">
        <id>P00533</id>
    </interactant>
    <interactant intactId="EBI-710223">
        <id>Q12852</id>
        <label>MAP3K12</label>
    </interactant>
    <organismsDiffer>false</organismsDiffer>
    <experiments>3</experiments>
</comment>
<comment type="interaction">
    <interactant intactId="EBI-297353">
        <id>P00533</id>
    </interactant>
    <interactant intactId="EBI-78404">
        <id>Q9UQF2</id>
        <label>MAPK8IP1</label>
    </interactant>
    <organismsDiffer>false</organismsDiffer>
    <experiments>3</experiments>
</comment>
<comment type="interaction">
    <interactant intactId="EBI-297353">
        <id>P00533</id>
    </interactant>
    <interactant intactId="EBI-722813">
        <id>Q13387</id>
        <label>MAPK8IP2</label>
    </interactant>
    <organismsDiffer>false</organismsDiffer>
    <experiments>5</experiments>
</comment>
<comment type="interaction">
    <interactant intactId="EBI-297353">
        <id>P00533</id>
    </interactant>
    <interactant intactId="EBI-3385920">
        <id>Q9Y2H9</id>
        <label>MAST1</label>
    </interactant>
    <organismsDiffer>false</organismsDiffer>
    <experiments>3</experiments>
</comment>
<comment type="interaction">
    <interactant intactId="EBI-297353">
        <id>P00533</id>
    </interactant>
    <interactant intactId="EBI-741953">
        <id>Q9NS73</id>
        <label>MBIP</label>
    </interactant>
    <organismsDiffer>false</organismsDiffer>
    <experiments>2</experiments>
</comment>
<comment type="interaction">
    <interactant intactId="EBI-297353">
        <id>P00533</id>
    </interactant>
    <interactant intactId="EBI-1039152">
        <id>P08581</id>
        <label>MET</label>
    </interactant>
    <organismsDiffer>false</organismsDiffer>
    <experiments>8</experiments>
</comment>
<comment type="interaction">
    <interactant intactId="EBI-297353">
        <id>P00533</id>
    </interactant>
    <interactant intactId="EBI-372712">
        <id>P14174</id>
        <label>MIF</label>
    </interactant>
    <organismsDiffer>false</organismsDiffer>
    <experiments>3</experiments>
</comment>
<comment type="interaction">
    <interactant intactId="EBI-297353">
        <id>P00533</id>
    </interactant>
    <interactant intactId="EBI-2804728">
        <id>P15941</id>
        <label>MUC1</label>
    </interactant>
    <organismsDiffer>false</organismsDiffer>
    <experiments>4</experiments>
</comment>
<comment type="interaction">
    <interactant intactId="EBI-297353">
        <id>P00533</id>
    </interactant>
    <interactant intactId="EBI-389883">
        <id>P16333</id>
        <label>NCK1</label>
    </interactant>
    <organismsDiffer>false</organismsDiffer>
    <experiments>5</experiments>
</comment>
<comment type="interaction">
    <interactant intactId="EBI-297353">
        <id>P00533</id>
    </interactant>
    <interactant intactId="EBI-726944">
        <id>P46934</id>
        <label>NEDD4</label>
    </interactant>
    <organismsDiffer>false</organismsDiffer>
    <experiments>3</experiments>
</comment>
<comment type="interaction">
    <interactant intactId="EBI-297353">
        <id>P00533</id>
    </interactant>
    <interactant intactId="EBI-493507">
        <id>P04150</id>
        <label>NR3C1</label>
    </interactant>
    <organismsDiffer>false</organismsDiffer>
    <experiments>3</experiments>
</comment>
<comment type="interaction">
    <interactant intactId="EBI-297353">
        <id>P00533</id>
    </interactant>
    <interactant intactId="EBI-915016">
        <id>P49757</id>
        <label>NUMB</label>
    </interactant>
    <organismsDiffer>false</organismsDiffer>
    <experiments>2</experiments>
</comment>
<comment type="interaction">
    <interactant intactId="EBI-297353">
        <id>P00533</id>
    </interactant>
    <interactant intactId="EBI-945925">
        <id>Q9Y6R0</id>
        <label>NUMBL</label>
    </interactant>
    <organismsDiffer>false</organismsDiffer>
    <experiments>2</experiments>
</comment>
<comment type="interaction">
    <interactant intactId="EBI-297353">
        <id>P00533</id>
    </interactant>
    <interactant intactId="EBI-725454">
        <id>Q13438</id>
        <label>OS9</label>
    </interactant>
    <organismsDiffer>false</organismsDiffer>
    <experiments>3</experiments>
</comment>
<comment type="interaction">
    <interactant intactId="EBI-297353">
        <id>P00533</id>
    </interactant>
    <interactant intactId="EBI-2861522">
        <id>P16234</id>
        <label>PDGFRA</label>
    </interactant>
    <organismsDiffer>false</organismsDiffer>
    <experiments>4</experiments>
</comment>
<comment type="interaction">
    <interactant intactId="EBI-297353">
        <id>P00533</id>
    </interactant>
    <interactant intactId="EBI-641107">
        <id>O00750</id>
        <label>PIK3C2B</label>
    </interactant>
    <organismsDiffer>false</organismsDiffer>
    <experiments>10</experiments>
</comment>
<comment type="interaction">
    <interactant intactId="EBI-297353">
        <id>P00533</id>
    </interactant>
    <interactant intactId="EBI-79464">
        <id>P27986</id>
        <label>PIK3R1</label>
    </interactant>
    <organismsDiffer>false</organismsDiffer>
    <experiments>6</experiments>
</comment>
<comment type="interaction">
    <interactant intactId="EBI-297353">
        <id>P00533</id>
    </interactant>
    <interactant intactId="EBI-346930">
        <id>O00459</id>
        <label>PIK3R2</label>
    </interactant>
    <organismsDiffer>false</organismsDiffer>
    <experiments>5</experiments>
</comment>
<comment type="interaction">
    <interactant intactId="EBI-297353">
        <id>P00533</id>
    </interactant>
    <interactant intactId="EBI-79893">
        <id>Q92569</id>
        <label>PIK3R3</label>
    </interactant>
    <organismsDiffer>false</organismsDiffer>
    <experiments>7</experiments>
</comment>
<comment type="interaction">
    <interactant intactId="EBI-297353">
        <id>P00533</id>
    </interactant>
    <interactant intactId="EBI-79387">
        <id>P19174</id>
        <label>PLCG1</label>
    </interactant>
    <organismsDiffer>false</organismsDiffer>
    <experiments>6</experiments>
</comment>
<comment type="interaction">
    <interactant intactId="EBI-297353">
        <id>P00533</id>
    </interactant>
    <interactant intactId="EBI-617403">
        <id>P16885</id>
        <label>PLCG2</label>
    </interactant>
    <organismsDiffer>false</organismsDiffer>
    <experiments>6</experiments>
</comment>
<comment type="interaction">
    <interactant intactId="EBI-297353">
        <id>P00533</id>
    </interactant>
    <interactant intactId="EBI-989143">
        <id>P35813</id>
        <label>PPM1A</label>
    </interactant>
    <organismsDiffer>false</organismsDiffer>
    <experiments>2</experiments>
</comment>
<comment type="interaction">
    <interactant intactId="EBI-297353">
        <id>P00533</id>
    </interactant>
    <interactant intactId="EBI-1383528">
        <id>P17252</id>
        <label>PRKCA</label>
    </interactant>
    <organismsDiffer>false</organismsDiffer>
    <experiments>3</experiments>
</comment>
<comment type="interaction">
    <interactant intactId="EBI-297353">
        <id>P00533</id>
    </interactant>
    <interactant intactId="EBI-702142">
        <id>Q05397</id>
        <label>PTK2</label>
    </interactant>
    <organismsDiffer>false</organismsDiffer>
    <experiments>7</experiments>
</comment>
<comment type="interaction">
    <interactant intactId="EBI-297353">
        <id>P00533</id>
    </interactant>
    <interactant intactId="EBI-968788">
        <id>P18031</id>
        <label>PTPN1</label>
    </interactant>
    <organismsDiffer>false</organismsDiffer>
    <experiments>9</experiments>
</comment>
<comment type="interaction">
    <interactant intactId="EBI-297353">
        <id>P00533</id>
    </interactant>
    <interactant intactId="EBI-297779">
        <id>Q06124</id>
        <label>PTPN11</label>
    </interactant>
    <organismsDiffer>false</organismsDiffer>
    <experiments>5</experiments>
</comment>
<comment type="interaction">
    <interactant intactId="EBI-297353">
        <id>P00533</id>
    </interactant>
    <interactant intactId="EBI-2266035">
        <id>Q05209</id>
        <label>PTPN12</label>
    </interactant>
    <organismsDiffer>false</organismsDiffer>
    <experiments>5</experiments>
</comment>
<comment type="interaction">
    <interactant intactId="EBI-297353">
        <id>P00533</id>
    </interactant>
    <interactant intactId="EBI-1211241">
        <id>Q9Y2R2</id>
        <label>PTPN22</label>
    </interactant>
    <organismsDiffer>false</organismsDiffer>
    <experiments>3</experiments>
</comment>
<comment type="interaction">
    <interactant intactId="EBI-297353">
        <id>P00533</id>
    </interactant>
    <interactant intactId="EBI-2609645">
        <id>P18433</id>
        <label>PTPRA</label>
    </interactant>
    <organismsDiffer>false</organismsDiffer>
    <experiments>3</experiments>
</comment>
<comment type="interaction">
    <interactant intactId="EBI-297353">
        <id>P00533</id>
    </interactant>
    <interactant intactId="EBI-1265766">
        <id>P23467</id>
        <label>PTPRB</label>
    </interactant>
    <organismsDiffer>false</organismsDiffer>
    <experiments>3</experiments>
</comment>
<comment type="interaction">
    <interactant intactId="EBI-297353">
        <id>P00533</id>
    </interactant>
    <interactant intactId="EBI-1341">
        <id>P08575</id>
        <label>PTPRC</label>
    </interactant>
    <organismsDiffer>false</organismsDiffer>
    <experiments>2</experiments>
</comment>
<comment type="interaction">
    <interactant intactId="EBI-297353">
        <id>P00533</id>
    </interactant>
    <interactant intactId="EBI-2258115">
        <id>P23470</id>
        <label>PTPRG</label>
    </interactant>
    <organismsDiffer>false</organismsDiffer>
    <experiments>3</experiments>
</comment>
<comment type="interaction">
    <interactant intactId="EBI-297353">
        <id>P00533</id>
    </interactant>
    <interactant intactId="EBI-1267176">
        <id>Q9HD43</id>
        <label>PTPRH</label>
    </interactant>
    <organismsDiffer>false</organismsDiffer>
    <experiments>3</experiments>
</comment>
<comment type="interaction">
    <interactant intactId="EBI-297353">
        <id>P00533</id>
    </interactant>
    <interactant intactId="EBI-913954">
        <id>Q9UJ41</id>
        <label>RABGEF1</label>
    </interactant>
    <organismsDiffer>false</organismsDiffer>
    <experiments>4</experiments>
</comment>
<comment type="interaction">
    <interactant intactId="EBI-297353">
        <id>P00533</id>
    </interactant>
    <interactant intactId="EBI-3940924">
        <id>Q70E73</id>
        <label>RAPH1</label>
    </interactant>
    <organismsDiffer>false</organismsDiffer>
    <experiments>2</experiments>
</comment>
<comment type="interaction">
    <interactant intactId="EBI-297353">
        <id>P00533</id>
    </interactant>
    <interactant intactId="EBI-1026476">
        <id>P20936</id>
        <label>RASA1</label>
    </interactant>
    <organismsDiffer>false</organismsDiffer>
    <experiments>7</experiments>
</comment>
<comment type="interaction">
    <interactant intactId="EBI-297353">
        <id>P00533</id>
    </interactant>
    <interactant intactId="EBI-366017">
        <id>Q13671</id>
        <label>RIN1</label>
    </interactant>
    <organismsDiffer>false</organismsDiffer>
    <experiments>3</experiments>
</comment>
<comment type="interaction">
    <interactant intactId="EBI-297353">
        <id>P00533</id>
    </interactant>
    <interactant intactId="EBI-6082337">
        <id>Q01973</id>
        <label>ROR1</label>
    </interactant>
    <organismsDiffer>false</organismsDiffer>
    <experiments>8</experiments>
</comment>
<comment type="interaction">
    <interactant intactId="EBI-297353">
        <id>P00533</id>
    </interactant>
    <interactant intactId="EBI-2952709">
        <id>Q92622</id>
        <label>RUBCN</label>
    </interactant>
    <organismsDiffer>false</organismsDiffer>
    <experiments>3</experiments>
</comment>
<comment type="interaction">
    <interactant intactId="EBI-297353">
        <id>P00533</id>
    </interactant>
    <interactant intactId="EBI-717058">
        <id>P26447</id>
        <label>S100A4</label>
    </interactant>
    <organismsDiffer>false</organismsDiffer>
    <experiments>6</experiments>
</comment>
<comment type="interaction">
    <interactant intactId="EBI-297353">
        <id>P00533</id>
    </interactant>
    <interactant intactId="EBI-358919">
        <id>P61619</id>
        <label>SEC61A1</label>
    </interactant>
    <organismsDiffer>false</organismsDiffer>
    <experiments>2</experiments>
</comment>
<comment type="interaction">
    <interactant intactId="EBI-297353">
        <id>P00533</id>
    </interactant>
    <interactant intactId="EBI-358766">
        <id>Q9UBV2</id>
        <label>SEL1L</label>
    </interactant>
    <organismsDiffer>false</organismsDiffer>
    <experiments>2</experiments>
</comment>
<comment type="interaction">
    <interactant intactId="EBI-297353">
        <id>P00533</id>
    </interactant>
    <interactant intactId="EBI-476295">
        <id>P31947</id>
        <label>SFN</label>
    </interactant>
    <organismsDiffer>false</organismsDiffer>
    <experiments>9</experiments>
</comment>
<comment type="interaction">
    <interactant intactId="EBI-297353">
        <id>P00533</id>
    </interactant>
    <interactant intactId="EBI-310491">
        <id>Q9NRF2</id>
        <label>SH2B1</label>
    </interactant>
    <organismsDiffer>false</organismsDiffer>
    <experiments>4</experiments>
</comment>
<comment type="interaction">
    <interactant intactId="EBI-297353">
        <id>P00533</id>
    </interactant>
    <interactant intactId="EBI-7879749">
        <id>Q9UQQ2</id>
        <label>SH2B3</label>
    </interactant>
    <organismsDiffer>false</organismsDiffer>
    <experiments>2</experiments>
</comment>
<comment type="interaction">
    <interactant intactId="EBI-297353">
        <id>P00533</id>
    </interactant>
    <interactant intactId="EBI-2339271">
        <id>Q9BRG2</id>
        <label>SH2D3A</label>
    </interactant>
    <organismsDiffer>false</organismsDiffer>
    <experiments>3</experiments>
</comment>
<comment type="interaction">
    <interactant intactId="EBI-297353">
        <id>P00533</id>
    </interactant>
    <interactant intactId="EBI-78835">
        <id>P29353</id>
        <label>SHC1</label>
    </interactant>
    <organismsDiffer>false</organismsDiffer>
    <experiments>37</experiments>
</comment>
<comment type="interaction">
    <interactant intactId="EBI-297353">
        <id>P00533</id>
    </interactant>
    <interactant intactId="EBI-9691288">
        <id>P29353-7</id>
        <label>SHC1</label>
    </interactant>
    <organismsDiffer>false</organismsDiffer>
    <experiments>4</experiments>
</comment>
<comment type="interaction">
    <interactant intactId="EBI-297353">
        <id>P00533</id>
    </interactant>
    <interactant intactId="EBI-7256023">
        <id>P98077</id>
        <label>SHC2</label>
    </interactant>
    <organismsDiffer>false</organismsDiffer>
    <experiments>3</experiments>
</comment>
<comment type="interaction">
    <interactant intactId="EBI-297353">
        <id>P00533</id>
    </interactant>
    <interactant intactId="EBI-9453524">
        <id>Q6S5L8</id>
        <label>SHC4</label>
    </interactant>
    <organismsDiffer>false</organismsDiffer>
    <experiments>3</experiments>
</comment>
<comment type="interaction">
    <interactant intactId="EBI-297353">
        <id>P00533</id>
    </interactant>
    <interactant intactId="EBI-2483161">
        <id>O75563</id>
        <label>SKAP2</label>
    </interactant>
    <organismsDiffer>false</organismsDiffer>
    <experiments>2</experiments>
</comment>
<comment type="interaction">
    <interactant intactId="EBI-297353">
        <id>P00533</id>
    </interactant>
    <interactant intactId="EBI-726214">
        <id>Q13239</id>
        <label>SLA</label>
    </interactant>
    <organismsDiffer>false</organismsDiffer>
    <experiments>3</experiments>
</comment>
<comment type="interaction">
    <interactant intactId="EBI-297353">
        <id>P00533</id>
    </interactant>
    <interactant intactId="EBI-1772443">
        <id>P13866</id>
        <label>SLC5A1</label>
    </interactant>
    <organismsDiffer>false</organismsDiffer>
    <experiments>3</experiments>
</comment>
<comment type="interaction">
    <interactant intactId="EBI-297353">
        <id>P00533</id>
    </interactant>
    <interactant intactId="EBI-297487">
        <id>Q07889</id>
        <label>SOS1</label>
    </interactant>
    <organismsDiffer>false</organismsDiffer>
    <experiments>3</experiments>
</comment>
<comment type="interaction">
    <interactant intactId="EBI-297353">
        <id>P00533</id>
    </interactant>
    <interactant intactId="EBI-621482">
        <id>P12931</id>
        <label>SRC</label>
    </interactant>
    <organismsDiffer>false</organismsDiffer>
    <experiments>9</experiments>
</comment>
<comment type="interaction">
    <interactant intactId="EBI-297353">
        <id>P00533</id>
    </interactant>
    <interactant intactId="EBI-1057697">
        <id>P42224</id>
        <label>STAT1</label>
    </interactant>
    <organismsDiffer>false</organismsDiffer>
    <experiments>7</experiments>
</comment>
<comment type="interaction">
    <interactant intactId="EBI-297353">
        <id>P00533</id>
    </interactant>
    <interactant intactId="EBI-518675">
        <id>P40763</id>
        <label>STAT3</label>
    </interactant>
    <organismsDiffer>false</organismsDiffer>
    <experiments>15</experiments>
</comment>
<comment type="interaction">
    <interactant intactId="EBI-297353">
        <id>P00533</id>
    </interactant>
    <interactant intactId="EBI-749537">
        <id>P42229</id>
        <label>STAT5A</label>
    </interactant>
    <organismsDiffer>false</organismsDiffer>
    <experiments>4</experiments>
</comment>
<comment type="interaction">
    <interactant intactId="EBI-297353">
        <id>P00533</id>
    </interactant>
    <interactant intactId="EBI-1054052">
        <id>P31948</id>
        <label>STIP1</label>
    </interactant>
    <organismsDiffer>false</organismsDiffer>
    <experiments>3</experiments>
</comment>
<comment type="interaction">
    <interactant intactId="EBI-297353">
        <id>P00533</id>
    </interactant>
    <interactant intactId="EBI-357085">
        <id>Q9UNE7</id>
        <label>STUB1</label>
    </interactant>
    <organismsDiffer>false</organismsDiffer>
    <experiments>4</experiments>
</comment>
<comment type="interaction">
    <interactant intactId="EBI-297353">
        <id>P00533</id>
    </interactant>
    <interactant intactId="EBI-2695795">
        <id>O43752</id>
        <label>STX6</label>
    </interactant>
    <organismsDiffer>false</organismsDiffer>
    <experiments>3</experiments>
</comment>
<comment type="interaction">
    <interactant intactId="EBI-297353">
        <id>P00533</id>
    </interactant>
    <interactant intactId="EBI-78302">
        <id>P43405</id>
        <label>SYK</label>
    </interactant>
    <organismsDiffer>false</organismsDiffer>
    <experiments>6</experiments>
</comment>
<comment type="interaction">
    <interactant intactId="EBI-297353">
        <id>P00533</id>
    </interactant>
    <interactant intactId="EBI-358643">
        <id>Q15750</id>
        <label>TAB1</label>
    </interactant>
    <organismsDiffer>false</organismsDiffer>
    <experiments>3</experiments>
</comment>
<comment type="interaction">
    <interactant intactId="EBI-297353">
        <id>P00533</id>
    </interactant>
    <interactant intactId="EBI-2554984">
        <id>Q9Y6A5</id>
        <label>TACC3</label>
    </interactant>
    <organismsDiffer>false</organismsDiffer>
    <experiments>3</experiments>
</comment>
<comment type="interaction">
    <interactant intactId="EBI-297353">
        <id>P00533</id>
    </interactant>
    <interactant intactId="EBI-1034374">
        <id>P01135</id>
        <label>TGFA</label>
    </interactant>
    <organismsDiffer>false</organismsDiffer>
    <experiments>4</experiments>
</comment>
<comment type="interaction">
    <interactant intactId="EBI-297353">
        <id>P00533</id>
    </interactant>
    <interactant intactId="EBI-2462036">
        <id>Q9Y490</id>
        <label>TLN1</label>
    </interactant>
    <organismsDiffer>false</organismsDiffer>
    <experiments>2</experiments>
</comment>
<comment type="interaction">
    <interactant intactId="EBI-297353">
        <id>P00533</id>
    </interactant>
    <interactant intactId="EBI-973722">
        <id>O60603</id>
        <label>TLR2</label>
    </interactant>
    <organismsDiffer>false</organismsDiffer>
    <experiments>3</experiments>
</comment>
<comment type="interaction">
    <interactant intactId="EBI-297353">
        <id>P00533</id>
    </interactant>
    <interactant intactId="EBI-20899422">
        <id>Q9Y6Q6-2</id>
        <label>TNFRSF11A</label>
    </interactant>
    <organismsDiffer>false</organismsDiffer>
    <experiments>3</experiments>
</comment>
<comment type="interaction">
    <interactant intactId="EBI-297353">
        <id>P00533</id>
    </interactant>
    <interactant intactId="EBI-1220488">
        <id>Q68CZ2</id>
        <label>TNS3</label>
    </interactant>
    <organismsDiffer>false</organismsDiffer>
    <experiments>5</experiments>
</comment>
<comment type="interaction">
    <interactant intactId="EBI-297353">
        <id>P00533</id>
    </interactant>
    <interactant intactId="EBI-7543499">
        <id>Q8IZW8</id>
        <label>TNS4</label>
    </interactant>
    <organismsDiffer>false</organismsDiffer>
    <experiments>2</experiments>
</comment>
<comment type="interaction">
    <interactant intactId="EBI-297353">
        <id>P00533</id>
    </interactant>
    <interactant intactId="EBI-712991">
        <id>O75674</id>
        <label>TOM1L1</label>
    </interactant>
    <organismsDiffer>false</organismsDiffer>
    <experiments>6</experiments>
</comment>
<comment type="interaction">
    <interactant intactId="EBI-297353">
        <id>P00533</id>
    </interactant>
    <interactant intactId="EBI-355744">
        <id>Q12933</id>
        <label>TRAF2</label>
    </interactant>
    <organismsDiffer>false</organismsDiffer>
    <experiments>4</experiments>
</comment>
<comment type="interaction">
    <interactant intactId="EBI-297353">
        <id>P00533</id>
    </interactant>
    <interactant intactId="EBI-302552">
        <id>Q71U36</id>
        <label>TUBA1A</label>
    </interactant>
    <organismsDiffer>false</organismsDiffer>
    <experiments>4</experiments>
</comment>
<comment type="interaction">
    <interactant intactId="EBI-297353">
        <id>P00533</id>
    </interactant>
    <interactant intactId="EBI-711595">
        <id>Q13885</id>
        <label>TUBB2A</label>
    </interactant>
    <organismsDiffer>false</organismsDiffer>
    <experiments>2</experiments>
</comment>
<comment type="interaction">
    <interactant intactId="EBI-297353">
        <id>P00533</id>
    </interactant>
    <interactant intactId="EBI-594644">
        <id>P10599</id>
        <label>TXN</label>
    </interactant>
    <organismsDiffer>false</organismsDiffer>
    <experiments>5</experiments>
</comment>
<comment type="interaction">
    <interactant intactId="EBI-297353">
        <id>P00533</id>
    </interactant>
    <interactant intactId="EBI-714860">
        <id>P09936</id>
        <label>UCHL1</label>
    </interactant>
    <organismsDiffer>false</organismsDiffer>
    <experiments>3</experiments>
</comment>
<comment type="interaction">
    <interactant intactId="EBI-297353">
        <id>P00533</id>
    </interactant>
    <interactant intactId="EBI-719283">
        <id>Q8TEY7</id>
        <label>USP33</label>
    </interactant>
    <organismsDiffer>false</organismsDiffer>
    <experiments>2</experiments>
</comment>
<comment type="interaction">
    <interactant intactId="EBI-297353">
        <id>P00533</id>
    </interactant>
    <interactant intactId="EBI-1059156">
        <id>Q9P0L0</id>
        <label>VAPA</label>
    </interactant>
    <organismsDiffer>false</organismsDiffer>
    <experiments>4</experiments>
</comment>
<comment type="interaction">
    <interactant intactId="EBI-297353">
        <id>P00533</id>
    </interactant>
    <interactant intactId="EBI-515331">
        <id>P07947</id>
        <label>YES1</label>
    </interactant>
    <organismsDiffer>false</organismsDiffer>
    <experiments>3</experiments>
</comment>
<comment type="interaction">
    <interactant intactId="EBI-297353">
        <id>P00533</id>
    </interactant>
    <interactant intactId="EBI-359854">
        <id>P27348</id>
        <label>YWHAQ</label>
    </interactant>
    <organismsDiffer>false</organismsDiffer>
    <experiments>7</experiments>
</comment>
<comment type="interaction">
    <interactant intactId="EBI-297353">
        <id>P00533</id>
    </interactant>
    <interactant intactId="EBI-347088">
        <id>P63104</id>
        <label>YWHAZ</label>
    </interactant>
    <organismsDiffer>false</organismsDiffer>
    <experiments>6</experiments>
</comment>
<comment type="interaction">
    <interactant intactId="EBI-297353">
        <id>P00533</id>
    </interactant>
    <interactant intactId="EBI-1211276">
        <id>P43403</id>
        <label>ZAP70</label>
    </interactant>
    <organismsDiffer>false</organismsDiffer>
    <experiments>3</experiments>
</comment>
<comment type="interaction">
    <interactant intactId="EBI-297353">
        <id>P00533</id>
    </interactant>
    <interactant intactId="EBI-9356749">
        <id>Q53FC7</id>
    </interactant>
    <organismsDiffer>false</organismsDiffer>
    <experiments>3</experiments>
</comment>
<comment type="interaction">
    <interactant intactId="EBI-297353">
        <id>P00533</id>
    </interactant>
    <interactant intactId="EBI-9356686">
        <id>Q96BE0</id>
    </interactant>
    <organismsDiffer>false</organismsDiffer>
    <experiments>2</experiments>
</comment>
<comment type="interaction">
    <interactant intactId="EBI-297353">
        <id>P00533</id>
    </interactant>
    <interactant intactId="EBI-397530">
        <id>P62161</id>
        <label>Calm3</label>
    </interactant>
    <organismsDiffer>true</organismsDiffer>
    <experiments>6</experiments>
</comment>
<comment type="interaction">
    <interactant intactId="EBI-297353">
        <id>P00533</id>
    </interactant>
    <interactant intactId="EBI-640919">
        <id>P22682</id>
        <label>Cbl</label>
    </interactant>
    <organismsDiffer>true</organismsDiffer>
    <experiments>2</experiments>
</comment>
<comment type="interaction">
    <interactant intactId="EBI-297353">
        <id>P00533</id>
    </interactant>
    <interactant intactId="EBI-22085551">
        <id>Q9QZC5</id>
        <label>Grb7</label>
    </interactant>
    <organismsDiffer>true</organismsDiffer>
    <experiments>7</experiments>
</comment>
<comment type="interaction">
    <interactant intactId="EBI-297353">
        <id>P00533</id>
    </interactant>
    <interactant intactId="EBI-2272005">
        <id>P97313</id>
        <label>Prkdc</label>
    </interactant>
    <organismsDiffer>true</organismsDiffer>
    <experiments>4</experiments>
</comment>
<comment type="interaction">
    <interactant intactId="EBI-297353">
        <id>P00533</id>
    </interactant>
    <interactant intactId="EBI-916819">
        <id>P20417</id>
        <label>Ptpn1</label>
    </interactant>
    <organismsDiffer>true</organismsDiffer>
    <experiments>11</experiments>
</comment>
<comment type="interaction">
    <interactant intactId="EBI-297353">
        <id>P00533</id>
    </interactant>
    <interactant intactId="EBI-3506572">
        <id>Q80U62</id>
        <label>Rubcn</label>
    </interactant>
    <organismsDiffer>true</organismsDiffer>
    <experiments>2</experiments>
</comment>
<comment type="interaction">
    <interactant intactId="EBI-297353">
        <id>P00533</id>
    </interactant>
    <interactant intactId="EBI-25474821">
        <id>P0DTC2</id>
        <label>S</label>
    </interactant>
    <organismsDiffer>true</organismsDiffer>
    <experiments>4</experiments>
</comment>
<comment type="interaction">
    <interactant intactId="EBI-297353">
        <id>P00533</id>
    </interactant>
    <interactant intactId="EBI-2650739">
        <id>Q8K424</id>
        <label>Trpv3</label>
    </interactant>
    <organismsDiffer>true</organismsDiffer>
    <experiments>2</experiments>
</comment>
<comment type="subcellular location">
    <subcellularLocation>
        <location evidence="35 52 65 74 75 80">Cell membrane</location>
        <topology evidence="74">Single-pass type I membrane protein</topology>
    </subcellularLocation>
    <subcellularLocation>
        <location evidence="74">Endoplasmic reticulum membrane</location>
        <topology>Single-pass type I membrane protein</topology>
    </subcellularLocation>
    <subcellularLocation>
        <location>Golgi apparatus membrane</location>
        <topology>Single-pass type I membrane protein</topology>
    </subcellularLocation>
    <subcellularLocation>
        <location>Nucleus membrane</location>
        <topology>Single-pass type I membrane protein</topology>
    </subcellularLocation>
    <subcellularLocation>
        <location evidence="35 74">Endosome</location>
    </subcellularLocation>
    <subcellularLocation>
        <location>Endosome membrane</location>
    </subcellularLocation>
    <subcellularLocation>
        <location evidence="34 40 54 55">Nucleus</location>
    </subcellularLocation>
    <text evidence="35 40 55 74 75">In response to EGF, translocated from the cell membrane to the nucleus via Golgi and ER (PubMed:17909029, PubMed:20674546). Endocytosed upon activation by ligand (PubMed:17182860, PubMed:17909029, PubMed:27153536, PubMed:2790960). Colocalized with GPER1 in the nucleus of estrogen agonist-induced cancer-associated fibroblasts (CAF) (PubMed:20551055).</text>
</comment>
<comment type="subcellular location">
    <molecule>Isoform 2</molecule>
    <subcellularLocation>
        <location>Secreted</location>
    </subcellularLocation>
</comment>
<comment type="alternative products">
    <event type="alternative splicing"/>
    <isoform>
        <id>P00533-1</id>
        <name>1</name>
        <name>p170</name>
        <sequence type="displayed"/>
    </isoform>
    <isoform>
        <id>P00533-2</id>
        <name>2</name>
        <name>p60</name>
        <name>Truncated</name>
        <name>TEGFR</name>
        <sequence type="described" ref="VSP_002887 VSP_002888"/>
    </isoform>
    <isoform>
        <id>P00533-3</id>
        <name>3</name>
        <name>p110</name>
        <sequence type="described" ref="VSP_002889 VSP_002890"/>
    </isoform>
    <isoform>
        <id>P00533-4</id>
        <name>4</name>
        <sequence type="described" ref="VSP_002891 VSP_002892"/>
    </isoform>
</comment>
<comment type="tissue specificity">
    <text evidence="39">Ubiquitously expressed. Isoform 2 is also expressed in ovarian cancers.</text>
</comment>
<comment type="PTM">
    <text evidence="8 18 27 48 51 52 57 71 74 78">Phosphorylated on Tyr residues in response to EGF (PubMed:20462955, PubMed:27153536). Phosphorylation at Ser-695 is partial and occurs only if Thr-693 is phosphorylated. Phosphorylation at Thr-678 and Thr-693 by PRKD1 inhibits EGF-induced MAPK8/JNK1 activation. Dephosphorylation by PTPRJ prevents endocytosis and stabilizes the receptor at the plasma membrane. Autophosphorylation at Tyr-1197 is stimulated by methylation at Arg-1199 and enhances interaction with PTPN6. Autophosphorylation at Tyr-1092 and/or Tyr-1110 recruits STAT3. Dephosphorylated by PTPN1 and PTPN2.</text>
</comment>
<comment type="PTM">
    <text evidence="1 32 61 62 74 79">Monoubiquitinated and polyubiquitinated upon EGF stimulation; which does not affect tyrosine kinase activity or signaling capacity but may play a role in lysosomal targeting (PubMed:27153536). Polyubiquitin linkage is mainly through 'Lys-63', but linkage through 'Lys-48', 'Lys-11' and 'Lys-29' also occurs. Deubiquitination by OTUD7B prevents degradation. Ubiquitinated by RNF115 and RNF126 (By similarity). Ubiquitinated by ZNRF1 or CBL at different lysines in response to EGF stimulation; leading to recruitment of the ESCRT machinery and subsequent degradation in the lysosomes (PubMed:33996800). Deubiquitinated by UCHL1 leading to the inhibition of its degradation (By similarity).</text>
</comment>
<comment type="PTM">
    <text evidence="74">Palmitoylated on Cys residues by ZDHHC20. Palmitoylation inhibits internalization after ligand binding, and increases the persistence of tyrosine-phosphorylated EGFR at the cell membrane. Palmitoylation increases the amplitude and duration of EGFR signaling.</text>
</comment>
<comment type="PTM">
    <text evidence="48 51 57">Methylated. Methylation at Arg-1199 by PRMT5 stimulates phosphorylation at Tyr-1197.</text>
</comment>
<comment type="disease" evidence="19 31 33">
    <disease id="DI-02205">
        <name>Lung cancer</name>
        <acronym>LNCR</acronym>
        <description>A common malignancy affecting tissues of the lung. The most common form of lung cancer is non-small cell lung cancer (NSCLC) that can be divided into 3 major histologic subtypes: squamous cell carcinoma, adenocarcinoma, and large cell lung cancer. NSCLC is often diagnosed at an advanced stage and has a poor prognosis.</description>
        <dbReference type="MIM" id="211980"/>
    </disease>
    <text>The gene represented in this entry is involved in disease pathogenesis.</text>
</comment>
<comment type="disease" evidence="68">
    <disease id="DI-04271">
        <name>Neonatal nephrocutaneous inflammatory syndrome</name>
        <acronym>NNCIS</acronym>
        <description>An autosomal recessive disorder characterized by intrauterine growth retardation, premature birth, fragile skin, recurrent skin infections and sepsis, failure to thrive, nephrocalcinosis, and nephromegaly with tubular dysfunction. Some patients have chronic diarrhea, and necrotizing enterocolitis.</description>
        <dbReference type="MIM" id="616069"/>
    </disease>
    <text>The disease is caused by variants affecting the gene represented in this entry.</text>
</comment>
<comment type="similarity">
    <text evidence="3">Belongs to the protein kinase superfamily. Tyr protein kinase family. EGF receptor subfamily.</text>
</comment>
<comment type="online information" name="Wikipedia">
    <link uri="https://en.wikipedia.org/wiki/Epidermal_growth_factor_receptor"/>
    <text>EGFR entry</text>
</comment>
<organism>
    <name type="scientific">Homo sapiens</name>
    <name type="common">Human</name>
    <dbReference type="NCBI Taxonomy" id="9606"/>
    <lineage>
        <taxon>Eukaryota</taxon>
        <taxon>Metazoa</taxon>
        <taxon>Chordata</taxon>
        <taxon>Craniata</taxon>
        <taxon>Vertebrata</taxon>
        <taxon>Euteleostomi</taxon>
        <taxon>Mammalia</taxon>
        <taxon>Eutheria</taxon>
        <taxon>Euarchontoglires</taxon>
        <taxon>Primates</taxon>
        <taxon>Haplorrhini</taxon>
        <taxon>Catarrhini</taxon>
        <taxon>Hominidae</taxon>
        <taxon>Homo</taxon>
    </lineage>
</organism>
<dbReference type="EC" id="2.7.10.1"/>
<dbReference type="EMBL" id="X00588">
    <property type="protein sequence ID" value="CAA25240.1"/>
    <property type="molecule type" value="mRNA"/>
</dbReference>
<dbReference type="EMBL" id="U95089">
    <property type="protein sequence ID" value="AAB53063.1"/>
    <property type="molecule type" value="mRNA"/>
</dbReference>
<dbReference type="EMBL" id="U48722">
    <property type="protein sequence ID" value="AAC50802.1"/>
    <property type="molecule type" value="mRNA"/>
</dbReference>
<dbReference type="EMBL" id="U48723">
    <property type="protein sequence ID" value="AAC50804.1"/>
    <property type="molecule type" value="Genomic_DNA"/>
</dbReference>
<dbReference type="EMBL" id="U48724">
    <property type="protein sequence ID" value="AAC50796.1"/>
    <property type="molecule type" value="Genomic_DNA"/>
</dbReference>
<dbReference type="EMBL" id="U48725">
    <property type="protein sequence ID" value="AAC50797.1"/>
    <property type="molecule type" value="Genomic_DNA"/>
</dbReference>
<dbReference type="EMBL" id="U48726">
    <property type="protein sequence ID" value="AAC50798.1"/>
    <property type="molecule type" value="Genomic_DNA"/>
</dbReference>
<dbReference type="EMBL" id="U48727">
    <property type="protein sequence ID" value="AAC50799.1"/>
    <property type="molecule type" value="Genomic_DNA"/>
</dbReference>
<dbReference type="EMBL" id="U48728">
    <property type="protein sequence ID" value="AAC50800.1"/>
    <property type="molecule type" value="Genomic_DNA"/>
</dbReference>
<dbReference type="EMBL" id="U48729">
    <property type="protein sequence ID" value="AAC50801.1"/>
    <property type="molecule type" value="Genomic_DNA"/>
</dbReference>
<dbReference type="EMBL" id="AF288738">
    <property type="protein sequence ID" value="AAG35786.1"/>
    <property type="molecule type" value="Genomic_DNA"/>
</dbReference>
<dbReference type="EMBL" id="AF288738">
    <property type="protein sequence ID" value="AAG35787.1"/>
    <property type="molecule type" value="Genomic_DNA"/>
</dbReference>
<dbReference type="EMBL" id="AF288738">
    <property type="protein sequence ID" value="AAG35788.1"/>
    <property type="molecule type" value="Genomic_DNA"/>
</dbReference>
<dbReference type="EMBL" id="AF288738">
    <property type="protein sequence ID" value="AAG35789.1"/>
    <property type="molecule type" value="Genomic_DNA"/>
</dbReference>
<dbReference type="EMBL" id="AF288738">
    <property type="protein sequence ID" value="AAG35790.1"/>
    <property type="molecule type" value="Genomic_DNA"/>
</dbReference>
<dbReference type="EMBL" id="AY698024">
    <property type="protein sequence ID" value="AAT97979.1"/>
    <property type="molecule type" value="mRNA"/>
</dbReference>
<dbReference type="EMBL" id="AY588246">
    <property type="protein sequence ID" value="AAS83109.1"/>
    <property type="molecule type" value="Genomic_DNA"/>
</dbReference>
<dbReference type="EMBL" id="AF277897">
    <property type="protein sequence ID" value="AAK01080.1"/>
    <property type="molecule type" value="mRNA"/>
</dbReference>
<dbReference type="EMBL" id="AF125253">
    <property type="protein sequence ID" value="AAG43240.1"/>
    <property type="molecule type" value="mRNA"/>
</dbReference>
<dbReference type="EMBL" id="AF125539">
    <property type="protein sequence ID" value="AAG43243.1"/>
    <property type="molecule type" value="Genomic_DNA"/>
</dbReference>
<dbReference type="EMBL" id="AF125538">
    <property type="protein sequence ID" value="AAG43243.1"/>
    <property type="status" value="JOINED"/>
    <property type="molecule type" value="Genomic_DNA"/>
</dbReference>
<dbReference type="EMBL" id="X06370">
    <property type="protein sequence ID" value="CAA29668.1"/>
    <property type="molecule type" value="Genomic_DNA"/>
</dbReference>
<dbReference type="EMBL" id="X00663">
    <property type="protein sequence ID" value="CAA25282.1"/>
    <property type="molecule type" value="mRNA"/>
</dbReference>
<dbReference type="EMBL" id="M38425">
    <property type="protein sequence ID" value="AAA63171.1"/>
    <property type="molecule type" value="Genomic_DNA"/>
</dbReference>
<dbReference type="EMBL" id="M11234">
    <property type="protein sequence ID" value="AAA52370.1"/>
    <property type="molecule type" value="Genomic_DNA"/>
</dbReference>
<dbReference type="CCDS" id="CCDS47587.1">
    <molecule id="P00533-2"/>
</dbReference>
<dbReference type="CCDS" id="CCDS5514.1">
    <molecule id="P00533-1"/>
</dbReference>
<dbReference type="CCDS" id="CCDS5515.1">
    <molecule id="P00533-3"/>
</dbReference>
<dbReference type="CCDS" id="CCDS5516.1">
    <molecule id="P00533-4"/>
</dbReference>
<dbReference type="PIR" id="A00641">
    <property type="entry name" value="GQHUE"/>
</dbReference>
<dbReference type="RefSeq" id="NP_005219.2">
    <molecule id="P00533-1"/>
    <property type="nucleotide sequence ID" value="NM_005228.4"/>
</dbReference>
<dbReference type="RefSeq" id="NP_958439.1">
    <molecule id="P00533-4"/>
    <property type="nucleotide sequence ID" value="NM_201282.2"/>
</dbReference>
<dbReference type="RefSeq" id="NP_958440.1">
    <molecule id="P00533-2"/>
    <property type="nucleotide sequence ID" value="NM_201283.2"/>
</dbReference>
<dbReference type="RefSeq" id="NP_958441.1">
    <molecule id="P00533-3"/>
    <property type="nucleotide sequence ID" value="NM_201284.2"/>
</dbReference>
<dbReference type="PDB" id="1IVO">
    <property type="method" value="X-ray"/>
    <property type="resolution" value="3.30 A"/>
    <property type="chains" value="A/B=25-646"/>
</dbReference>
<dbReference type="PDB" id="1M14">
    <property type="method" value="X-ray"/>
    <property type="resolution" value="2.60 A"/>
    <property type="chains" value="A=695-1022"/>
</dbReference>
<dbReference type="PDB" id="1M17">
    <property type="method" value="X-ray"/>
    <property type="resolution" value="2.60 A"/>
    <property type="chains" value="A=695-1022"/>
</dbReference>
<dbReference type="PDB" id="1MOX">
    <property type="method" value="X-ray"/>
    <property type="resolution" value="2.50 A"/>
    <property type="chains" value="A/B=25-525"/>
</dbReference>
<dbReference type="PDB" id="1NQL">
    <property type="method" value="X-ray"/>
    <property type="resolution" value="2.80 A"/>
    <property type="chains" value="A=25-642"/>
</dbReference>
<dbReference type="PDB" id="1XKK">
    <property type="method" value="X-ray"/>
    <property type="resolution" value="2.40 A"/>
    <property type="chains" value="A=695-1022"/>
</dbReference>
<dbReference type="PDB" id="1YY9">
    <property type="method" value="X-ray"/>
    <property type="resolution" value="2.60 A"/>
    <property type="chains" value="A=25-642"/>
</dbReference>
<dbReference type="PDB" id="1Z9I">
    <property type="method" value="NMR"/>
    <property type="chains" value="A=669-721"/>
</dbReference>
<dbReference type="PDB" id="2EB2">
    <property type="method" value="X-ray"/>
    <property type="resolution" value="2.50 A"/>
    <property type="chains" value="A=695-1022"/>
</dbReference>
<dbReference type="PDB" id="2EB3">
    <property type="method" value="X-ray"/>
    <property type="resolution" value="2.84 A"/>
    <property type="chains" value="A=695-1022"/>
</dbReference>
<dbReference type="PDB" id="2GS2">
    <property type="method" value="X-ray"/>
    <property type="resolution" value="2.80 A"/>
    <property type="chains" value="A=696-1022"/>
</dbReference>
<dbReference type="PDB" id="2GS6">
    <property type="method" value="X-ray"/>
    <property type="resolution" value="2.60 A"/>
    <property type="chains" value="A=696-1022"/>
</dbReference>
<dbReference type="PDB" id="2GS7">
    <property type="method" value="X-ray"/>
    <property type="resolution" value="2.60 A"/>
    <property type="chains" value="A/B=696-1022"/>
</dbReference>
<dbReference type="PDB" id="2ITN">
    <property type="method" value="X-ray"/>
    <property type="resolution" value="2.47 A"/>
    <property type="chains" value="A=696-1022"/>
</dbReference>
<dbReference type="PDB" id="2ITO">
    <property type="method" value="X-ray"/>
    <property type="resolution" value="3.25 A"/>
    <property type="chains" value="A=696-1022"/>
</dbReference>
<dbReference type="PDB" id="2ITP">
    <property type="method" value="X-ray"/>
    <property type="resolution" value="2.74 A"/>
    <property type="chains" value="A=696-1022"/>
</dbReference>
<dbReference type="PDB" id="2ITQ">
    <property type="method" value="X-ray"/>
    <property type="resolution" value="2.68 A"/>
    <property type="chains" value="A=696-1022"/>
</dbReference>
<dbReference type="PDB" id="2ITT">
    <property type="method" value="X-ray"/>
    <property type="resolution" value="2.73 A"/>
    <property type="chains" value="A=696-1022"/>
</dbReference>
<dbReference type="PDB" id="2ITU">
    <property type="method" value="X-ray"/>
    <property type="resolution" value="2.80 A"/>
    <property type="chains" value="A=696-1022"/>
</dbReference>
<dbReference type="PDB" id="2ITV">
    <property type="method" value="X-ray"/>
    <property type="resolution" value="2.47 A"/>
    <property type="chains" value="A=696-1022"/>
</dbReference>
<dbReference type="PDB" id="2ITW">
    <property type="method" value="X-ray"/>
    <property type="resolution" value="2.88 A"/>
    <property type="chains" value="A=696-1022"/>
</dbReference>
<dbReference type="PDB" id="2ITX">
    <property type="method" value="X-ray"/>
    <property type="resolution" value="2.98 A"/>
    <property type="chains" value="A=696-1022"/>
</dbReference>
<dbReference type="PDB" id="2ITY">
    <property type="method" value="X-ray"/>
    <property type="resolution" value="3.42 A"/>
    <property type="chains" value="A=696-1022"/>
</dbReference>
<dbReference type="PDB" id="2ITZ">
    <property type="method" value="X-ray"/>
    <property type="resolution" value="2.72 A"/>
    <property type="chains" value="A=696-1022"/>
</dbReference>
<dbReference type="PDB" id="2J5E">
    <property type="method" value="X-ray"/>
    <property type="resolution" value="3.10 A"/>
    <property type="chains" value="A=696-1022"/>
</dbReference>
<dbReference type="PDB" id="2J5F">
    <property type="method" value="X-ray"/>
    <property type="resolution" value="3.00 A"/>
    <property type="chains" value="A=696-1022"/>
</dbReference>
<dbReference type="PDB" id="2J6M">
    <property type="method" value="X-ray"/>
    <property type="resolution" value="3.10 A"/>
    <property type="chains" value="A=696-1022"/>
</dbReference>
<dbReference type="PDB" id="2JIT">
    <property type="method" value="X-ray"/>
    <property type="resolution" value="3.10 A"/>
    <property type="chains" value="A/B=696-1022"/>
</dbReference>
<dbReference type="PDB" id="2JIU">
    <property type="method" value="X-ray"/>
    <property type="resolution" value="3.05 A"/>
    <property type="chains" value="A/B=695-1022"/>
</dbReference>
<dbReference type="PDB" id="2JIV">
    <property type="method" value="X-ray"/>
    <property type="resolution" value="3.50 A"/>
    <property type="chains" value="A/B=695-1022"/>
</dbReference>
<dbReference type="PDB" id="2KS1">
    <property type="method" value="NMR"/>
    <property type="chains" value="B=634-677"/>
</dbReference>
<dbReference type="PDB" id="2M0B">
    <property type="method" value="NMR"/>
    <property type="chains" value="A/B=634-677"/>
</dbReference>
<dbReference type="PDB" id="2M20">
    <property type="method" value="NMR"/>
    <property type="chains" value="A/B=642-697"/>
</dbReference>
<dbReference type="PDB" id="2N5S">
    <property type="method" value="NMR"/>
    <property type="chains" value="A=642-690"/>
</dbReference>
<dbReference type="PDB" id="2RF9">
    <property type="method" value="X-ray"/>
    <property type="resolution" value="3.50 A"/>
    <property type="chains" value="A/B=696-1022"/>
</dbReference>
<dbReference type="PDB" id="2RFD">
    <property type="method" value="X-ray"/>
    <property type="resolution" value="3.60 A"/>
    <property type="chains" value="A/B=702-1022"/>
</dbReference>
<dbReference type="PDB" id="2RFE">
    <property type="method" value="X-ray"/>
    <property type="resolution" value="2.90 A"/>
    <property type="chains" value="A/B/C/D=702-1022"/>
</dbReference>
<dbReference type="PDB" id="2RGP">
    <property type="method" value="X-ray"/>
    <property type="resolution" value="2.00 A"/>
    <property type="chains" value="A=702-1016"/>
</dbReference>
<dbReference type="PDB" id="3B2U">
    <property type="method" value="X-ray"/>
    <property type="resolution" value="2.58 A"/>
    <property type="chains" value="A/B/E/I/M/P/S/V=335-538"/>
</dbReference>
<dbReference type="PDB" id="3B2V">
    <property type="method" value="X-ray"/>
    <property type="resolution" value="3.30 A"/>
    <property type="chains" value="A=25-642"/>
</dbReference>
<dbReference type="PDB" id="3BEL">
    <property type="method" value="X-ray"/>
    <property type="resolution" value="2.30 A"/>
    <property type="chains" value="A=702-1016"/>
</dbReference>
<dbReference type="PDB" id="3BUO">
    <property type="method" value="X-ray"/>
    <property type="resolution" value="2.60 A"/>
    <property type="chains" value="A/C=1063-1075"/>
</dbReference>
<dbReference type="PDB" id="3C09">
    <property type="method" value="X-ray"/>
    <property type="resolution" value="3.20 A"/>
    <property type="chains" value="A/D=336-538"/>
</dbReference>
<dbReference type="PDB" id="3G5V">
    <property type="method" value="X-ray"/>
    <property type="resolution" value="2.00 A"/>
    <property type="chains" value="C=311-326"/>
</dbReference>
<dbReference type="PDB" id="3G5Y">
    <property type="method" value="X-ray"/>
    <property type="resolution" value="1.59 A"/>
    <property type="chains" value="E=311-326"/>
</dbReference>
<dbReference type="PDB" id="3GOP">
    <property type="method" value="X-ray"/>
    <property type="resolution" value="2.80 A"/>
    <property type="chains" value="A=669-1022"/>
</dbReference>
<dbReference type="PDB" id="3GT8">
    <property type="method" value="X-ray"/>
    <property type="resolution" value="2.96 A"/>
    <property type="chains" value="A/B/C/D=696-1022"/>
</dbReference>
<dbReference type="PDB" id="3IKA">
    <property type="method" value="X-ray"/>
    <property type="resolution" value="2.90 A"/>
    <property type="chains" value="A/B=694-1022"/>
</dbReference>
<dbReference type="PDB" id="3LZB">
    <property type="method" value="X-ray"/>
    <property type="resolution" value="2.70 A"/>
    <property type="chains" value="A/B/C/D/E/F/G/H=696-983"/>
</dbReference>
<dbReference type="PDB" id="3NJP">
    <property type="method" value="X-ray"/>
    <property type="resolution" value="3.30 A"/>
    <property type="chains" value="A/B=25-638"/>
</dbReference>
<dbReference type="PDB" id="3OB2">
    <property type="method" value="X-ray"/>
    <property type="resolution" value="2.10 A"/>
    <property type="chains" value="A=1063-1074"/>
</dbReference>
<dbReference type="PDB" id="3OP0">
    <property type="method" value="X-ray"/>
    <property type="resolution" value="2.52 A"/>
    <property type="chains" value="C/D=1066-1076"/>
</dbReference>
<dbReference type="PDB" id="3P0Y">
    <property type="method" value="X-ray"/>
    <property type="resolution" value="1.80 A"/>
    <property type="chains" value="A=334-538"/>
</dbReference>
<dbReference type="PDB" id="3PFV">
    <property type="method" value="X-ray"/>
    <property type="resolution" value="2.27 A"/>
    <property type="chains" value="C/D=1066-1076"/>
</dbReference>
<dbReference type="PDB" id="3POZ">
    <property type="method" value="X-ray"/>
    <property type="resolution" value="1.50 A"/>
    <property type="chains" value="A=696-1022"/>
</dbReference>
<dbReference type="PDB" id="3QWQ">
    <property type="method" value="X-ray"/>
    <property type="resolution" value="2.75 A"/>
    <property type="chains" value="A=1-642"/>
</dbReference>
<dbReference type="PDB" id="3UG1">
    <property type="method" value="X-ray"/>
    <property type="resolution" value="2.75 A"/>
    <property type="chains" value="A=695-1022"/>
</dbReference>
<dbReference type="PDB" id="3UG2">
    <property type="method" value="X-ray"/>
    <property type="resolution" value="2.50 A"/>
    <property type="chains" value="A=695-1022"/>
</dbReference>
<dbReference type="PDB" id="3VJN">
    <property type="method" value="X-ray"/>
    <property type="resolution" value="2.34 A"/>
    <property type="chains" value="A=695-1022"/>
</dbReference>
<dbReference type="PDB" id="3VJO">
    <property type="method" value="X-ray"/>
    <property type="resolution" value="2.64 A"/>
    <property type="chains" value="A=695-1022"/>
</dbReference>
<dbReference type="PDB" id="3VRP">
    <property type="method" value="X-ray"/>
    <property type="resolution" value="1.52 A"/>
    <property type="chains" value="B=1062-1074"/>
</dbReference>
<dbReference type="PDB" id="3VRR">
    <property type="method" value="X-ray"/>
    <property type="resolution" value="2.00 A"/>
    <property type="chains" value="C=1062-1074"/>
</dbReference>
<dbReference type="PDB" id="3W2O">
    <property type="method" value="X-ray"/>
    <property type="resolution" value="2.35 A"/>
    <property type="chains" value="A=698-1022"/>
</dbReference>
<dbReference type="PDB" id="3W2P">
    <property type="method" value="X-ray"/>
    <property type="resolution" value="2.05 A"/>
    <property type="chains" value="A=698-1022"/>
</dbReference>
<dbReference type="PDB" id="3W2Q">
    <property type="method" value="X-ray"/>
    <property type="resolution" value="2.20 A"/>
    <property type="chains" value="A=698-1022"/>
</dbReference>
<dbReference type="PDB" id="3W2R">
    <property type="method" value="X-ray"/>
    <property type="resolution" value="2.05 A"/>
    <property type="chains" value="A=698-1022"/>
</dbReference>
<dbReference type="PDB" id="3W2S">
    <property type="method" value="X-ray"/>
    <property type="resolution" value="1.90 A"/>
    <property type="chains" value="A=696-1022"/>
</dbReference>
<dbReference type="PDB" id="3W32">
    <property type="method" value="X-ray"/>
    <property type="resolution" value="1.80 A"/>
    <property type="chains" value="A=696-1022"/>
</dbReference>
<dbReference type="PDB" id="3W33">
    <property type="method" value="X-ray"/>
    <property type="resolution" value="1.70 A"/>
    <property type="chains" value="A=696-1022"/>
</dbReference>
<dbReference type="PDB" id="4G5J">
    <property type="method" value="X-ray"/>
    <property type="resolution" value="2.80 A"/>
    <property type="chains" value="A=696-1022"/>
</dbReference>
<dbReference type="PDB" id="4G5P">
    <property type="method" value="X-ray"/>
    <property type="resolution" value="3.17 A"/>
    <property type="chains" value="A/B=696-1022"/>
</dbReference>
<dbReference type="PDB" id="4HJO">
    <property type="method" value="X-ray"/>
    <property type="resolution" value="2.75 A"/>
    <property type="chains" value="A=696-1022"/>
</dbReference>
<dbReference type="PDB" id="4I1Z">
    <property type="method" value="X-ray"/>
    <property type="resolution" value="3.00 A"/>
    <property type="chains" value="A=695-1022"/>
</dbReference>
<dbReference type="PDB" id="4I20">
    <property type="method" value="X-ray"/>
    <property type="resolution" value="3.34 A"/>
    <property type="chains" value="A=695-1022"/>
</dbReference>
<dbReference type="PDB" id="4I21">
    <property type="method" value="X-ray"/>
    <property type="resolution" value="3.37 A"/>
    <property type="chains" value="A/B=695-1022"/>
</dbReference>
<dbReference type="PDB" id="4I22">
    <property type="method" value="X-ray"/>
    <property type="resolution" value="1.71 A"/>
    <property type="chains" value="A=695-1022"/>
</dbReference>
<dbReference type="PDB" id="4I23">
    <property type="method" value="X-ray"/>
    <property type="resolution" value="2.80 A"/>
    <property type="chains" value="A=695-1022"/>
</dbReference>
<dbReference type="PDB" id="4I24">
    <property type="method" value="X-ray"/>
    <property type="resolution" value="1.80 A"/>
    <property type="chains" value="A/B=695-1022"/>
</dbReference>
<dbReference type="PDB" id="4JQ7">
    <property type="method" value="X-ray"/>
    <property type="resolution" value="2.73 A"/>
    <property type="chains" value="A=696-1021"/>
</dbReference>
<dbReference type="PDB" id="4JQ8">
    <property type="method" value="X-ray"/>
    <property type="resolution" value="2.83 A"/>
    <property type="chains" value="A=696-1021"/>
</dbReference>
<dbReference type="PDB" id="4JR3">
    <property type="method" value="X-ray"/>
    <property type="resolution" value="2.70 A"/>
    <property type="chains" value="A=696-1021"/>
</dbReference>
<dbReference type="PDB" id="4JRV">
    <property type="method" value="X-ray"/>
    <property type="resolution" value="2.80 A"/>
    <property type="chains" value="A=696-1021"/>
</dbReference>
<dbReference type="PDB" id="4KRL">
    <property type="method" value="X-ray"/>
    <property type="resolution" value="2.85 A"/>
    <property type="chains" value="A=335-538"/>
</dbReference>
<dbReference type="PDB" id="4KRM">
    <property type="method" value="X-ray"/>
    <property type="resolution" value="2.66 A"/>
    <property type="chains" value="A/C/E/G/I/K=335-538"/>
</dbReference>
<dbReference type="PDB" id="4KRO">
    <property type="method" value="X-ray"/>
    <property type="resolution" value="3.05 A"/>
    <property type="chains" value="A=25-642"/>
</dbReference>
<dbReference type="PDB" id="4KRP">
    <property type="method" value="X-ray"/>
    <property type="resolution" value="2.82 A"/>
    <property type="chains" value="A=25-642"/>
</dbReference>
<dbReference type="PDB" id="4LI5">
    <property type="method" value="X-ray"/>
    <property type="resolution" value="2.64 A"/>
    <property type="chains" value="A=696-1020"/>
</dbReference>
<dbReference type="PDB" id="4LL0">
    <property type="method" value="X-ray"/>
    <property type="resolution" value="4.00 A"/>
    <property type="chains" value="A/B=694-1022"/>
</dbReference>
<dbReference type="PDB" id="4LQM">
    <property type="method" value="X-ray"/>
    <property type="resolution" value="2.50 A"/>
    <property type="chains" value="A=694-1022"/>
</dbReference>
<dbReference type="PDB" id="4LRM">
    <property type="method" value="X-ray"/>
    <property type="resolution" value="3.53 A"/>
    <property type="chains" value="A/B/C/D/E=694-1022"/>
</dbReference>
<dbReference type="PDB" id="4R3P">
    <property type="method" value="X-ray"/>
    <property type="resolution" value="2.90 A"/>
    <property type="chains" value="A=696-1018"/>
</dbReference>
<dbReference type="PDB" id="4R3R">
    <property type="method" value="X-ray"/>
    <property type="resolution" value="3.25 A"/>
    <property type="chains" value="A=696-1018"/>
</dbReference>
<dbReference type="PDB" id="4R5S">
    <property type="method" value="X-ray"/>
    <property type="resolution" value="3.00 A"/>
    <property type="chains" value="A=696-1022"/>
</dbReference>
<dbReference type="PDB" id="4RIW">
    <property type="method" value="X-ray"/>
    <property type="resolution" value="3.10 A"/>
    <property type="chains" value="B/D=682-1022"/>
</dbReference>
<dbReference type="PDB" id="4RIX">
    <property type="method" value="X-ray"/>
    <property type="resolution" value="3.10 A"/>
    <property type="chains" value="B/D=682-1022"/>
</dbReference>
<dbReference type="PDB" id="4RIY">
    <property type="method" value="X-ray"/>
    <property type="resolution" value="2.98 A"/>
    <property type="chains" value="B/D=682-1022"/>
</dbReference>
<dbReference type="PDB" id="4RJ4">
    <property type="method" value="X-ray"/>
    <property type="resolution" value="2.78 A"/>
    <property type="chains" value="A=695-1022"/>
</dbReference>
<dbReference type="PDB" id="4RJ5">
    <property type="method" value="X-ray"/>
    <property type="resolution" value="3.10 A"/>
    <property type="chains" value="A=695-1022"/>
</dbReference>
<dbReference type="PDB" id="4RJ6">
    <property type="method" value="X-ray"/>
    <property type="resolution" value="2.70 A"/>
    <property type="chains" value="A=695-1022"/>
</dbReference>
<dbReference type="PDB" id="4RJ7">
    <property type="method" value="X-ray"/>
    <property type="resolution" value="2.55 A"/>
    <property type="chains" value="A=695-1022"/>
</dbReference>
<dbReference type="PDB" id="4RJ8">
    <property type="method" value="X-ray"/>
    <property type="resolution" value="2.50 A"/>
    <property type="chains" value="A=695-1022"/>
</dbReference>
<dbReference type="PDB" id="4TKS">
    <property type="method" value="X-ray"/>
    <property type="resolution" value="3.20 A"/>
    <property type="chains" value="A=695-1022"/>
</dbReference>
<dbReference type="PDB" id="4UIP">
    <property type="method" value="X-ray"/>
    <property type="resolution" value="2.95 A"/>
    <property type="chains" value="A=26-637"/>
</dbReference>
<dbReference type="PDB" id="4UV7">
    <property type="method" value="X-ray"/>
    <property type="resolution" value="2.10 A"/>
    <property type="chains" value="A=25-645"/>
</dbReference>
<dbReference type="PDB" id="4WD5">
    <property type="method" value="X-ray"/>
    <property type="resolution" value="3.30 A"/>
    <property type="chains" value="A/B=694-1022"/>
</dbReference>
<dbReference type="PDB" id="4WKQ">
    <property type="method" value="X-ray"/>
    <property type="resolution" value="1.85 A"/>
    <property type="chains" value="A=696-1022"/>
</dbReference>
<dbReference type="PDB" id="4WRG">
    <property type="method" value="X-ray"/>
    <property type="resolution" value="1.90 A"/>
    <property type="chains" value="A=696-1022"/>
</dbReference>
<dbReference type="PDB" id="4ZAU">
    <property type="method" value="X-ray"/>
    <property type="resolution" value="2.80 A"/>
    <property type="chains" value="A=696-1022"/>
</dbReference>
<dbReference type="PDB" id="4ZJV">
    <property type="method" value="X-ray"/>
    <property type="resolution" value="2.70 A"/>
    <property type="chains" value="A/B=695-1022"/>
</dbReference>
<dbReference type="PDB" id="4ZSE">
    <property type="method" value="X-ray"/>
    <property type="resolution" value="1.97 A"/>
    <property type="chains" value="A/B/C/D=695-1022"/>
</dbReference>
<dbReference type="PDB" id="5C8K">
    <property type="method" value="X-ray"/>
    <property type="resolution" value="3.00 A"/>
    <property type="chains" value="A=695-1022"/>
</dbReference>
<dbReference type="PDB" id="5C8M">
    <property type="method" value="X-ray"/>
    <property type="resolution" value="2.90 A"/>
    <property type="chains" value="A=695-1022"/>
</dbReference>
<dbReference type="PDB" id="5C8N">
    <property type="method" value="X-ray"/>
    <property type="resolution" value="2.40 A"/>
    <property type="chains" value="A=695-1022"/>
</dbReference>
<dbReference type="PDB" id="5CAL">
    <property type="method" value="X-ray"/>
    <property type="resolution" value="2.70 A"/>
    <property type="chains" value="A=695-1022"/>
</dbReference>
<dbReference type="PDB" id="5CAN">
    <property type="method" value="X-ray"/>
    <property type="resolution" value="2.80 A"/>
    <property type="chains" value="A=695-1022"/>
</dbReference>
<dbReference type="PDB" id="5CAO">
    <property type="method" value="X-ray"/>
    <property type="resolution" value="2.60 A"/>
    <property type="chains" value="A=695-1022"/>
</dbReference>
<dbReference type="PDB" id="5CAP">
    <property type="method" value="X-ray"/>
    <property type="resolution" value="2.40 A"/>
    <property type="chains" value="A=695-1022"/>
</dbReference>
<dbReference type="PDB" id="5CAQ">
    <property type="method" value="X-ray"/>
    <property type="resolution" value="2.50 A"/>
    <property type="chains" value="A=695-1022"/>
</dbReference>
<dbReference type="PDB" id="5CAS">
    <property type="method" value="X-ray"/>
    <property type="resolution" value="2.10 A"/>
    <property type="chains" value="A=695-1022"/>
</dbReference>
<dbReference type="PDB" id="5CAU">
    <property type="method" value="X-ray"/>
    <property type="resolution" value="2.25 A"/>
    <property type="chains" value="A=695-1022"/>
</dbReference>
<dbReference type="PDB" id="5CAV">
    <property type="method" value="X-ray"/>
    <property type="resolution" value="2.73 A"/>
    <property type="chains" value="A=695-1022"/>
</dbReference>
<dbReference type="PDB" id="5CNN">
    <property type="method" value="X-ray"/>
    <property type="resolution" value="1.90 A"/>
    <property type="chains" value="A/B=696-1042"/>
</dbReference>
<dbReference type="PDB" id="5CNO">
    <property type="method" value="X-ray"/>
    <property type="resolution" value="1.55 A"/>
    <property type="chains" value="A/B/X=696-1022"/>
</dbReference>
<dbReference type="PDB" id="5CZH">
    <property type="method" value="X-ray"/>
    <property type="resolution" value="2.80 A"/>
    <property type="chains" value="A=694-1022"/>
</dbReference>
<dbReference type="PDB" id="5CZI">
    <property type="method" value="X-ray"/>
    <property type="resolution" value="2.60 A"/>
    <property type="chains" value="A=694-1022"/>
</dbReference>
<dbReference type="PDB" id="5D41">
    <property type="method" value="X-ray"/>
    <property type="resolution" value="2.31 A"/>
    <property type="chains" value="A/B=695-1022"/>
</dbReference>
<dbReference type="PDB" id="5EDP">
    <property type="method" value="X-ray"/>
    <property type="resolution" value="2.90 A"/>
    <property type="chains" value="A=695-1022"/>
</dbReference>
<dbReference type="PDB" id="5EDQ">
    <property type="method" value="X-ray"/>
    <property type="resolution" value="2.80 A"/>
    <property type="chains" value="A=695-1022"/>
</dbReference>
<dbReference type="PDB" id="5EDR">
    <property type="method" value="X-ray"/>
    <property type="resolution" value="2.60 A"/>
    <property type="chains" value="A=695-1022"/>
</dbReference>
<dbReference type="PDB" id="5EM5">
    <property type="method" value="X-ray"/>
    <property type="resolution" value="2.65 A"/>
    <property type="chains" value="A=695-1022"/>
</dbReference>
<dbReference type="PDB" id="5EM6">
    <property type="method" value="X-ray"/>
    <property type="resolution" value="2.78 A"/>
    <property type="chains" value="A=695-1022"/>
</dbReference>
<dbReference type="PDB" id="5EM7">
    <property type="method" value="X-ray"/>
    <property type="resolution" value="2.81 A"/>
    <property type="chains" value="A=695-1022"/>
</dbReference>
<dbReference type="PDB" id="5EM8">
    <property type="method" value="X-ray"/>
    <property type="resolution" value="2.80 A"/>
    <property type="chains" value="A=695-1022"/>
</dbReference>
<dbReference type="PDB" id="5FED">
    <property type="method" value="X-ray"/>
    <property type="resolution" value="2.65 A"/>
    <property type="chains" value="A=696-1022"/>
</dbReference>
<dbReference type="PDB" id="5FEE">
    <property type="method" value="X-ray"/>
    <property type="resolution" value="2.70 A"/>
    <property type="chains" value="A=696-1022"/>
</dbReference>
<dbReference type="PDB" id="5FEQ">
    <property type="method" value="X-ray"/>
    <property type="resolution" value="3.40 A"/>
    <property type="chains" value="A=696-1022"/>
</dbReference>
<dbReference type="PDB" id="5GMP">
    <property type="method" value="X-ray"/>
    <property type="resolution" value="2.80 A"/>
    <property type="chains" value="A=696-1022"/>
</dbReference>
<dbReference type="PDB" id="5GNK">
    <property type="method" value="X-ray"/>
    <property type="resolution" value="1.80 A"/>
    <property type="chains" value="A=696-988"/>
</dbReference>
<dbReference type="PDB" id="5GTY">
    <property type="method" value="X-ray"/>
    <property type="resolution" value="3.14 A"/>
    <property type="chains" value="A/B/C/D/E/F/G/H=696-1022"/>
</dbReference>
<dbReference type="PDB" id="5GTZ">
    <property type="method" value="X-ray"/>
    <property type="resolution" value="3.00 A"/>
    <property type="chains" value="A=696-1022"/>
</dbReference>
<dbReference type="PDB" id="5HCX">
    <property type="method" value="X-ray"/>
    <property type="resolution" value="2.60 A"/>
    <property type="chains" value="A=696-1022"/>
</dbReference>
<dbReference type="PDB" id="5HCY">
    <property type="method" value="X-ray"/>
    <property type="resolution" value="2.46 A"/>
    <property type="chains" value="A=696-1022"/>
</dbReference>
<dbReference type="PDB" id="5HCZ">
    <property type="method" value="X-ray"/>
    <property type="resolution" value="2.62 A"/>
    <property type="chains" value="A=696-1022"/>
</dbReference>
<dbReference type="PDB" id="5HG5">
    <property type="method" value="X-ray"/>
    <property type="resolution" value="1.52 A"/>
    <property type="chains" value="A=695-1022"/>
</dbReference>
<dbReference type="PDB" id="5HG7">
    <property type="method" value="X-ray"/>
    <property type="resolution" value="1.85 A"/>
    <property type="chains" value="A=695-1022"/>
</dbReference>
<dbReference type="PDB" id="5HG8">
    <property type="method" value="X-ray"/>
    <property type="resolution" value="1.42 A"/>
    <property type="chains" value="A=695-1022"/>
</dbReference>
<dbReference type="PDB" id="5HG9">
    <property type="method" value="X-ray"/>
    <property type="resolution" value="2.15 A"/>
    <property type="chains" value="A=695-1022"/>
</dbReference>
<dbReference type="PDB" id="5HIB">
    <property type="method" value="X-ray"/>
    <property type="resolution" value="2.85 A"/>
    <property type="chains" value="A=695-1022"/>
</dbReference>
<dbReference type="PDB" id="5HIC">
    <property type="method" value="X-ray"/>
    <property type="resolution" value="2.60 A"/>
    <property type="chains" value="A=695-1022"/>
</dbReference>
<dbReference type="PDB" id="5J9Y">
    <property type="method" value="X-ray"/>
    <property type="resolution" value="2.80 A"/>
    <property type="chains" value="A=697-1019"/>
</dbReference>
<dbReference type="PDB" id="5J9Z">
    <property type="method" value="X-ray"/>
    <property type="resolution" value="2.50 A"/>
    <property type="chains" value="A=696-1020"/>
</dbReference>
<dbReference type="PDB" id="5JEB">
    <property type="method" value="X-ray"/>
    <property type="resolution" value="3.30 A"/>
    <property type="chains" value="A=696-1022"/>
</dbReference>
<dbReference type="PDB" id="5LV6">
    <property type="method" value="NMR"/>
    <property type="chains" value="A/B=634-677"/>
</dbReference>
<dbReference type="PDB" id="5SX4">
    <property type="method" value="X-ray"/>
    <property type="resolution" value="2.80 A"/>
    <property type="chains" value="M/N=335-525"/>
</dbReference>
<dbReference type="PDB" id="5SX5">
    <property type="method" value="X-ray"/>
    <property type="resolution" value="2.50 A"/>
    <property type="chains" value="M/N=335-525"/>
</dbReference>
<dbReference type="PDB" id="5U8L">
    <property type="method" value="X-ray"/>
    <property type="resolution" value="1.60 A"/>
    <property type="chains" value="A=695-1022"/>
</dbReference>
<dbReference type="PDB" id="5UG8">
    <property type="method" value="X-ray"/>
    <property type="resolution" value="1.46 A"/>
    <property type="chains" value="A=695-1022"/>
</dbReference>
<dbReference type="PDB" id="5UG9">
    <property type="method" value="X-ray"/>
    <property type="resolution" value="1.33 A"/>
    <property type="chains" value="A=695-1022"/>
</dbReference>
<dbReference type="PDB" id="5UGA">
    <property type="method" value="X-ray"/>
    <property type="resolution" value="1.82 A"/>
    <property type="chains" value="A=695-1022"/>
</dbReference>
<dbReference type="PDB" id="5UGB">
    <property type="method" value="X-ray"/>
    <property type="resolution" value="2.53 A"/>
    <property type="chains" value="A=695-1022"/>
</dbReference>
<dbReference type="PDB" id="5UGC">
    <property type="method" value="X-ray"/>
    <property type="resolution" value="1.58 A"/>
    <property type="chains" value="A=695-1022"/>
</dbReference>
<dbReference type="PDB" id="5UWD">
    <property type="method" value="X-ray"/>
    <property type="resolution" value="3.06 A"/>
    <property type="chains" value="A=695-1022"/>
</dbReference>
<dbReference type="PDB" id="5WB7">
    <property type="method" value="X-ray"/>
    <property type="resolution" value="2.94 A"/>
    <property type="chains" value="A/B/C/D=25-525"/>
</dbReference>
<dbReference type="PDB" id="5WB8">
    <property type="method" value="X-ray"/>
    <property type="resolution" value="3.00 A"/>
    <property type="chains" value="A/D=25-525"/>
</dbReference>
<dbReference type="PDB" id="5X26">
    <property type="method" value="X-ray"/>
    <property type="resolution" value="2.95 A"/>
    <property type="chains" value="A=696-1022"/>
</dbReference>
<dbReference type="PDB" id="5X27">
    <property type="method" value="X-ray"/>
    <property type="resolution" value="2.95 A"/>
    <property type="chains" value="A=696-1022"/>
</dbReference>
<dbReference type="PDB" id="5X28">
    <property type="method" value="X-ray"/>
    <property type="resolution" value="2.95 A"/>
    <property type="chains" value="A=696-1022"/>
</dbReference>
<dbReference type="PDB" id="5X2A">
    <property type="method" value="X-ray"/>
    <property type="resolution" value="1.85 A"/>
    <property type="chains" value="A/B/C/D=696-1022"/>
</dbReference>
<dbReference type="PDB" id="5X2C">
    <property type="method" value="X-ray"/>
    <property type="resolution" value="2.05 A"/>
    <property type="chains" value="A/B=696-1022"/>
</dbReference>
<dbReference type="PDB" id="5X2F">
    <property type="method" value="X-ray"/>
    <property type="resolution" value="2.20 A"/>
    <property type="chains" value="A/B/C/D=696-1022"/>
</dbReference>
<dbReference type="PDB" id="5X2K">
    <property type="method" value="X-ray"/>
    <property type="resolution" value="3.20 A"/>
    <property type="chains" value="A=696-1022"/>
</dbReference>
<dbReference type="PDB" id="5XDK">
    <property type="method" value="X-ray"/>
    <property type="resolution" value="2.35 A"/>
    <property type="chains" value="A=696-1022"/>
</dbReference>
<dbReference type="PDB" id="5XDL">
    <property type="method" value="X-ray"/>
    <property type="resolution" value="2.70 A"/>
    <property type="chains" value="A=696-1022"/>
</dbReference>
<dbReference type="PDB" id="5XGM">
    <property type="method" value="X-ray"/>
    <property type="resolution" value="2.95 A"/>
    <property type="chains" value="A=696-1022"/>
</dbReference>
<dbReference type="PDB" id="5XGN">
    <property type="method" value="X-ray"/>
    <property type="resolution" value="3.00 A"/>
    <property type="chains" value="A/B=696-1022"/>
</dbReference>
<dbReference type="PDB" id="5XWD">
    <property type="method" value="X-ray"/>
    <property type="resolution" value="2.89 A"/>
    <property type="chains" value="A=1-643"/>
</dbReference>
<dbReference type="PDB" id="5Y25">
    <property type="method" value="X-ray"/>
    <property type="resolution" value="3.10 A"/>
    <property type="chains" value="A=698-1022"/>
</dbReference>
<dbReference type="PDB" id="5Y9T">
    <property type="method" value="X-ray"/>
    <property type="resolution" value="3.25 A"/>
    <property type="chains" value="A=695-1022"/>
</dbReference>
<dbReference type="PDB" id="5YU9">
    <property type="method" value="X-ray"/>
    <property type="resolution" value="1.95 A"/>
    <property type="chains" value="A/B/C/D=696-1022"/>
</dbReference>
<dbReference type="PDB" id="5ZTO">
    <property type="method" value="X-ray"/>
    <property type="resolution" value="2.65 A"/>
    <property type="chains" value="A=696-1022"/>
</dbReference>
<dbReference type="PDB" id="5ZWJ">
    <property type="method" value="X-ray"/>
    <property type="resolution" value="2.90 A"/>
    <property type="chains" value="A=675-1022"/>
</dbReference>
<dbReference type="PDB" id="6ARU">
    <property type="method" value="X-ray"/>
    <property type="resolution" value="3.20 A"/>
    <property type="chains" value="A=25-640"/>
</dbReference>
<dbReference type="PDB" id="6B3S">
    <property type="method" value="X-ray"/>
    <property type="resolution" value="2.80 A"/>
    <property type="chains" value="A/B/E/I=335-538"/>
</dbReference>
<dbReference type="PDB" id="6D8E">
    <property type="method" value="X-ray"/>
    <property type="resolution" value="2.54 A"/>
    <property type="chains" value="A=696-1022"/>
</dbReference>
<dbReference type="PDB" id="6DUK">
    <property type="method" value="X-ray"/>
    <property type="resolution" value="2.20 A"/>
    <property type="chains" value="A/B/C/D/E/F=695-1022"/>
</dbReference>
<dbReference type="PDB" id="6JRJ">
    <property type="method" value="X-ray"/>
    <property type="resolution" value="2.94 A"/>
    <property type="chains" value="A=696-1022"/>
</dbReference>
<dbReference type="PDB" id="6JRK">
    <property type="method" value="X-ray"/>
    <property type="resolution" value="2.80 A"/>
    <property type="chains" value="A=696-1022"/>
</dbReference>
<dbReference type="PDB" id="6JRX">
    <property type="method" value="X-ray"/>
    <property type="resolution" value="2.20 A"/>
    <property type="chains" value="A=696-1022"/>
</dbReference>
<dbReference type="PDB" id="6JWL">
    <property type="method" value="X-ray"/>
    <property type="resolution" value="2.55 A"/>
    <property type="chains" value="A=696-1022"/>
</dbReference>
<dbReference type="PDB" id="6JX0">
    <property type="method" value="X-ray"/>
    <property type="resolution" value="2.53 A"/>
    <property type="chains" value="A=696-1022"/>
</dbReference>
<dbReference type="PDB" id="6JX4">
    <property type="method" value="X-ray"/>
    <property type="resolution" value="2.53 A"/>
    <property type="chains" value="A=696-1022"/>
</dbReference>
<dbReference type="PDB" id="6JXT">
    <property type="method" value="X-ray"/>
    <property type="resolution" value="2.31 A"/>
    <property type="chains" value="A=696-1022"/>
</dbReference>
<dbReference type="PDB" id="6JZ0">
    <property type="method" value="X-ray"/>
    <property type="resolution" value="2.86 A"/>
    <property type="chains" value="A=696-1021"/>
</dbReference>
<dbReference type="PDB" id="6LUB">
    <property type="method" value="X-ray"/>
    <property type="resolution" value="2.31 A"/>
    <property type="chains" value="A=695-1022"/>
</dbReference>
<dbReference type="PDB" id="6LUD">
    <property type="method" value="X-ray"/>
    <property type="resolution" value="2.05 A"/>
    <property type="chains" value="A=695-1022"/>
</dbReference>
<dbReference type="PDB" id="6P1D">
    <property type="method" value="X-ray"/>
    <property type="resolution" value="2.40 A"/>
    <property type="chains" value="A/B/C/D=696-1022"/>
</dbReference>
<dbReference type="PDB" id="6P1L">
    <property type="method" value="X-ray"/>
    <property type="resolution" value="2.80 A"/>
    <property type="chains" value="A/B/C/D=696-1022"/>
</dbReference>
<dbReference type="PDB" id="6P8Q">
    <property type="method" value="X-ray"/>
    <property type="resolution" value="1.90 A"/>
    <property type="chains" value="A/B/C/D=696-1022"/>
</dbReference>
<dbReference type="PDB" id="6S89">
    <property type="method" value="X-ray"/>
    <property type="resolution" value="2.70 A"/>
    <property type="chains" value="A=695-1022"/>
</dbReference>
<dbReference type="PDB" id="6S8A">
    <property type="method" value="X-ray"/>
    <property type="resolution" value="2.60 A"/>
    <property type="chains" value="A=695-1022"/>
</dbReference>
<dbReference type="PDB" id="6S9B">
    <property type="method" value="X-ray"/>
    <property type="resolution" value="3.25 A"/>
    <property type="chains" value="A=697-1022"/>
</dbReference>
<dbReference type="PDB" id="6S9C">
    <property type="method" value="X-ray"/>
    <property type="resolution" value="2.73 A"/>
    <property type="chains" value="A=696-1022"/>
</dbReference>
<dbReference type="PDB" id="6S9D">
    <property type="method" value="X-ray"/>
    <property type="resolution" value="2.67 A"/>
    <property type="chains" value="A=696-1022"/>
</dbReference>
<dbReference type="PDB" id="6TFU">
    <property type="method" value="X-ray"/>
    <property type="resolution" value="2.00 A"/>
    <property type="chains" value="A/B=695-1022"/>
</dbReference>
<dbReference type="PDB" id="6TFV">
    <property type="method" value="X-ray"/>
    <property type="resolution" value="1.50 A"/>
    <property type="chains" value="A/B=695-1022"/>
</dbReference>
<dbReference type="PDB" id="6TFW">
    <property type="method" value="X-ray"/>
    <property type="resolution" value="2.00 A"/>
    <property type="chains" value="A/B=695-1022"/>
</dbReference>
<dbReference type="PDB" id="6TFY">
    <property type="method" value="X-ray"/>
    <property type="resolution" value="1.70 A"/>
    <property type="chains" value="A/B=695-1022"/>
</dbReference>
<dbReference type="PDB" id="6TFZ">
    <property type="method" value="X-ray"/>
    <property type="resolution" value="1.80 A"/>
    <property type="chains" value="A/B=695-1022"/>
</dbReference>
<dbReference type="PDB" id="6TG0">
    <property type="method" value="X-ray"/>
    <property type="resolution" value="1.50 A"/>
    <property type="chains" value="A/B=695-1022"/>
</dbReference>
<dbReference type="PDB" id="6TG1">
    <property type="method" value="X-ray"/>
    <property type="resolution" value="1.60 A"/>
    <property type="chains" value="A/B=695-1022"/>
</dbReference>
<dbReference type="PDB" id="6V5N">
    <property type="method" value="X-ray"/>
    <property type="resolution" value="2.40 A"/>
    <property type="chains" value="A/B/C/D=695-1022"/>
</dbReference>
<dbReference type="PDB" id="6V5P">
    <property type="method" value="X-ray"/>
    <property type="resolution" value="2.30 A"/>
    <property type="chains" value="A/B/C/D=695-1022"/>
</dbReference>
<dbReference type="PDB" id="6V66">
    <property type="method" value="X-ray"/>
    <property type="resolution" value="1.79 A"/>
    <property type="chains" value="A/B/C/D=696-1022"/>
</dbReference>
<dbReference type="PDB" id="6V6K">
    <property type="method" value="X-ray"/>
    <property type="resolution" value="2.20 A"/>
    <property type="chains" value="A/B/C/D/E/F/G/H=696-1022"/>
</dbReference>
<dbReference type="PDB" id="6V6O">
    <property type="method" value="X-ray"/>
    <property type="resolution" value="2.10 A"/>
    <property type="chains" value="A/B/C/D/E/F/G/H=696-1022"/>
</dbReference>
<dbReference type="PDB" id="6VH4">
    <property type="method" value="X-ray"/>
    <property type="resolution" value="2.80 A"/>
    <property type="chains" value="A=696-1022"/>
</dbReference>
<dbReference type="PDB" id="6VHN">
    <property type="method" value="X-ray"/>
    <property type="resolution" value="2.40 A"/>
    <property type="chains" value="A=696-1022"/>
</dbReference>
<dbReference type="PDB" id="6VHP">
    <property type="method" value="X-ray"/>
    <property type="resolution" value="3.60 A"/>
    <property type="chains" value="A=696-1022"/>
</dbReference>
<dbReference type="PDB" id="6WA2">
    <property type="method" value="X-ray"/>
    <property type="resolution" value="2.40 A"/>
    <property type="chains" value="A/B/C/D=695-1022"/>
</dbReference>
<dbReference type="PDB" id="6WAK">
    <property type="method" value="X-ray"/>
    <property type="resolution" value="2.40 A"/>
    <property type="chains" value="A/B/C/D=695-1022"/>
</dbReference>
<dbReference type="PDB" id="6WXN">
    <property type="method" value="X-ray"/>
    <property type="resolution" value="1.76 A"/>
    <property type="chains" value="A/B/C/D=695-1022"/>
</dbReference>
<dbReference type="PDB" id="6XL4">
    <property type="method" value="X-ray"/>
    <property type="resolution" value="2.06 A"/>
    <property type="chains" value="A/B/C/D=695-1022"/>
</dbReference>
<dbReference type="PDB" id="6Z4B">
    <property type="method" value="X-ray"/>
    <property type="resolution" value="2.50 A"/>
    <property type="chains" value="A/B=695-1022"/>
</dbReference>
<dbReference type="PDB" id="6Z4D">
    <property type="method" value="X-ray"/>
    <property type="resolution" value="2.00 A"/>
    <property type="chains" value="A/B=695-1022"/>
</dbReference>
<dbReference type="PDB" id="7A2A">
    <property type="method" value="X-ray"/>
    <property type="resolution" value="1.90 A"/>
    <property type="chains" value="A/B=695-1022"/>
</dbReference>
<dbReference type="PDB" id="7A6I">
    <property type="method" value="X-ray"/>
    <property type="resolution" value="2.40 A"/>
    <property type="chains" value="A=695-1022"/>
</dbReference>
<dbReference type="PDB" id="7A6J">
    <property type="method" value="X-ray"/>
    <property type="resolution" value="2.00 A"/>
    <property type="chains" value="A/B=695-1022"/>
</dbReference>
<dbReference type="PDB" id="7A6K">
    <property type="method" value="X-ray"/>
    <property type="resolution" value="2.00 A"/>
    <property type="chains" value="A/B/C/D=695-1022"/>
</dbReference>
<dbReference type="PDB" id="7AEI">
    <property type="method" value="X-ray"/>
    <property type="resolution" value="2.65 A"/>
    <property type="chains" value="A=695-1022"/>
</dbReference>
<dbReference type="PDB" id="7AEM">
    <property type="method" value="X-ray"/>
    <property type="resolution" value="2.65 A"/>
    <property type="chains" value="A=695-1022"/>
</dbReference>
<dbReference type="PDB" id="7B85">
    <property type="method" value="X-ray"/>
    <property type="resolution" value="2.50 A"/>
    <property type="chains" value="A=695-1022"/>
</dbReference>
<dbReference type="PDB" id="7ER2">
    <property type="method" value="X-ray"/>
    <property type="resolution" value="2.66 A"/>
    <property type="chains" value="A=696-1022"/>
</dbReference>
<dbReference type="PDB" id="7JXI">
    <property type="method" value="X-ray"/>
    <property type="resolution" value="3.00 A"/>
    <property type="chains" value="A/B/C/D=695-1022"/>
</dbReference>
<dbReference type="PDB" id="7JXK">
    <property type="method" value="X-ray"/>
    <property type="resolution" value="3.10 A"/>
    <property type="chains" value="A/B/C/D/E/F=695-1022"/>
</dbReference>
<dbReference type="PDB" id="7JXL">
    <property type="method" value="X-ray"/>
    <property type="resolution" value="2.40 A"/>
    <property type="chains" value="A/B/C/D=695-1022"/>
</dbReference>
<dbReference type="PDB" id="7JXM">
    <property type="method" value="X-ray"/>
    <property type="resolution" value="2.19 A"/>
    <property type="chains" value="A/B/C/D=695-1022"/>
</dbReference>
<dbReference type="PDB" id="7JXP">
    <property type="method" value="X-ray"/>
    <property type="resolution" value="2.16 A"/>
    <property type="chains" value="A/B/C/D/E/F=695-1022"/>
</dbReference>
<dbReference type="PDB" id="7JXQ">
    <property type="method" value="X-ray"/>
    <property type="resolution" value="1.83 A"/>
    <property type="chains" value="A/B/C/D=695-1022"/>
</dbReference>
<dbReference type="PDB" id="7JXW">
    <property type="method" value="X-ray"/>
    <property type="resolution" value="2.50 A"/>
    <property type="chains" value="A/B/C/D=695-1022"/>
</dbReference>
<dbReference type="PDB" id="7K1H">
    <property type="method" value="X-ray"/>
    <property type="resolution" value="2.60 A"/>
    <property type="chains" value="A/B/C/D/E/F=695-1022"/>
</dbReference>
<dbReference type="PDB" id="7K1I">
    <property type="method" value="X-ray"/>
    <property type="resolution" value="3.20 A"/>
    <property type="chains" value="A=695-1022"/>
</dbReference>
<dbReference type="PDB" id="7KXZ">
    <property type="method" value="X-ray"/>
    <property type="resolution" value="2.40 A"/>
    <property type="chains" value="A=695-1022"/>
</dbReference>
<dbReference type="PDB" id="7KY0">
    <property type="method" value="X-ray"/>
    <property type="resolution" value="3.10 A"/>
    <property type="chains" value="A/B/C/D=695-1022"/>
</dbReference>
<dbReference type="PDB" id="7LEN">
    <property type="method" value="X-ray"/>
    <property type="resolution" value="2.90 A"/>
    <property type="chains" value="A/B=25-525"/>
</dbReference>
<dbReference type="PDB" id="7LFR">
    <property type="method" value="X-ray"/>
    <property type="resolution" value="3.20 A"/>
    <property type="chains" value="A/B=25-525"/>
</dbReference>
<dbReference type="PDB" id="7LFS">
    <property type="method" value="X-ray"/>
    <property type="resolution" value="3.50 A"/>
    <property type="chains" value="A/B/C/D=25-525"/>
</dbReference>
<dbReference type="PDB" id="7LG8">
    <property type="method" value="X-ray"/>
    <property type="resolution" value="2.93 A"/>
    <property type="chains" value="A/B/C/D=695-1022"/>
</dbReference>
<dbReference type="PDB" id="7LGS">
    <property type="method" value="X-ray"/>
    <property type="resolution" value="3.10 A"/>
    <property type="chains" value="A/B/C/D=696-1022"/>
</dbReference>
<dbReference type="PDB" id="7LTX">
    <property type="method" value="X-ray"/>
    <property type="resolution" value="2.30 A"/>
    <property type="chains" value="A/B/C/D=695-1022"/>
</dbReference>
<dbReference type="PDB" id="7OM4">
    <property type="method" value="X-ray"/>
    <property type="resolution" value="6.05 A"/>
    <property type="chains" value="A=25-645"/>
</dbReference>
<dbReference type="PDB" id="7OXB">
    <property type="method" value="X-ray"/>
    <property type="resolution" value="2.56 A"/>
    <property type="chains" value="A=696-1020"/>
</dbReference>
<dbReference type="PDB" id="7SI1">
    <property type="method" value="X-ray"/>
    <property type="resolution" value="1.60 A"/>
    <property type="chains" value="A=695-1022"/>
</dbReference>
<dbReference type="PDB" id="7SYD">
    <property type="method" value="EM"/>
    <property type="resolution" value="3.10 A"/>
    <property type="chains" value="A/B=1-1210"/>
</dbReference>
<dbReference type="PDB" id="7SYE">
    <property type="method" value="EM"/>
    <property type="resolution" value="3.30 A"/>
    <property type="chains" value="A/B=1-1210"/>
</dbReference>
<dbReference type="PDB" id="7SZ0">
    <property type="method" value="EM"/>
    <property type="resolution" value="3.30 A"/>
    <property type="chains" value="A/B=1-1210"/>
</dbReference>
<dbReference type="PDB" id="7SZ1">
    <property type="method" value="EM"/>
    <property type="resolution" value="3.40 A"/>
    <property type="chains" value="A/B=1-1210"/>
</dbReference>
<dbReference type="PDB" id="7SZ5">
    <property type="method" value="EM"/>
    <property type="resolution" value="3.60 A"/>
    <property type="chains" value="A/B=1-1210"/>
</dbReference>
<dbReference type="PDB" id="7SZ7">
    <property type="method" value="EM"/>
    <property type="resolution" value="3.40 A"/>
    <property type="chains" value="A/B=1-1210"/>
</dbReference>
<dbReference type="PDB" id="7T4I">
    <property type="method" value="X-ray"/>
    <property type="resolution" value="2.61 A"/>
    <property type="chains" value="A=696-1022"/>
</dbReference>
<dbReference type="PDB" id="7T4J">
    <property type="method" value="X-ray"/>
    <property type="resolution" value="2.20 A"/>
    <property type="chains" value="A/B=696-1022"/>
</dbReference>
<dbReference type="PDB" id="7TVD">
    <property type="method" value="X-ray"/>
    <property type="resolution" value="2.96 A"/>
    <property type="chains" value="A=696-1022"/>
</dbReference>
<dbReference type="PDB" id="7U98">
    <property type="method" value="X-ray"/>
    <property type="resolution" value="3.42 A"/>
    <property type="chains" value="A/B/C/D=695-1022"/>
</dbReference>
<dbReference type="PDB" id="7U99">
    <property type="method" value="X-ray"/>
    <property type="resolution" value="2.50 A"/>
    <property type="chains" value="A=695-1022"/>
</dbReference>
<dbReference type="PDB" id="7U9A">
    <property type="method" value="X-ray"/>
    <property type="resolution" value="2.60 A"/>
    <property type="chains" value="A=695-1022"/>
</dbReference>
<dbReference type="PDB" id="7UKV">
    <property type="method" value="X-ray"/>
    <property type="resolution" value="2.40 A"/>
    <property type="chains" value="A=695-1022"/>
</dbReference>
<dbReference type="PDB" id="7UKW">
    <property type="method" value="X-ray"/>
    <property type="resolution" value="2.60 A"/>
    <property type="chains" value="A/B/C/D=695-1022"/>
</dbReference>
<dbReference type="PDB" id="7VRA">
    <property type="method" value="X-ray"/>
    <property type="resolution" value="2.41 A"/>
    <property type="chains" value="A=696-1022"/>
</dbReference>
<dbReference type="PDB" id="7VRE">
    <property type="method" value="X-ray"/>
    <property type="resolution" value="2.51 A"/>
    <property type="chains" value="A=696-1022"/>
</dbReference>
<dbReference type="PDB" id="7ZYM">
    <property type="method" value="X-ray"/>
    <property type="resolution" value="2.50 A"/>
    <property type="chains" value="A=695-1022"/>
</dbReference>
<dbReference type="PDB" id="7ZYN">
    <property type="method" value="X-ray"/>
    <property type="resolution" value="2.30 A"/>
    <property type="chains" value="A=695-1022"/>
</dbReference>
<dbReference type="PDB" id="7ZYP">
    <property type="method" value="X-ray"/>
    <property type="resolution" value="2.80 A"/>
    <property type="chains" value="A=695-1022"/>
</dbReference>
<dbReference type="PDB" id="7ZYQ">
    <property type="method" value="X-ray"/>
    <property type="resolution" value="2.10 A"/>
    <property type="chains" value="A/B=695-1022"/>
</dbReference>
<dbReference type="PDB" id="8A27">
    <property type="method" value="X-ray"/>
    <property type="resolution" value="1.07 A"/>
    <property type="chains" value="A=700-1022"/>
</dbReference>
<dbReference type="PDB" id="8A2A">
    <property type="method" value="X-ray"/>
    <property type="resolution" value="1.43 A"/>
    <property type="chains" value="A=700-1022"/>
</dbReference>
<dbReference type="PDB" id="8A2B">
    <property type="method" value="X-ray"/>
    <property type="resolution" value="1.69 A"/>
    <property type="chains" value="A=700-1022"/>
</dbReference>
<dbReference type="PDB" id="8A2D">
    <property type="method" value="X-ray"/>
    <property type="resolution" value="1.11 A"/>
    <property type="chains" value="A=700-1022"/>
</dbReference>
<dbReference type="PDB" id="8D73">
    <property type="method" value="X-ray"/>
    <property type="resolution" value="2.17 A"/>
    <property type="chains" value="A/B=695-1022"/>
</dbReference>
<dbReference type="PDB" id="8D76">
    <property type="method" value="X-ray"/>
    <property type="resolution" value="2.40 A"/>
    <property type="chains" value="A/B=695-1022"/>
</dbReference>
<dbReference type="PDB" id="8DSW">
    <property type="method" value="X-ray"/>
    <property type="resolution" value="2.39 A"/>
    <property type="chains" value="A=696-1022"/>
</dbReference>
<dbReference type="PDB" id="8EME">
    <property type="method" value="X-ray"/>
    <property type="resolution" value="3.32 A"/>
    <property type="chains" value="A/B=695-1022"/>
</dbReference>
<dbReference type="PDB" id="8F1H">
    <property type="method" value="X-ray"/>
    <property type="resolution" value="2.80 A"/>
    <property type="chains" value="A=695-1022"/>
</dbReference>
<dbReference type="PDB" id="8F1W">
    <property type="method" value="X-ray"/>
    <property type="resolution" value="3.20 A"/>
    <property type="chains" value="A/B/C/D=695-1022"/>
</dbReference>
<dbReference type="PDB" id="8F1X">
    <property type="method" value="X-ray"/>
    <property type="resolution" value="2.30 A"/>
    <property type="chains" value="A=695-1022"/>
</dbReference>
<dbReference type="PDB" id="8F1Y">
    <property type="method" value="X-ray"/>
    <property type="resolution" value="2.75 A"/>
    <property type="chains" value="A=695-1022"/>
</dbReference>
<dbReference type="PDB" id="8F1Z">
    <property type="method" value="X-ray"/>
    <property type="resolution" value="2.40 A"/>
    <property type="chains" value="A=695-1022"/>
</dbReference>
<dbReference type="PDB" id="8FV3">
    <property type="method" value="X-ray"/>
    <property type="resolution" value="2.10 A"/>
    <property type="chains" value="A/B/C/D=695-1022"/>
</dbReference>
<dbReference type="PDB" id="8FV4">
    <property type="method" value="X-ray"/>
    <property type="resolution" value="2.20 A"/>
    <property type="chains" value="A/B/C/D=695-1022"/>
</dbReference>
<dbReference type="PDB" id="8G63">
    <property type="method" value="X-ray"/>
    <property type="resolution" value="2.50 A"/>
    <property type="chains" value="A=696-1022"/>
</dbReference>
<dbReference type="PDB" id="8GB4">
    <property type="method" value="X-ray"/>
    <property type="resolution" value="2.59 A"/>
    <property type="chains" value="A/B/C/D=695-1022"/>
</dbReference>
<dbReference type="PDB" id="8GK5">
    <property type="method" value="X-ray"/>
    <property type="resolution" value="2.30 A"/>
    <property type="chains" value="A/B/C/D=695-1022"/>
</dbReference>
<dbReference type="PDB" id="8H7X">
    <property type="method" value="X-ray"/>
    <property type="resolution" value="3.40 A"/>
    <property type="chains" value="A/B=696-1022"/>
</dbReference>
<dbReference type="PDB" id="8HGO">
    <property type="method" value="EM"/>
    <property type="resolution" value="3.31 A"/>
    <property type="chains" value="A=1-683"/>
</dbReference>
<dbReference type="PDB" id="8HGP">
    <property type="method" value="EM"/>
    <property type="resolution" value="4.53 A"/>
    <property type="chains" value="A=1-683"/>
</dbReference>
<dbReference type="PDB" id="8HGS">
    <property type="method" value="EM"/>
    <property type="resolution" value="3.81 A"/>
    <property type="chains" value="A/B=1-683"/>
</dbReference>
<dbReference type="PDB" id="8HV1">
    <property type="method" value="X-ray"/>
    <property type="resolution" value="2.40 A"/>
    <property type="chains" value="A=695-1022"/>
</dbReference>
<dbReference type="PDB" id="8HV2">
    <property type="method" value="X-ray"/>
    <property type="resolution" value="2.80 A"/>
    <property type="chains" value="A=694-1022"/>
</dbReference>
<dbReference type="PDB" id="8HV3">
    <property type="method" value="X-ray"/>
    <property type="resolution" value="2.40 A"/>
    <property type="chains" value="A=695-1022"/>
</dbReference>
<dbReference type="PDB" id="8HV4">
    <property type="method" value="X-ray"/>
    <property type="resolution" value="2.20 A"/>
    <property type="chains" value="A=695-1022"/>
</dbReference>
<dbReference type="PDB" id="8HV5">
    <property type="method" value="X-ray"/>
    <property type="resolution" value="2.20 A"/>
    <property type="chains" value="A=695-1022"/>
</dbReference>
<dbReference type="PDB" id="8HV6">
    <property type="method" value="X-ray"/>
    <property type="resolution" value="2.20 A"/>
    <property type="chains" value="A=695-1022"/>
</dbReference>
<dbReference type="PDB" id="8HV7">
    <property type="method" value="X-ray"/>
    <property type="resolution" value="2.69 A"/>
    <property type="chains" value="A=695-1022"/>
</dbReference>
<dbReference type="PDB" id="8HV8">
    <property type="method" value="X-ray"/>
    <property type="resolution" value="2.40 A"/>
    <property type="chains" value="A=695-1022"/>
</dbReference>
<dbReference type="PDB" id="8HV9">
    <property type="method" value="X-ray"/>
    <property type="resolution" value="2.50 A"/>
    <property type="chains" value="A=695-1022"/>
</dbReference>
<dbReference type="PDB" id="8HVA">
    <property type="method" value="X-ray"/>
    <property type="resolution" value="2.77 A"/>
    <property type="chains" value="A=695-1022"/>
</dbReference>
<dbReference type="PDB" id="8HY7">
    <property type="method" value="X-ray"/>
    <property type="resolution" value="2.91 A"/>
    <property type="chains" value="A=695-1022"/>
</dbReference>
<dbReference type="PDB" id="8KFQ">
    <property type="method" value="X-ray"/>
    <property type="resolution" value="3.22 A"/>
    <property type="chains" value="A=697-1018"/>
</dbReference>
<dbReference type="PDB" id="8PNZ">
    <property type="method" value="X-ray"/>
    <property type="resolution" value="2.51 A"/>
    <property type="chains" value="A=695-1022"/>
</dbReference>
<dbReference type="PDB" id="8PO0">
    <property type="method" value="X-ray"/>
    <property type="resolution" value="2.52 A"/>
    <property type="chains" value="A=695-1022"/>
</dbReference>
<dbReference type="PDB" id="8PO1">
    <property type="method" value="X-ray"/>
    <property type="resolution" value="2.11 A"/>
    <property type="chains" value="A=695-1022"/>
</dbReference>
<dbReference type="PDB" id="8PO2">
    <property type="method" value="X-ray"/>
    <property type="resolution" value="2.28 A"/>
    <property type="chains" value="A/B/D=695-1022"/>
</dbReference>
<dbReference type="PDB" id="8PO3">
    <property type="method" value="X-ray"/>
    <property type="resolution" value="2.13 A"/>
    <property type="chains" value="A=695-1022"/>
</dbReference>
<dbReference type="PDB" id="8PO4">
    <property type="method" value="X-ray"/>
    <property type="resolution" value="1.62 A"/>
    <property type="chains" value="A/B=695-1022"/>
</dbReference>
<dbReference type="PDB" id="8S1M">
    <property type="method" value="X-ray"/>
    <property type="resolution" value="2.05 A"/>
    <property type="chains" value="A=1076-1099"/>
</dbReference>
<dbReference type="PDB" id="8SC7">
    <property type="method" value="X-ray"/>
    <property type="resolution" value="1.98 A"/>
    <property type="chains" value="A=696-1022"/>
</dbReference>
<dbReference type="PDB" id="8TJL">
    <property type="method" value="X-ray"/>
    <property type="resolution" value="2.70 A"/>
    <property type="chains" value="A=695-1022"/>
</dbReference>
<dbReference type="PDB" id="8TO3">
    <property type="method" value="X-ray"/>
    <property type="resolution" value="2.49 A"/>
    <property type="chains" value="A/B/C/D=695-1022"/>
</dbReference>
<dbReference type="PDB" id="8TO4">
    <property type="method" value="X-ray"/>
    <property type="resolution" value="2.99 A"/>
    <property type="chains" value="A/B/C/D=695-1022"/>
</dbReference>
<dbReference type="PDB" id="8UKV">
    <property type="method" value="X-ray"/>
    <property type="resolution" value="2.94 A"/>
    <property type="chains" value="A/B=298-642"/>
</dbReference>
<dbReference type="PDB" id="8UKW">
    <property type="method" value="X-ray"/>
    <property type="resolution" value="2.39 A"/>
    <property type="chains" value="A/B=298-642"/>
</dbReference>
<dbReference type="PDB" id="8UKX">
    <property type="method" value="X-ray"/>
    <property type="resolution" value="3.30 A"/>
    <property type="chains" value="A=298-642"/>
</dbReference>
<dbReference type="PDB" id="8WD4">
    <property type="method" value="X-ray"/>
    <property type="resolution" value="2.55 A"/>
    <property type="chains" value="A=696-1022"/>
</dbReference>
<dbReference type="PDB" id="9D3V">
    <property type="method" value="X-ray"/>
    <property type="resolution" value="2.32 A"/>
    <property type="chains" value="A=696-1022"/>
</dbReference>
<dbReference type="PDB" id="9D3W">
    <property type="method" value="X-ray"/>
    <property type="resolution" value="2.53 A"/>
    <property type="chains" value="A=696-1022"/>
</dbReference>
<dbReference type="PDB" id="9EWS">
    <property type="method" value="X-ray"/>
    <property type="resolution" value="2.44 A"/>
    <property type="chains" value="A=695-1022"/>
</dbReference>
<dbReference type="PDB" id="9EWT">
    <property type="method" value="X-ray"/>
    <property type="resolution" value="3.02 A"/>
    <property type="chains" value="A/B=695-1022"/>
</dbReference>
<dbReference type="PDB" id="9FQP">
    <property type="method" value="X-ray"/>
    <property type="resolution" value="2.50 A"/>
    <property type="chains" value="A=695-1022"/>
</dbReference>
<dbReference type="PDB" id="9FQS">
    <property type="method" value="X-ray"/>
    <property type="resolution" value="1.78 A"/>
    <property type="chains" value="A=695-1022"/>
</dbReference>
<dbReference type="PDB" id="9FRD">
    <property type="method" value="X-ray"/>
    <property type="resolution" value="2.06 A"/>
    <property type="chains" value="A=696-1022"/>
</dbReference>
<dbReference type="PDB" id="9GC4">
    <property type="method" value="X-ray"/>
    <property type="resolution" value="2.42 A"/>
    <property type="chains" value="A/B/D=695-1022"/>
</dbReference>
<dbReference type="PDB" id="9GC5">
    <property type="method" value="X-ray"/>
    <property type="resolution" value="1.91 A"/>
    <property type="chains" value="A/B=695-1022"/>
</dbReference>
<dbReference type="PDB" id="9GC6">
    <property type="method" value="X-ray"/>
    <property type="resolution" value="1.90 A"/>
    <property type="chains" value="A/B=695-1022"/>
</dbReference>
<dbReference type="PDB" id="9GDV">
    <property type="method" value="X-ray"/>
    <property type="resolution" value="2.22 A"/>
    <property type="chains" value="A/B=695-1022"/>
</dbReference>
<dbReference type="PDB" id="9H46">
    <property type="method" value="X-ray"/>
    <property type="resolution" value="3.16 A"/>
    <property type="chains" value="A=696-1022"/>
</dbReference>
<dbReference type="PDB" id="9HBO">
    <property type="method" value="X-ray"/>
    <property type="resolution" value="2.45 A"/>
    <property type="chains" value="A/B=695-1022"/>
</dbReference>
<dbReference type="PDBsum" id="1IVO"/>
<dbReference type="PDBsum" id="1M14"/>
<dbReference type="PDBsum" id="1M17"/>
<dbReference type="PDBsum" id="1MOX"/>
<dbReference type="PDBsum" id="1NQL"/>
<dbReference type="PDBsum" id="1XKK"/>
<dbReference type="PDBsum" id="1YY9"/>
<dbReference type="PDBsum" id="1Z9I"/>
<dbReference type="PDBsum" id="2EB2"/>
<dbReference type="PDBsum" id="2EB3"/>
<dbReference type="PDBsum" id="2GS2"/>
<dbReference type="PDBsum" id="2GS6"/>
<dbReference type="PDBsum" id="2GS7"/>
<dbReference type="PDBsum" id="2ITN"/>
<dbReference type="PDBsum" id="2ITO"/>
<dbReference type="PDBsum" id="2ITP"/>
<dbReference type="PDBsum" id="2ITQ"/>
<dbReference type="PDBsum" id="2ITT"/>
<dbReference type="PDBsum" id="2ITU"/>
<dbReference type="PDBsum" id="2ITV"/>
<dbReference type="PDBsum" id="2ITW"/>
<dbReference type="PDBsum" id="2ITX"/>
<dbReference type="PDBsum" id="2ITY"/>
<dbReference type="PDBsum" id="2ITZ"/>
<dbReference type="PDBsum" id="2J5E"/>
<dbReference type="PDBsum" id="2J5F"/>
<dbReference type="PDBsum" id="2J6M"/>
<dbReference type="PDBsum" id="2JIT"/>
<dbReference type="PDBsum" id="2JIU"/>
<dbReference type="PDBsum" id="2JIV"/>
<dbReference type="PDBsum" id="2KS1"/>
<dbReference type="PDBsum" id="2M0B"/>
<dbReference type="PDBsum" id="2M20"/>
<dbReference type="PDBsum" id="2N5S"/>
<dbReference type="PDBsum" id="2RF9"/>
<dbReference type="PDBsum" id="2RFD"/>
<dbReference type="PDBsum" id="2RFE"/>
<dbReference type="PDBsum" id="2RGP"/>
<dbReference type="PDBsum" id="3B2U"/>
<dbReference type="PDBsum" id="3B2V"/>
<dbReference type="PDBsum" id="3BEL"/>
<dbReference type="PDBsum" id="3BUO"/>
<dbReference type="PDBsum" id="3C09"/>
<dbReference type="PDBsum" id="3G5V"/>
<dbReference type="PDBsum" id="3G5Y"/>
<dbReference type="PDBsum" id="3GOP"/>
<dbReference type="PDBsum" id="3GT8"/>
<dbReference type="PDBsum" id="3IKA"/>
<dbReference type="PDBsum" id="3LZB"/>
<dbReference type="PDBsum" id="3NJP"/>
<dbReference type="PDBsum" id="3OB2"/>
<dbReference type="PDBsum" id="3OP0"/>
<dbReference type="PDBsum" id="3P0Y"/>
<dbReference type="PDBsum" id="3PFV"/>
<dbReference type="PDBsum" id="3POZ"/>
<dbReference type="PDBsum" id="3QWQ"/>
<dbReference type="PDBsum" id="3UG1"/>
<dbReference type="PDBsum" id="3UG2"/>
<dbReference type="PDBsum" id="3VJN"/>
<dbReference type="PDBsum" id="3VJO"/>
<dbReference type="PDBsum" id="3VRP"/>
<dbReference type="PDBsum" id="3VRR"/>
<dbReference type="PDBsum" id="3W2O"/>
<dbReference type="PDBsum" id="3W2P"/>
<dbReference type="PDBsum" id="3W2Q"/>
<dbReference type="PDBsum" id="3W2R"/>
<dbReference type="PDBsum" id="3W2S"/>
<dbReference type="PDBsum" id="3W32"/>
<dbReference type="PDBsum" id="3W33"/>
<dbReference type="PDBsum" id="4G5J"/>
<dbReference type="PDBsum" id="4G5P"/>
<dbReference type="PDBsum" id="4HJO"/>
<dbReference type="PDBsum" id="4I1Z"/>
<dbReference type="PDBsum" id="4I20"/>
<dbReference type="PDBsum" id="4I21"/>
<dbReference type="PDBsum" id="4I22"/>
<dbReference type="PDBsum" id="4I23"/>
<dbReference type="PDBsum" id="4I24"/>
<dbReference type="PDBsum" id="4JQ7"/>
<dbReference type="PDBsum" id="4JQ8"/>
<dbReference type="PDBsum" id="4JR3"/>
<dbReference type="PDBsum" id="4JRV"/>
<dbReference type="PDBsum" id="4KRL"/>
<dbReference type="PDBsum" id="4KRM"/>
<dbReference type="PDBsum" id="4KRO"/>
<dbReference type="PDBsum" id="4KRP"/>
<dbReference type="PDBsum" id="4LI5"/>
<dbReference type="PDBsum" id="4LL0"/>
<dbReference type="PDBsum" id="4LQM"/>
<dbReference type="PDBsum" id="4LRM"/>
<dbReference type="PDBsum" id="4R3P"/>
<dbReference type="PDBsum" id="4R3R"/>
<dbReference type="PDBsum" id="4R5S"/>
<dbReference type="PDBsum" id="4RIW"/>
<dbReference type="PDBsum" id="4RIX"/>
<dbReference type="PDBsum" id="4RIY"/>
<dbReference type="PDBsum" id="4RJ4"/>
<dbReference type="PDBsum" id="4RJ5"/>
<dbReference type="PDBsum" id="4RJ6"/>
<dbReference type="PDBsum" id="4RJ7"/>
<dbReference type="PDBsum" id="4RJ8"/>
<dbReference type="PDBsum" id="4TKS"/>
<dbReference type="PDBsum" id="4UIP"/>
<dbReference type="PDBsum" id="4UV7"/>
<dbReference type="PDBsum" id="4WD5"/>
<dbReference type="PDBsum" id="4WKQ"/>
<dbReference type="PDBsum" id="4WRG"/>
<dbReference type="PDBsum" id="4ZAU"/>
<dbReference type="PDBsum" id="4ZJV"/>
<dbReference type="PDBsum" id="4ZSE"/>
<dbReference type="PDBsum" id="5C8K"/>
<dbReference type="PDBsum" id="5C8M"/>
<dbReference type="PDBsum" id="5C8N"/>
<dbReference type="PDBsum" id="5CAL"/>
<dbReference type="PDBsum" id="5CAN"/>
<dbReference type="PDBsum" id="5CAO"/>
<dbReference type="PDBsum" id="5CAP"/>
<dbReference type="PDBsum" id="5CAQ"/>
<dbReference type="PDBsum" id="5CAS"/>
<dbReference type="PDBsum" id="5CAU"/>
<dbReference type="PDBsum" id="5CAV"/>
<dbReference type="PDBsum" id="5CNN"/>
<dbReference type="PDBsum" id="5CNO"/>
<dbReference type="PDBsum" id="5CZH"/>
<dbReference type="PDBsum" id="5CZI"/>
<dbReference type="PDBsum" id="5D41"/>
<dbReference type="PDBsum" id="5EDP"/>
<dbReference type="PDBsum" id="5EDQ"/>
<dbReference type="PDBsum" id="5EDR"/>
<dbReference type="PDBsum" id="5EM5"/>
<dbReference type="PDBsum" id="5EM6"/>
<dbReference type="PDBsum" id="5EM7"/>
<dbReference type="PDBsum" id="5EM8"/>
<dbReference type="PDBsum" id="5FED"/>
<dbReference type="PDBsum" id="5FEE"/>
<dbReference type="PDBsum" id="5FEQ"/>
<dbReference type="PDBsum" id="5GMP"/>
<dbReference type="PDBsum" id="5GNK"/>
<dbReference type="PDBsum" id="5GTY"/>
<dbReference type="PDBsum" id="5GTZ"/>
<dbReference type="PDBsum" id="5HCX"/>
<dbReference type="PDBsum" id="5HCY"/>
<dbReference type="PDBsum" id="5HCZ"/>
<dbReference type="PDBsum" id="5HG5"/>
<dbReference type="PDBsum" id="5HG7"/>
<dbReference type="PDBsum" id="5HG8"/>
<dbReference type="PDBsum" id="5HG9"/>
<dbReference type="PDBsum" id="5HIB"/>
<dbReference type="PDBsum" id="5HIC"/>
<dbReference type="PDBsum" id="5J9Y"/>
<dbReference type="PDBsum" id="5J9Z"/>
<dbReference type="PDBsum" id="5JEB"/>
<dbReference type="PDBsum" id="5LV6"/>
<dbReference type="PDBsum" id="5SX4"/>
<dbReference type="PDBsum" id="5SX5"/>
<dbReference type="PDBsum" id="5U8L"/>
<dbReference type="PDBsum" id="5UG8"/>
<dbReference type="PDBsum" id="5UG9"/>
<dbReference type="PDBsum" id="5UGA"/>
<dbReference type="PDBsum" id="5UGB"/>
<dbReference type="PDBsum" id="5UGC"/>
<dbReference type="PDBsum" id="5UWD"/>
<dbReference type="PDBsum" id="5WB7"/>
<dbReference type="PDBsum" id="5WB8"/>
<dbReference type="PDBsum" id="5X26"/>
<dbReference type="PDBsum" id="5X27"/>
<dbReference type="PDBsum" id="5X28"/>
<dbReference type="PDBsum" id="5X2A"/>
<dbReference type="PDBsum" id="5X2C"/>
<dbReference type="PDBsum" id="5X2F"/>
<dbReference type="PDBsum" id="5X2K"/>
<dbReference type="PDBsum" id="5XDK"/>
<dbReference type="PDBsum" id="5XDL"/>
<dbReference type="PDBsum" id="5XGM"/>
<dbReference type="PDBsum" id="5XGN"/>
<dbReference type="PDBsum" id="5XWD"/>
<dbReference type="PDBsum" id="5Y25"/>
<dbReference type="PDBsum" id="5Y9T"/>
<dbReference type="PDBsum" id="5YU9"/>
<dbReference type="PDBsum" id="5ZTO"/>
<dbReference type="PDBsum" id="5ZWJ"/>
<dbReference type="PDBsum" id="6ARU"/>
<dbReference type="PDBsum" id="6B3S"/>
<dbReference type="PDBsum" id="6D8E"/>
<dbReference type="PDBsum" id="6DUK"/>
<dbReference type="PDBsum" id="6JRJ"/>
<dbReference type="PDBsum" id="6JRK"/>
<dbReference type="PDBsum" id="6JRX"/>
<dbReference type="PDBsum" id="6JWL"/>
<dbReference type="PDBsum" id="6JX0"/>
<dbReference type="PDBsum" id="6JX4"/>
<dbReference type="PDBsum" id="6JXT"/>
<dbReference type="PDBsum" id="6JZ0"/>
<dbReference type="PDBsum" id="6LUB"/>
<dbReference type="PDBsum" id="6LUD"/>
<dbReference type="PDBsum" id="6P1D"/>
<dbReference type="PDBsum" id="6P1L"/>
<dbReference type="PDBsum" id="6P8Q"/>
<dbReference type="PDBsum" id="6S89"/>
<dbReference type="PDBsum" id="6S8A"/>
<dbReference type="PDBsum" id="6S9B"/>
<dbReference type="PDBsum" id="6S9C"/>
<dbReference type="PDBsum" id="6S9D"/>
<dbReference type="PDBsum" id="6TFU"/>
<dbReference type="PDBsum" id="6TFV"/>
<dbReference type="PDBsum" id="6TFW"/>
<dbReference type="PDBsum" id="6TFY"/>
<dbReference type="PDBsum" id="6TFZ"/>
<dbReference type="PDBsum" id="6TG0"/>
<dbReference type="PDBsum" id="6TG1"/>
<dbReference type="PDBsum" id="6V5N"/>
<dbReference type="PDBsum" id="6V5P"/>
<dbReference type="PDBsum" id="6V66"/>
<dbReference type="PDBsum" id="6V6K"/>
<dbReference type="PDBsum" id="6V6O"/>
<dbReference type="PDBsum" id="6VH4"/>
<dbReference type="PDBsum" id="6VHN"/>
<dbReference type="PDBsum" id="6VHP"/>
<dbReference type="PDBsum" id="6WA2"/>
<dbReference type="PDBsum" id="6WAK"/>
<dbReference type="PDBsum" id="6WXN"/>
<dbReference type="PDBsum" id="6XL4"/>
<dbReference type="PDBsum" id="6Z4B"/>
<dbReference type="PDBsum" id="6Z4D"/>
<dbReference type="PDBsum" id="7A2A"/>
<dbReference type="PDBsum" id="7A6I"/>
<dbReference type="PDBsum" id="7A6J"/>
<dbReference type="PDBsum" id="7A6K"/>
<dbReference type="PDBsum" id="7AEI"/>
<dbReference type="PDBsum" id="7AEM"/>
<dbReference type="PDBsum" id="7B85"/>
<dbReference type="PDBsum" id="7ER2"/>
<dbReference type="PDBsum" id="7JXI"/>
<dbReference type="PDBsum" id="7JXK"/>
<dbReference type="PDBsum" id="7JXL"/>
<dbReference type="PDBsum" id="7JXM"/>
<dbReference type="PDBsum" id="7JXP"/>
<dbReference type="PDBsum" id="7JXQ"/>
<dbReference type="PDBsum" id="7JXW"/>
<dbReference type="PDBsum" id="7K1H"/>
<dbReference type="PDBsum" id="7K1I"/>
<dbReference type="PDBsum" id="7KXZ"/>
<dbReference type="PDBsum" id="7KY0"/>
<dbReference type="PDBsum" id="7LEN"/>
<dbReference type="PDBsum" id="7LFR"/>
<dbReference type="PDBsum" id="7LFS"/>
<dbReference type="PDBsum" id="7LG8"/>
<dbReference type="PDBsum" id="7LGS"/>
<dbReference type="PDBsum" id="7LTX"/>
<dbReference type="PDBsum" id="7OM4"/>
<dbReference type="PDBsum" id="7OXB"/>
<dbReference type="PDBsum" id="7SI1"/>
<dbReference type="PDBsum" id="7SYD"/>
<dbReference type="PDBsum" id="7SYE"/>
<dbReference type="PDBsum" id="7SZ0"/>
<dbReference type="PDBsum" id="7SZ1"/>
<dbReference type="PDBsum" id="7SZ5"/>
<dbReference type="PDBsum" id="7SZ7"/>
<dbReference type="PDBsum" id="7T4I"/>
<dbReference type="PDBsum" id="7T4J"/>
<dbReference type="PDBsum" id="7TVD"/>
<dbReference type="PDBsum" id="7U98"/>
<dbReference type="PDBsum" id="7U99"/>
<dbReference type="PDBsum" id="7U9A"/>
<dbReference type="PDBsum" id="7UKV"/>
<dbReference type="PDBsum" id="7UKW"/>
<dbReference type="PDBsum" id="7VRA"/>
<dbReference type="PDBsum" id="7VRE"/>
<dbReference type="PDBsum" id="7ZYM"/>
<dbReference type="PDBsum" id="7ZYN"/>
<dbReference type="PDBsum" id="7ZYP"/>
<dbReference type="PDBsum" id="7ZYQ"/>
<dbReference type="PDBsum" id="8A27"/>
<dbReference type="PDBsum" id="8A2A"/>
<dbReference type="PDBsum" id="8A2B"/>
<dbReference type="PDBsum" id="8A2D"/>
<dbReference type="PDBsum" id="8D73"/>
<dbReference type="PDBsum" id="8D76"/>
<dbReference type="PDBsum" id="8DSW"/>
<dbReference type="PDBsum" id="8EME"/>
<dbReference type="PDBsum" id="8F1H"/>
<dbReference type="PDBsum" id="8F1W"/>
<dbReference type="PDBsum" id="8F1X"/>
<dbReference type="PDBsum" id="8F1Y"/>
<dbReference type="PDBsum" id="8F1Z"/>
<dbReference type="PDBsum" id="8FV3"/>
<dbReference type="PDBsum" id="8FV4"/>
<dbReference type="PDBsum" id="8G63"/>
<dbReference type="PDBsum" id="8GB4"/>
<dbReference type="PDBsum" id="8GK5"/>
<dbReference type="PDBsum" id="8H7X"/>
<dbReference type="PDBsum" id="8HGO"/>
<dbReference type="PDBsum" id="8HGP"/>
<dbReference type="PDBsum" id="8HGS"/>
<dbReference type="PDBsum" id="8HV1"/>
<dbReference type="PDBsum" id="8HV2"/>
<dbReference type="PDBsum" id="8HV3"/>
<dbReference type="PDBsum" id="8HV4"/>
<dbReference type="PDBsum" id="8HV5"/>
<dbReference type="PDBsum" id="8HV6"/>
<dbReference type="PDBsum" id="8HV7"/>
<dbReference type="PDBsum" id="8HV8"/>
<dbReference type="PDBsum" id="8HV9"/>
<dbReference type="PDBsum" id="8HVA"/>
<dbReference type="PDBsum" id="8HY7"/>
<dbReference type="PDBsum" id="8KFQ"/>
<dbReference type="PDBsum" id="8PNZ"/>
<dbReference type="PDBsum" id="8PO0"/>
<dbReference type="PDBsum" id="8PO1"/>
<dbReference type="PDBsum" id="8PO2"/>
<dbReference type="PDBsum" id="8PO3"/>
<dbReference type="PDBsum" id="8PO4"/>
<dbReference type="PDBsum" id="8S1M"/>
<dbReference type="PDBsum" id="8SC7"/>
<dbReference type="PDBsum" id="8TJL"/>
<dbReference type="PDBsum" id="8TO3"/>
<dbReference type="PDBsum" id="8TO4"/>
<dbReference type="PDBsum" id="8UKV"/>
<dbReference type="PDBsum" id="8UKW"/>
<dbReference type="PDBsum" id="8UKX"/>
<dbReference type="PDBsum" id="8WD4"/>
<dbReference type="PDBsum" id="9D3V"/>
<dbReference type="PDBsum" id="9D3W"/>
<dbReference type="PDBsum" id="9EWS"/>
<dbReference type="PDBsum" id="9EWT"/>
<dbReference type="PDBsum" id="9FQP"/>
<dbReference type="PDBsum" id="9FQS"/>
<dbReference type="PDBsum" id="9FRD"/>
<dbReference type="PDBsum" id="9GC4"/>
<dbReference type="PDBsum" id="9GC5"/>
<dbReference type="PDBsum" id="9GC6"/>
<dbReference type="PDBsum" id="9GDV"/>
<dbReference type="PDBsum" id="9H46"/>
<dbReference type="PDBsum" id="9HBO"/>
<dbReference type="BMRB" id="P00533"/>
<dbReference type="EMDB" id="EMD-25522"/>
<dbReference type="EMDB" id="EMD-25523"/>
<dbReference type="EMDB" id="EMD-25558"/>
<dbReference type="EMDB" id="EMD-25559"/>
<dbReference type="EMDB" id="EMD-25561"/>
<dbReference type="EMDB" id="EMD-25563"/>
<dbReference type="EMDB" id="EMD-34744"/>
<dbReference type="EMDB" id="EMD-34745"/>
<dbReference type="EMDB" id="EMD-34746"/>
<dbReference type="SMR" id="P00533"/>
<dbReference type="BioGRID" id="108276">
    <property type="interactions" value="3207"/>
</dbReference>
<dbReference type="CORUM" id="P00533"/>
<dbReference type="DIP" id="DIP-405N"/>
<dbReference type="ELM" id="P00533"/>
<dbReference type="FunCoup" id="P00533">
    <property type="interactions" value="3104"/>
</dbReference>
<dbReference type="IntAct" id="P00533">
    <property type="interactions" value="861"/>
</dbReference>
<dbReference type="MINT" id="P00533"/>
<dbReference type="STRING" id="9606.ENSP00000275493"/>
<dbReference type="BindingDB" id="P00533"/>
<dbReference type="ChEMBL" id="CHEMBL203"/>
<dbReference type="DrugBank" id="DB15327">
    <property type="generic name" value="Abivertinib"/>
</dbReference>
<dbReference type="DrugBank" id="DB08916">
    <property type="generic name" value="Afatinib"/>
</dbReference>
<dbReference type="DrugBank" id="DB18840">
    <property type="generic name" value="Allitinib"/>
</dbReference>
<dbReference type="DrugBank" id="DB16640">
    <property type="generic name" value="Almonertinib"/>
</dbReference>
<dbReference type="DrugBank" id="DB03496">
    <property type="generic name" value="Alvocidib"/>
</dbReference>
<dbReference type="DrugBank" id="DB16695">
    <property type="generic name" value="Amivantamab"/>
</dbReference>
<dbReference type="DrugBank" id="DB06021">
    <property type="generic name" value="AV-412"/>
</dbReference>
<dbReference type="DrugBank" id="DB12318">
    <property type="generic name" value="BMS-599626"/>
</dbReference>
<dbReference type="DrugBank" id="DB11665">
    <property type="generic name" value="BMS-690514"/>
</dbReference>
<dbReference type="DrugBank" id="DB12267">
    <property type="generic name" value="Brigatinib"/>
</dbReference>
<dbReference type="DrugBank" id="DB05424">
    <property type="generic name" value="Canertinib"/>
</dbReference>
<dbReference type="DrugBank" id="DB00002">
    <property type="generic name" value="Cetuximab"/>
</dbReference>
<dbReference type="DrugBank" id="DB12174">
    <property type="generic name" value="CUDC-101"/>
</dbReference>
<dbReference type="DrugBank" id="DB11963">
    <property type="generic name" value="Dacomitinib"/>
</dbReference>
<dbReference type="DrugBank" id="DB11731">
    <property type="generic name" value="Depatuxizumab mafodotin"/>
</dbReference>
<dbReference type="DrugBank" id="DB00530">
    <property type="generic name" value="Erlotinib"/>
</dbReference>
<dbReference type="DrugBank" id="DB12966">
    <property type="generic name" value="Falnidamol"/>
</dbReference>
<dbReference type="DrugBank" id="DB10772">
    <property type="generic name" value="Foreskin keratinocyte (neonatal)"/>
</dbReference>
<dbReference type="DrugBank" id="DB12010">
    <property type="generic name" value="Fostamatinib"/>
</dbReference>
<dbReference type="DrugBank" id="DB00317">
    <property type="generic name" value="Gefitinib"/>
</dbReference>
<dbReference type="DrugBank" id="DB11737">
    <property type="generic name" value="Icotinib"/>
</dbReference>
<dbReference type="DrugBank" id="DB04988">
    <property type="generic name" value="IGN311"/>
</dbReference>
<dbReference type="DrugBank" id="DB01259">
    <property type="generic name" value="Lapatinib"/>
</dbReference>
<dbReference type="DrugBank" id="DB16768">
    <property type="generic name" value="Lavendustin A"/>
</dbReference>
<dbReference type="DrugBank" id="DB16216">
    <property type="generic name" value="Lazertinib"/>
</dbReference>
<dbReference type="DrugBank" id="DB00281">
    <property type="generic name" value="Lidocaine"/>
</dbReference>
<dbReference type="DrugBank" id="DB05101">
    <property type="generic name" value="Matuzumab"/>
</dbReference>
<dbReference type="DrugBank" id="DB06110">
    <property type="generic name" value="MDX-214"/>
</dbReference>
<dbReference type="DrugBank" id="DB04862">
    <property type="generic name" value="Merimepodib"/>
</dbReference>
<dbReference type="DrugBank" id="DB16390">
    <property type="generic name" value="Mobocertinib"/>
</dbReference>
<dbReference type="DrugBank" id="DB12682">
    <property type="generic name" value="Mubritinib"/>
</dbReference>
<dbReference type="DrugBank" id="DB08462">
    <property type="generic name" value="N-(4-PHENYLAMINO-QUINAZOLIN-6-YL)-ACRYLAMIDE"/>
</dbReference>
<dbReference type="DrugBank" id="DB12036">
    <property type="generic name" value="Naquotinib"/>
</dbReference>
<dbReference type="DrugBank" id="DB16250">
    <property type="generic name" value="Nazartinib"/>
</dbReference>
<dbReference type="DrugBank" id="DB09559">
    <property type="generic name" value="Necitumumab"/>
</dbReference>
<dbReference type="DrugBank" id="DB11828">
    <property type="generic name" value="Neratinib"/>
</dbReference>
<dbReference type="DrugBank" id="DB00727">
    <property type="generic name" value="Nitroglycerin"/>
</dbReference>
<dbReference type="DrugBank" id="DB13164">
    <property type="generic name" value="Olmutinib"/>
</dbReference>
<dbReference type="DrugBank" id="DB09330">
    <property type="generic name" value="Osimertinib"/>
</dbReference>
<dbReference type="DrugBank" id="DB01269">
    <property type="generic name" value="Panitumumab"/>
</dbReference>
<dbReference type="DrugBank" id="DB08339">
    <property type="generic name" value="PD-166326"/>
</dbReference>
<dbReference type="DrugBank" id="DB07662">
    <property type="generic name" value="PD-168393"/>
</dbReference>
<dbReference type="DrugBank" id="DB05524">
    <property type="generic name" value="Pelitinib"/>
</dbReference>
<dbReference type="DrugBank" id="DB12114">
    <property type="generic name" value="Poziotinib"/>
</dbReference>
<dbReference type="DrugBank" id="DB08052">
    <property type="generic name" value="PP-121"/>
</dbReference>
<dbReference type="DrugBank" id="DB14993">
    <property type="generic name" value="Pyrotinib"/>
</dbReference>
<dbReference type="DrugBank" id="DB05374">
    <property type="generic name" value="Rindopepimut"/>
</dbReference>
<dbReference type="DrugBank" id="DB11907">
    <property type="generic name" value="Rociletinib"/>
</dbReference>
<dbReference type="DrugBank" id="DB07602">
    <property type="generic name" value="S-{3-[(4-ANILINOQUINAZOLIN-6-YL)AMINO]-3-OXOPROPYL}-L-CYSTEINE"/>
</dbReference>
<dbReference type="DrugBank" id="DB00398">
    <property type="generic name" value="Sorafenib"/>
</dbReference>
<dbReference type="DrugBank" id="DB14944">
    <property type="generic name" value="Tarloxotinib"/>
</dbReference>
<dbReference type="DrugBank" id="DB05294">
    <property type="generic name" value="Vandetanib"/>
</dbReference>
<dbReference type="DrugBank" id="DB05944">
    <property type="generic name" value="Varlitinib"/>
</dbReference>
<dbReference type="DrugBank" id="DB04879">
    <property type="generic name" value="Vatalanib"/>
</dbReference>
<dbReference type="DrugBank" id="DB12202">
    <property type="generic name" value="Zalutumumab"/>
</dbReference>
<dbReference type="DrugBank" id="DB15035">
    <property type="generic name" value="Zanubrutinib"/>
</dbReference>
<dbReference type="DrugCentral" id="P00533"/>
<dbReference type="GuidetoPHARMACOLOGY" id="1797"/>
<dbReference type="MoonDB" id="P00533">
    <property type="type" value="Predicted"/>
</dbReference>
<dbReference type="TCDB" id="8.A.23.1.46">
    <property type="family name" value="the basigin (basigin) family"/>
</dbReference>
<dbReference type="GlyConnect" id="137">
    <property type="glycosylation" value="81 N-Linked glycans (10 sites)"/>
</dbReference>
<dbReference type="GlyCosmos" id="P00533">
    <property type="glycosylation" value="17 sites, 102 glycans"/>
</dbReference>
<dbReference type="GlyGen" id="P00533">
    <property type="glycosylation" value="29 sites, 141 N-linked glycans (18 sites), 1 O-linked glycan (6 sites)"/>
</dbReference>
<dbReference type="iPTMnet" id="P00533"/>
<dbReference type="MetOSite" id="P00533"/>
<dbReference type="PhosphoSitePlus" id="P00533"/>
<dbReference type="SwissPalm" id="P00533"/>
<dbReference type="BioMuta" id="EGFR"/>
<dbReference type="DMDM" id="2811086"/>
<dbReference type="CPTAC" id="CPTAC-1043"/>
<dbReference type="CPTAC" id="CPTAC-1560"/>
<dbReference type="CPTAC" id="CPTAC-1781"/>
<dbReference type="CPTAC" id="CPTAC-3043"/>
<dbReference type="CPTAC" id="CPTAC-3044"/>
<dbReference type="CPTAC" id="CPTAC-5784"/>
<dbReference type="CPTAC" id="CPTAC-5785"/>
<dbReference type="CPTAC" id="CPTAC-5830"/>
<dbReference type="CPTAC" id="CPTAC-5831"/>
<dbReference type="CPTAC" id="CPTAC-5832"/>
<dbReference type="CPTAC" id="CPTAC-5833"/>
<dbReference type="CPTAC" id="CPTAC-5834"/>
<dbReference type="CPTAC" id="CPTAC-5835"/>
<dbReference type="CPTAC" id="CPTAC-802"/>
<dbReference type="CPTAC" id="non-CPTAC-5380"/>
<dbReference type="CPTAC" id="non-CPTAC-5381"/>
<dbReference type="CPTAC" id="non-CPTAC-5382"/>
<dbReference type="CPTAC" id="non-CPTAC-5545"/>
<dbReference type="CPTAC" id="non-CPTAC-5546"/>
<dbReference type="CPTAC" id="non-CPTAC-5735"/>
<dbReference type="CPTAC" id="non-CPTAC-5736"/>
<dbReference type="CPTAC" id="non-CPTAC-5737"/>
<dbReference type="CPTAC" id="non-CPTAC-5738"/>
<dbReference type="jPOST" id="P00533"/>
<dbReference type="MassIVE" id="P00533"/>
<dbReference type="PaxDb" id="9606-ENSP00000275493"/>
<dbReference type="PeptideAtlas" id="P00533"/>
<dbReference type="ProteomicsDB" id="51261">
    <molecule id="P00533-1"/>
</dbReference>
<dbReference type="ProteomicsDB" id="51262">
    <molecule id="P00533-2"/>
</dbReference>
<dbReference type="ProteomicsDB" id="51263">
    <molecule id="P00533-3"/>
</dbReference>
<dbReference type="ProteomicsDB" id="51264">
    <molecule id="P00533-4"/>
</dbReference>
<dbReference type="ABCD" id="P00533">
    <property type="antibodies" value="128 sequenced antibodies"/>
</dbReference>
<dbReference type="Antibodypedia" id="718">
    <property type="antibodies" value="10740 antibodies from 66 providers"/>
</dbReference>
<dbReference type="CPTC" id="P00533">
    <property type="antibodies" value="13 antibodies"/>
</dbReference>
<dbReference type="DNASU" id="1956"/>
<dbReference type="Ensembl" id="ENST00000275493.7">
    <molecule id="P00533-1"/>
    <property type="protein sequence ID" value="ENSP00000275493.2"/>
    <property type="gene ID" value="ENSG00000146648.21"/>
</dbReference>
<dbReference type="Ensembl" id="ENST00000342916.7">
    <molecule id="P00533-4"/>
    <property type="protein sequence ID" value="ENSP00000342376.3"/>
    <property type="gene ID" value="ENSG00000146648.21"/>
</dbReference>
<dbReference type="Ensembl" id="ENST00000344576.7">
    <molecule id="P00533-3"/>
    <property type="protein sequence ID" value="ENSP00000345973.2"/>
    <property type="gene ID" value="ENSG00000146648.21"/>
</dbReference>
<dbReference type="Ensembl" id="ENST00000420316.6">
    <molecule id="P00533-2"/>
    <property type="protein sequence ID" value="ENSP00000413843.2"/>
    <property type="gene ID" value="ENSG00000146648.21"/>
</dbReference>
<dbReference type="GeneID" id="1956"/>
<dbReference type="KEGG" id="hsa:1956"/>
<dbReference type="MANE-Select" id="ENST00000275493.7">
    <property type="protein sequence ID" value="ENSP00000275493.2"/>
    <property type="RefSeq nucleotide sequence ID" value="NM_005228.5"/>
    <property type="RefSeq protein sequence ID" value="NP_005219.2"/>
</dbReference>
<dbReference type="UCSC" id="uc003tqh.4">
    <molecule id="P00533-1"/>
    <property type="organism name" value="human"/>
</dbReference>
<dbReference type="AGR" id="HGNC:3236"/>
<dbReference type="CTD" id="1956"/>
<dbReference type="DisGeNET" id="1956"/>
<dbReference type="GeneCards" id="EGFR"/>
<dbReference type="HGNC" id="HGNC:3236">
    <property type="gene designation" value="EGFR"/>
</dbReference>
<dbReference type="HPA" id="ENSG00000146648">
    <property type="expression patterns" value="Tissue enhanced (placenta)"/>
</dbReference>
<dbReference type="MalaCards" id="EGFR"/>
<dbReference type="MIM" id="131550">
    <property type="type" value="gene"/>
</dbReference>
<dbReference type="MIM" id="211980">
    <property type="type" value="phenotype"/>
</dbReference>
<dbReference type="MIM" id="616069">
    <property type="type" value="phenotype"/>
</dbReference>
<dbReference type="neXtProt" id="NX_P00533"/>
<dbReference type="OpenTargets" id="ENSG00000146648"/>
<dbReference type="Orphanet" id="251579">
    <property type="disease" value="Giant cell glioblastoma"/>
</dbReference>
<dbReference type="Orphanet" id="251576">
    <property type="disease" value="Gliosarcoma"/>
</dbReference>
<dbReference type="Orphanet" id="294023">
    <property type="disease" value="Neonatal inflammatory skin and bowel disease"/>
</dbReference>
<dbReference type="PharmGKB" id="PA7360"/>
<dbReference type="VEuPathDB" id="HostDB:ENSG00000146648"/>
<dbReference type="eggNOG" id="KOG1025">
    <property type="taxonomic scope" value="Eukaryota"/>
</dbReference>
<dbReference type="GeneTree" id="ENSGT00940000155450"/>
<dbReference type="HOGENOM" id="CLU_003384_0_2_1"/>
<dbReference type="InParanoid" id="P00533"/>
<dbReference type="OMA" id="GYYYEWV"/>
<dbReference type="OrthoDB" id="6219513at2759"/>
<dbReference type="PAN-GO" id="P00533">
    <property type="GO annotations" value="11 GO annotations based on evolutionary models"/>
</dbReference>
<dbReference type="PhylomeDB" id="P00533"/>
<dbReference type="TreeFam" id="TF106002"/>
<dbReference type="BRENDA" id="2.7.10.1">
    <property type="organism ID" value="2681"/>
</dbReference>
<dbReference type="PathwayCommons" id="P00533"/>
<dbReference type="Reactome" id="R-HSA-1227986">
    <property type="pathway name" value="Signaling by ERBB2"/>
</dbReference>
<dbReference type="Reactome" id="R-HSA-1236382">
    <property type="pathway name" value="Constitutive Signaling by Ligand-Responsive EGFR Cancer Variants"/>
</dbReference>
<dbReference type="Reactome" id="R-HSA-1236394">
    <property type="pathway name" value="Signaling by ERBB4"/>
</dbReference>
<dbReference type="Reactome" id="R-HSA-1250196">
    <property type="pathway name" value="SHC1 events in ERBB2 signaling"/>
</dbReference>
<dbReference type="Reactome" id="R-HSA-1251932">
    <property type="pathway name" value="PLCG1 events in ERBB2 signaling"/>
</dbReference>
<dbReference type="Reactome" id="R-HSA-1257604">
    <property type="pathway name" value="PIP3 activates AKT signaling"/>
</dbReference>
<dbReference type="Reactome" id="R-HSA-177929">
    <property type="pathway name" value="Signaling by EGFR"/>
</dbReference>
<dbReference type="Reactome" id="R-HSA-179812">
    <property type="pathway name" value="GRB2 events in EGFR signaling"/>
</dbReference>
<dbReference type="Reactome" id="R-HSA-180292">
    <property type="pathway name" value="GAB1 signalosome"/>
</dbReference>
<dbReference type="Reactome" id="R-HSA-180336">
    <property type="pathway name" value="SHC1 events in EGFR signaling"/>
</dbReference>
<dbReference type="Reactome" id="R-HSA-182971">
    <property type="pathway name" value="EGFR downregulation"/>
</dbReference>
<dbReference type="Reactome" id="R-HSA-1963640">
    <property type="pathway name" value="GRB2 events in ERBB2 signaling"/>
</dbReference>
<dbReference type="Reactome" id="R-HSA-1963642">
    <property type="pathway name" value="PI3K events in ERBB2 signaling"/>
</dbReference>
<dbReference type="Reactome" id="R-HSA-212718">
    <property type="pathway name" value="EGFR interacts with phospholipase C-gamma"/>
</dbReference>
<dbReference type="Reactome" id="R-HSA-2179392">
    <property type="pathway name" value="EGFR Transactivation by Gastrin"/>
</dbReference>
<dbReference type="Reactome" id="R-HSA-2219530">
    <property type="pathway name" value="Constitutive Signaling by Aberrant PI3K in Cancer"/>
</dbReference>
<dbReference type="Reactome" id="R-HSA-445144">
    <property type="pathway name" value="Signal transduction by L1"/>
</dbReference>
<dbReference type="Reactome" id="R-HSA-5637810">
    <property type="pathway name" value="Constitutive Signaling by EGFRvIII"/>
</dbReference>
<dbReference type="Reactome" id="R-HSA-5638303">
    <property type="pathway name" value="Inhibition of Signaling by Overexpressed EGFR"/>
</dbReference>
<dbReference type="Reactome" id="R-HSA-5673001">
    <property type="pathway name" value="RAF/MAP kinase cascade"/>
</dbReference>
<dbReference type="Reactome" id="R-HSA-6785631">
    <property type="pathway name" value="ERBB2 Regulates Cell Motility"/>
</dbReference>
<dbReference type="Reactome" id="R-HSA-6811558">
    <property type="pathway name" value="PI5P, PP2A and IER3 Regulate PI3K/AKT Signaling"/>
</dbReference>
<dbReference type="Reactome" id="R-HSA-8847993">
    <property type="pathway name" value="ERBB2 Activates PTK6 Signaling"/>
</dbReference>
<dbReference type="Reactome" id="R-HSA-8856825">
    <property type="pathway name" value="Cargo recognition for clathrin-mediated endocytosis"/>
</dbReference>
<dbReference type="Reactome" id="R-HSA-8856828">
    <property type="pathway name" value="Clathrin-mediated endocytosis"/>
</dbReference>
<dbReference type="Reactome" id="R-HSA-8857538">
    <property type="pathway name" value="PTK6 promotes HIF1A stabilization"/>
</dbReference>
<dbReference type="Reactome" id="R-HSA-8863795">
    <property type="pathway name" value="Downregulation of ERBB2 signaling"/>
</dbReference>
<dbReference type="Reactome" id="R-HSA-8866910">
    <property type="pathway name" value="TFAP2 (AP-2) family regulates transcription of growth factors and their receptors"/>
</dbReference>
<dbReference type="Reactome" id="R-HSA-9009391">
    <property type="pathway name" value="Extra-nuclear estrogen signaling"/>
</dbReference>
<dbReference type="Reactome" id="R-HSA-9013507">
    <property type="pathway name" value="NOTCH3 Activation and Transmission of Signal to the Nucleus"/>
</dbReference>
<dbReference type="Reactome" id="R-HSA-9609690">
    <property type="pathway name" value="HCMV Early Events"/>
</dbReference>
<dbReference type="Reactome" id="R-HSA-9634638">
    <property type="pathway name" value="Estrogen-dependent nuclear events downstream of ESR-membrane signaling"/>
</dbReference>
<dbReference type="Reactome" id="R-HSA-9664565">
    <property type="pathway name" value="Signaling by ERBB2 KD Mutants"/>
</dbReference>
<dbReference type="Reactome" id="R-HSA-9665348">
    <property type="pathway name" value="Signaling by ERBB2 ECD mutants"/>
</dbReference>
<dbReference type="Reactome" id="R-HSA-9665686">
    <property type="pathway name" value="Signaling by ERBB2 TMD/JMD mutants"/>
</dbReference>
<dbReference type="Reactome" id="R-HSA-9820960">
    <property type="pathway name" value="Respiratory syncytial virus (RSV) attachment and entry"/>
</dbReference>
<dbReference type="SignaLink" id="P00533"/>
<dbReference type="SIGNOR" id="P00533"/>
<dbReference type="BioGRID-ORCS" id="1956">
    <property type="hits" value="155 hits in 1222 CRISPR screens"/>
</dbReference>
<dbReference type="ChiTaRS" id="EGFR">
    <property type="organism name" value="human"/>
</dbReference>
<dbReference type="EvolutionaryTrace" id="P00533"/>
<dbReference type="GeneWiki" id="Epidermal_growth_factor_receptor"/>
<dbReference type="GenomeRNAi" id="1956"/>
<dbReference type="Pharos" id="P00533">
    <property type="development level" value="Tclin"/>
</dbReference>
<dbReference type="PRO" id="PR:P00533"/>
<dbReference type="Proteomes" id="UP000005640">
    <property type="component" value="Chromosome 7"/>
</dbReference>
<dbReference type="RNAct" id="P00533">
    <property type="molecule type" value="protein"/>
</dbReference>
<dbReference type="Bgee" id="ENSG00000146648">
    <property type="expression patterns" value="Expressed in nipple and 206 other cell types or tissues"/>
</dbReference>
<dbReference type="ExpressionAtlas" id="P00533">
    <property type="expression patterns" value="baseline and differential"/>
</dbReference>
<dbReference type="GO" id="GO:0009925">
    <property type="term" value="C:basal plasma membrane"/>
    <property type="evidence" value="ECO:0000318"/>
    <property type="project" value="GO_Central"/>
</dbReference>
<dbReference type="GO" id="GO:0016323">
    <property type="term" value="C:basolateral plasma membrane"/>
    <property type="evidence" value="ECO:0000314"/>
    <property type="project" value="BHF-UCL"/>
</dbReference>
<dbReference type="GO" id="GO:0030054">
    <property type="term" value="C:cell junction"/>
    <property type="evidence" value="ECO:0000314"/>
    <property type="project" value="HPA"/>
</dbReference>
<dbReference type="GO" id="GO:0009986">
    <property type="term" value="C:cell surface"/>
    <property type="evidence" value="ECO:0000314"/>
    <property type="project" value="UniProtKB"/>
</dbReference>
<dbReference type="GO" id="GO:0036064">
    <property type="term" value="C:ciliary basal body"/>
    <property type="evidence" value="ECO:0000314"/>
    <property type="project" value="HPA"/>
</dbReference>
<dbReference type="GO" id="GO:0005929">
    <property type="term" value="C:cilium"/>
    <property type="evidence" value="ECO:0000314"/>
    <property type="project" value="HPA"/>
</dbReference>
<dbReference type="GO" id="GO:0030669">
    <property type="term" value="C:clathrin-coated endocytic vesicle membrane"/>
    <property type="evidence" value="ECO:0000304"/>
    <property type="project" value="Reactome"/>
</dbReference>
<dbReference type="GO" id="GO:0005737">
    <property type="term" value="C:cytoplasm"/>
    <property type="evidence" value="ECO:0000314"/>
    <property type="project" value="UniProtKB"/>
</dbReference>
<dbReference type="GO" id="GO:0005829">
    <property type="term" value="C:cytosol"/>
    <property type="evidence" value="ECO:0000314"/>
    <property type="project" value="HPA"/>
</dbReference>
<dbReference type="GO" id="GO:0031901">
    <property type="term" value="C:early endosome membrane"/>
    <property type="evidence" value="ECO:0000314"/>
    <property type="project" value="UniProtKB"/>
</dbReference>
<dbReference type="GO" id="GO:0005789">
    <property type="term" value="C:endoplasmic reticulum membrane"/>
    <property type="evidence" value="ECO:0007669"/>
    <property type="project" value="UniProtKB-SubCell"/>
</dbReference>
<dbReference type="GO" id="GO:0005768">
    <property type="term" value="C:endosome"/>
    <property type="evidence" value="ECO:0000314"/>
    <property type="project" value="UniProtKB"/>
</dbReference>
<dbReference type="GO" id="GO:0010008">
    <property type="term" value="C:endosome membrane"/>
    <property type="evidence" value="ECO:0000314"/>
    <property type="project" value="UniProtKB"/>
</dbReference>
<dbReference type="GO" id="GO:0005615">
    <property type="term" value="C:extracellular space"/>
    <property type="evidence" value="ECO:0000303"/>
    <property type="project" value="UniProtKB"/>
</dbReference>
<dbReference type="GO" id="GO:0005925">
    <property type="term" value="C:focal adhesion"/>
    <property type="evidence" value="ECO:0007005"/>
    <property type="project" value="UniProtKB"/>
</dbReference>
<dbReference type="GO" id="GO:0005794">
    <property type="term" value="C:Golgi apparatus"/>
    <property type="evidence" value="ECO:0000314"/>
    <property type="project" value="HPA"/>
</dbReference>
<dbReference type="GO" id="GO:0000139">
    <property type="term" value="C:Golgi membrane"/>
    <property type="evidence" value="ECO:0007669"/>
    <property type="project" value="UniProtKB-SubCell"/>
</dbReference>
<dbReference type="GO" id="GO:0097708">
    <property type="term" value="C:intracellular vesicle"/>
    <property type="evidence" value="ECO:0000314"/>
    <property type="project" value="ARUK-UCL"/>
</dbReference>
<dbReference type="GO" id="GO:0016020">
    <property type="term" value="C:membrane"/>
    <property type="evidence" value="ECO:0000314"/>
    <property type="project" value="UniProtKB"/>
</dbReference>
<dbReference type="GO" id="GO:0045121">
    <property type="term" value="C:membrane raft"/>
    <property type="evidence" value="ECO:0000314"/>
    <property type="project" value="UniProtKB"/>
</dbReference>
<dbReference type="GO" id="GO:0097489">
    <property type="term" value="C:multivesicular body, internal vesicle lumen"/>
    <property type="evidence" value="ECO:0000314"/>
    <property type="project" value="UniProtKB"/>
</dbReference>
<dbReference type="GO" id="GO:0031965">
    <property type="term" value="C:nuclear membrane"/>
    <property type="evidence" value="ECO:0007669"/>
    <property type="project" value="UniProtKB-SubCell"/>
</dbReference>
<dbReference type="GO" id="GO:0005634">
    <property type="term" value="C:nucleus"/>
    <property type="evidence" value="ECO:0000314"/>
    <property type="project" value="UniProtKB"/>
</dbReference>
<dbReference type="GO" id="GO:0048471">
    <property type="term" value="C:perinuclear region of cytoplasm"/>
    <property type="evidence" value="ECO:0000315"/>
    <property type="project" value="ARUK-UCL"/>
</dbReference>
<dbReference type="GO" id="GO:0005886">
    <property type="term" value="C:plasma membrane"/>
    <property type="evidence" value="ECO:0000314"/>
    <property type="project" value="HPA"/>
</dbReference>
<dbReference type="GO" id="GO:0032991">
    <property type="term" value="C:protein-containing complex"/>
    <property type="evidence" value="ECO:0000314"/>
    <property type="project" value="UniProtKB"/>
</dbReference>
<dbReference type="GO" id="GO:0043235">
    <property type="term" value="C:receptor complex"/>
    <property type="evidence" value="ECO:0000314"/>
    <property type="project" value="MGI"/>
</dbReference>
<dbReference type="GO" id="GO:0032587">
    <property type="term" value="C:ruffle membrane"/>
    <property type="evidence" value="ECO:0000314"/>
    <property type="project" value="ARUK-UCL"/>
</dbReference>
<dbReference type="GO" id="GO:0070435">
    <property type="term" value="C:Shc-EGFR complex"/>
    <property type="evidence" value="ECO:0000250"/>
    <property type="project" value="BHF-UCL"/>
</dbReference>
<dbReference type="GO" id="GO:0051015">
    <property type="term" value="F:actin filament binding"/>
    <property type="evidence" value="ECO:0000314"/>
    <property type="project" value="UniProtKB"/>
</dbReference>
<dbReference type="GO" id="GO:0005524">
    <property type="term" value="F:ATP binding"/>
    <property type="evidence" value="ECO:0007669"/>
    <property type="project" value="UniProtKB-KW"/>
</dbReference>
<dbReference type="GO" id="GO:0051117">
    <property type="term" value="F:ATPase binding"/>
    <property type="evidence" value="ECO:0000250"/>
    <property type="project" value="ARUK-UCL"/>
</dbReference>
<dbReference type="GO" id="GO:0045296">
    <property type="term" value="F:cadherin binding"/>
    <property type="evidence" value="ECO:0007005"/>
    <property type="project" value="BHF-UCL"/>
</dbReference>
<dbReference type="GO" id="GO:0003682">
    <property type="term" value="F:chromatin binding"/>
    <property type="evidence" value="ECO:0000314"/>
    <property type="project" value="UniProtKB"/>
</dbReference>
<dbReference type="GO" id="GO:0003690">
    <property type="term" value="F:double-stranded DNA binding"/>
    <property type="evidence" value="ECO:0000303"/>
    <property type="project" value="UniProtKB"/>
</dbReference>
<dbReference type="GO" id="GO:0019899">
    <property type="term" value="F:enzyme binding"/>
    <property type="evidence" value="ECO:0000353"/>
    <property type="project" value="UniProtKB"/>
</dbReference>
<dbReference type="GO" id="GO:0048408">
    <property type="term" value="F:epidermal growth factor binding"/>
    <property type="evidence" value="ECO:0000318"/>
    <property type="project" value="GO_Central"/>
</dbReference>
<dbReference type="GO" id="GO:0005006">
    <property type="term" value="F:epidermal growth factor receptor activity"/>
    <property type="evidence" value="ECO:0000314"/>
    <property type="project" value="UniProtKB"/>
</dbReference>
<dbReference type="GO" id="GO:0042802">
    <property type="term" value="F:identical protein binding"/>
    <property type="evidence" value="ECO:0000353"/>
    <property type="project" value="IntAct"/>
</dbReference>
<dbReference type="GO" id="GO:0019900">
    <property type="term" value="F:kinase binding"/>
    <property type="evidence" value="ECO:0000353"/>
    <property type="project" value="UniProtKB"/>
</dbReference>
<dbReference type="GO" id="GO:0004709">
    <property type="term" value="F:MAP kinase kinase kinase activity"/>
    <property type="evidence" value="ECO:0000303"/>
    <property type="project" value="UniProtKB"/>
</dbReference>
<dbReference type="GO" id="GO:0019903">
    <property type="term" value="F:protein phosphatase binding"/>
    <property type="evidence" value="ECO:0000353"/>
    <property type="project" value="UniProtKB"/>
</dbReference>
<dbReference type="GO" id="GO:0030296">
    <property type="term" value="F:protein tyrosine kinase activator activity"/>
    <property type="evidence" value="ECO:0000314"/>
    <property type="project" value="MGI"/>
</dbReference>
<dbReference type="GO" id="GO:0004713">
    <property type="term" value="F:protein tyrosine kinase activity"/>
    <property type="evidence" value="ECO:0000314"/>
    <property type="project" value="UniProtKB"/>
</dbReference>
<dbReference type="GO" id="GO:0004714">
    <property type="term" value="F:transmembrane receptor protein tyrosine kinase activity"/>
    <property type="evidence" value="ECO:0000318"/>
    <property type="project" value="GO_Central"/>
</dbReference>
<dbReference type="GO" id="GO:0004888">
    <property type="term" value="F:transmembrane signaling receptor activity"/>
    <property type="evidence" value="ECO:0000314"/>
    <property type="project" value="MGI"/>
</dbReference>
<dbReference type="GO" id="GO:0031625">
    <property type="term" value="F:ubiquitin protein ligase binding"/>
    <property type="evidence" value="ECO:0000353"/>
    <property type="project" value="UniProtKB"/>
</dbReference>
<dbReference type="GO" id="GO:0001618">
    <property type="term" value="F:virus receptor activity"/>
    <property type="evidence" value="ECO:0007669"/>
    <property type="project" value="UniProtKB-KW"/>
</dbReference>
<dbReference type="GO" id="GO:0000902">
    <property type="term" value="P:cell morphogenesis"/>
    <property type="evidence" value="ECO:0007669"/>
    <property type="project" value="Ensembl"/>
</dbReference>
<dbReference type="GO" id="GO:0007166">
    <property type="term" value="P:cell surface receptor signaling pathway"/>
    <property type="evidence" value="ECO:0000314"/>
    <property type="project" value="MGI"/>
</dbReference>
<dbReference type="GO" id="GO:0098609">
    <property type="term" value="P:cell-cell adhesion"/>
    <property type="evidence" value="ECO:0000315"/>
    <property type="project" value="UniProtKB"/>
</dbReference>
<dbReference type="GO" id="GO:0071230">
    <property type="term" value="P:cellular response to amino acid stimulus"/>
    <property type="evidence" value="ECO:0007669"/>
    <property type="project" value="Ensembl"/>
</dbReference>
<dbReference type="GO" id="GO:0071364">
    <property type="term" value="P:cellular response to epidermal growth factor stimulus"/>
    <property type="evidence" value="ECO:0000250"/>
    <property type="project" value="UniProtKB"/>
</dbReference>
<dbReference type="GO" id="GO:0071392">
    <property type="term" value="P:cellular response to estradiol stimulus"/>
    <property type="evidence" value="ECO:0000314"/>
    <property type="project" value="UniProtKB"/>
</dbReference>
<dbReference type="GO" id="GO:0021795">
    <property type="term" value="P:cerebral cortex cell migration"/>
    <property type="evidence" value="ECO:0007669"/>
    <property type="project" value="Ensembl"/>
</dbReference>
<dbReference type="GO" id="GO:0048546">
    <property type="term" value="P:digestive tract morphogenesis"/>
    <property type="evidence" value="ECO:0007669"/>
    <property type="project" value="Ensembl"/>
</dbReference>
<dbReference type="GO" id="GO:0001892">
    <property type="term" value="P:embryonic placenta development"/>
    <property type="evidence" value="ECO:0007669"/>
    <property type="project" value="Ensembl"/>
</dbReference>
<dbReference type="GO" id="GO:0007173">
    <property type="term" value="P:epidermal growth factor receptor signaling pathway"/>
    <property type="evidence" value="ECO:0000314"/>
    <property type="project" value="UniProtKB"/>
</dbReference>
<dbReference type="GO" id="GO:0050673">
    <property type="term" value="P:epithelial cell proliferation"/>
    <property type="evidence" value="ECO:0007669"/>
    <property type="project" value="Ensembl"/>
</dbReference>
<dbReference type="GO" id="GO:0038134">
    <property type="term" value="P:ERBB2-EGFR signaling pathway"/>
    <property type="evidence" value="ECO:0000314"/>
    <property type="project" value="MGI"/>
</dbReference>
<dbReference type="GO" id="GO:0061029">
    <property type="term" value="P:eyelid development in camera-type eye"/>
    <property type="evidence" value="ECO:0007669"/>
    <property type="project" value="Ensembl"/>
</dbReference>
<dbReference type="GO" id="GO:0001942">
    <property type="term" value="P:hair follicle development"/>
    <property type="evidence" value="ECO:0007669"/>
    <property type="project" value="Ensembl"/>
</dbReference>
<dbReference type="GO" id="GO:0007611">
    <property type="term" value="P:learning or memory"/>
    <property type="evidence" value="ECO:0000250"/>
    <property type="project" value="UniProtKB"/>
</dbReference>
<dbReference type="GO" id="GO:0060571">
    <property type="term" value="P:morphogenesis of an epithelial fold"/>
    <property type="evidence" value="ECO:0007669"/>
    <property type="project" value="Ensembl"/>
</dbReference>
<dbReference type="GO" id="GO:0043066">
    <property type="term" value="P:negative regulation of apoptotic process"/>
    <property type="evidence" value="ECO:0000315"/>
    <property type="project" value="UniProtKB"/>
</dbReference>
<dbReference type="GO" id="GO:1905208">
    <property type="term" value="P:negative regulation of cardiocyte differentiation"/>
    <property type="evidence" value="ECO:0000315"/>
    <property type="project" value="BHF-UCL"/>
</dbReference>
<dbReference type="GO" id="GO:0042059">
    <property type="term" value="P:negative regulation of epidermal growth factor receptor signaling pathway"/>
    <property type="evidence" value="ECO:0000304"/>
    <property type="project" value="Reactome"/>
</dbReference>
<dbReference type="GO" id="GO:0042177">
    <property type="term" value="P:negative regulation of protein catabolic process"/>
    <property type="evidence" value="ECO:0000314"/>
    <property type="project" value="UniProtKB"/>
</dbReference>
<dbReference type="GO" id="GO:0030182">
    <property type="term" value="P:neuron differentiation"/>
    <property type="evidence" value="ECO:0000318"/>
    <property type="project" value="GO_Central"/>
</dbReference>
<dbReference type="GO" id="GO:0001503">
    <property type="term" value="P:ossification"/>
    <property type="evidence" value="ECO:0000303"/>
    <property type="project" value="UniProtKB"/>
</dbReference>
<dbReference type="GO" id="GO:0043491">
    <property type="term" value="P:phosphatidylinositol 3-kinase/protein kinase B signal transduction"/>
    <property type="evidence" value="ECO:0000315"/>
    <property type="project" value="BHF-UCL"/>
</dbReference>
<dbReference type="GO" id="GO:0090263">
    <property type="term" value="P:positive regulation of canonical Wnt signaling pathway"/>
    <property type="evidence" value="ECO:0000315"/>
    <property type="project" value="BHF-UCL"/>
</dbReference>
<dbReference type="GO" id="GO:0030307">
    <property type="term" value="P:positive regulation of cell growth"/>
    <property type="evidence" value="ECO:0000314"/>
    <property type="project" value="UniProtKB"/>
</dbReference>
<dbReference type="GO" id="GO:0030335">
    <property type="term" value="P:positive regulation of cell migration"/>
    <property type="evidence" value="ECO:0000315"/>
    <property type="project" value="UniProtKB"/>
</dbReference>
<dbReference type="GO" id="GO:0008284">
    <property type="term" value="P:positive regulation of cell population proliferation"/>
    <property type="evidence" value="ECO:0000314"/>
    <property type="project" value="MGI"/>
</dbReference>
<dbReference type="GO" id="GO:0045739">
    <property type="term" value="P:positive regulation of DNA repair"/>
    <property type="evidence" value="ECO:0000314"/>
    <property type="project" value="UniProtKB"/>
</dbReference>
<dbReference type="GO" id="GO:0045740">
    <property type="term" value="P:positive regulation of DNA replication"/>
    <property type="evidence" value="ECO:0000314"/>
    <property type="project" value="UniProtKB"/>
</dbReference>
<dbReference type="GO" id="GO:0050679">
    <property type="term" value="P:positive regulation of epithelial cell proliferation"/>
    <property type="evidence" value="ECO:0000314"/>
    <property type="project" value="UniProtKB"/>
</dbReference>
<dbReference type="GO" id="GO:0070374">
    <property type="term" value="P:positive regulation of ERK1 and ERK2 cascade"/>
    <property type="evidence" value="ECO:0000314"/>
    <property type="project" value="UniProtKB"/>
</dbReference>
<dbReference type="GO" id="GO:0048146">
    <property type="term" value="P:positive regulation of fibroblast proliferation"/>
    <property type="evidence" value="ECO:0007669"/>
    <property type="project" value="Ensembl"/>
</dbReference>
<dbReference type="GO" id="GO:1900087">
    <property type="term" value="P:positive regulation of G1/S transition of mitotic cell cycle"/>
    <property type="evidence" value="ECO:0000315"/>
    <property type="project" value="BHF-UCL"/>
</dbReference>
<dbReference type="GO" id="GO:0043410">
    <property type="term" value="P:positive regulation of MAPK cascade"/>
    <property type="evidence" value="ECO:0000314"/>
    <property type="project" value="ARUK-UCL"/>
</dbReference>
<dbReference type="GO" id="GO:1902895">
    <property type="term" value="P:positive regulation of miRNA transcription"/>
    <property type="evidence" value="ECO:0000315"/>
    <property type="project" value="BHF-UCL"/>
</dbReference>
<dbReference type="GO" id="GO:0033138">
    <property type="term" value="P:positive regulation of peptidyl-serine phosphorylation"/>
    <property type="evidence" value="ECO:0000315"/>
    <property type="project" value="UniProtKB"/>
</dbReference>
<dbReference type="GO" id="GO:0051897">
    <property type="term" value="P:positive regulation of phosphatidylinositol 3-kinase/protein kinase B signal transduction"/>
    <property type="evidence" value="ECO:0000315"/>
    <property type="project" value="BHF-UCL"/>
</dbReference>
<dbReference type="GO" id="GO:0042327">
    <property type="term" value="P:positive regulation of phosphorylation"/>
    <property type="evidence" value="ECO:0000314"/>
    <property type="project" value="UniProtKB"/>
</dbReference>
<dbReference type="GO" id="GO:0090037">
    <property type="term" value="P:positive regulation of protein kinase C signaling"/>
    <property type="evidence" value="ECO:0000314"/>
    <property type="project" value="ParkinsonsUK-UCL"/>
</dbReference>
<dbReference type="GO" id="GO:1903078">
    <property type="term" value="P:positive regulation of protein localization to plasma membrane"/>
    <property type="evidence" value="ECO:0000314"/>
    <property type="project" value="ParkinsonsUK-UCL"/>
</dbReference>
<dbReference type="GO" id="GO:0001934">
    <property type="term" value="P:positive regulation of protein phosphorylation"/>
    <property type="evidence" value="ECO:0000314"/>
    <property type="project" value="UniProtKB"/>
</dbReference>
<dbReference type="GO" id="GO:0045944">
    <property type="term" value="P:positive regulation of transcription by RNA polymerase II"/>
    <property type="evidence" value="ECO:0000314"/>
    <property type="project" value="UniProtKB"/>
</dbReference>
<dbReference type="GO" id="GO:0051205">
    <property type="term" value="P:protein insertion into membrane"/>
    <property type="evidence" value="ECO:0000304"/>
    <property type="project" value="UniProtKB"/>
</dbReference>
<dbReference type="GO" id="GO:0050730">
    <property type="term" value="P:regulation of peptidyl-tyrosine phosphorylation"/>
    <property type="evidence" value="ECO:0000315"/>
    <property type="project" value="UniProtKB"/>
</dbReference>
<dbReference type="GO" id="GO:0070141">
    <property type="term" value="P:response to UV-A"/>
    <property type="evidence" value="ECO:0000314"/>
    <property type="project" value="BHF-UCL"/>
</dbReference>
<dbReference type="GO" id="GO:0007435">
    <property type="term" value="P:salivary gland morphogenesis"/>
    <property type="evidence" value="ECO:0007669"/>
    <property type="project" value="Ensembl"/>
</dbReference>
<dbReference type="GO" id="GO:0007165">
    <property type="term" value="P:signal transduction"/>
    <property type="evidence" value="ECO:0000314"/>
    <property type="project" value="UniProtKB"/>
</dbReference>
<dbReference type="CDD" id="cd00064">
    <property type="entry name" value="FU"/>
    <property type="match status" value="3"/>
</dbReference>
<dbReference type="CDD" id="cd05108">
    <property type="entry name" value="PTKc_EGFR"/>
    <property type="match status" value="1"/>
</dbReference>
<dbReference type="CDD" id="cd12093">
    <property type="entry name" value="TM_ErbB1"/>
    <property type="match status" value="1"/>
</dbReference>
<dbReference type="FunFam" id="1.10.510.10:FF:000027">
    <property type="entry name" value="Receptor protein-tyrosine kinase"/>
    <property type="match status" value="1"/>
</dbReference>
<dbReference type="FunFam" id="2.10.220.10:FF:000001">
    <property type="entry name" value="Receptor protein-tyrosine kinase"/>
    <property type="match status" value="1"/>
</dbReference>
<dbReference type="FunFam" id="2.10.220.10:FF:000008">
    <property type="entry name" value="Receptor protein-tyrosine kinase"/>
    <property type="match status" value="1"/>
</dbReference>
<dbReference type="FunFam" id="3.30.200.20:FF:000044">
    <property type="entry name" value="Receptor protein-tyrosine kinase"/>
    <property type="match status" value="1"/>
</dbReference>
<dbReference type="FunFam" id="3.80.20.20:FF:000005">
    <property type="entry name" value="Receptor protein-tyrosine kinase"/>
    <property type="match status" value="1"/>
</dbReference>
<dbReference type="FunFam" id="3.80.20.20:FF:000006">
    <property type="entry name" value="Receptor protein-tyrosine kinase"/>
    <property type="match status" value="1"/>
</dbReference>
<dbReference type="Gene3D" id="2.10.220.10">
    <property type="entry name" value="Hormone Receptor, Insulin-like Growth Factor Receptor 1, Chain A, domain 2"/>
    <property type="match status" value="3"/>
</dbReference>
<dbReference type="Gene3D" id="1.20.5.420">
    <property type="entry name" value="Immunoglobulin FC, subunit C"/>
    <property type="match status" value="1"/>
</dbReference>
<dbReference type="Gene3D" id="3.30.200.20">
    <property type="entry name" value="Phosphorylase Kinase, domain 1"/>
    <property type="match status" value="1"/>
</dbReference>
<dbReference type="Gene3D" id="3.80.20.20">
    <property type="entry name" value="Receptor L-domain"/>
    <property type="match status" value="2"/>
</dbReference>
<dbReference type="Gene3D" id="1.10.510.10">
    <property type="entry name" value="Transferase(Phosphotransferase) domain 1"/>
    <property type="match status" value="1"/>
</dbReference>
<dbReference type="IDEAL" id="IID00262"/>
<dbReference type="InterPro" id="IPR006211">
    <property type="entry name" value="Furin-like_Cys-rich_dom"/>
</dbReference>
<dbReference type="InterPro" id="IPR006212">
    <property type="entry name" value="Furin_repeat"/>
</dbReference>
<dbReference type="InterPro" id="IPR032778">
    <property type="entry name" value="GF_recep_IV"/>
</dbReference>
<dbReference type="InterPro" id="IPR009030">
    <property type="entry name" value="Growth_fac_rcpt_cys_sf"/>
</dbReference>
<dbReference type="InterPro" id="IPR011009">
    <property type="entry name" value="Kinase-like_dom_sf"/>
</dbReference>
<dbReference type="InterPro" id="IPR000719">
    <property type="entry name" value="Prot_kinase_dom"/>
</dbReference>
<dbReference type="InterPro" id="IPR017441">
    <property type="entry name" value="Protein_kinase_ATP_BS"/>
</dbReference>
<dbReference type="InterPro" id="IPR000494">
    <property type="entry name" value="Rcpt_L-dom"/>
</dbReference>
<dbReference type="InterPro" id="IPR036941">
    <property type="entry name" value="Rcpt_L-dom_sf"/>
</dbReference>
<dbReference type="InterPro" id="IPR050122">
    <property type="entry name" value="RTK"/>
</dbReference>
<dbReference type="InterPro" id="IPR001245">
    <property type="entry name" value="Ser-Thr/Tyr_kinase_cat_dom"/>
</dbReference>
<dbReference type="InterPro" id="IPR049328">
    <property type="entry name" value="TM_ErbB1"/>
</dbReference>
<dbReference type="InterPro" id="IPR008266">
    <property type="entry name" value="Tyr_kinase_AS"/>
</dbReference>
<dbReference type="InterPro" id="IPR020635">
    <property type="entry name" value="Tyr_kinase_cat_dom"/>
</dbReference>
<dbReference type="InterPro" id="IPR016245">
    <property type="entry name" value="Tyr_kinase_EGF/ERB/XmrK_rcpt"/>
</dbReference>
<dbReference type="PANTHER" id="PTHR24416:SF91">
    <property type="entry name" value="EPIDERMAL GROWTH FACTOR RECEPTOR"/>
    <property type="match status" value="1"/>
</dbReference>
<dbReference type="PANTHER" id="PTHR24416">
    <property type="entry name" value="TYROSINE-PROTEIN KINASE RECEPTOR"/>
    <property type="match status" value="1"/>
</dbReference>
<dbReference type="Pfam" id="PF00757">
    <property type="entry name" value="Furin-like"/>
    <property type="match status" value="1"/>
</dbReference>
<dbReference type="Pfam" id="PF14843">
    <property type="entry name" value="GF_recep_IV"/>
    <property type="match status" value="1"/>
</dbReference>
<dbReference type="Pfam" id="PF07714">
    <property type="entry name" value="PK_Tyr_Ser-Thr"/>
    <property type="match status" value="1"/>
</dbReference>
<dbReference type="Pfam" id="PF01030">
    <property type="entry name" value="Recep_L_domain"/>
    <property type="match status" value="2"/>
</dbReference>
<dbReference type="Pfam" id="PF21314">
    <property type="entry name" value="TM_ErbB1"/>
    <property type="match status" value="1"/>
</dbReference>
<dbReference type="PIRSF" id="PIRSF000619">
    <property type="entry name" value="TyrPK_EGF-R"/>
    <property type="match status" value="1"/>
</dbReference>
<dbReference type="PRINTS" id="PR00109">
    <property type="entry name" value="TYRKINASE"/>
</dbReference>
<dbReference type="SMART" id="SM00261">
    <property type="entry name" value="FU"/>
    <property type="match status" value="3"/>
</dbReference>
<dbReference type="SMART" id="SM00219">
    <property type="entry name" value="TyrKc"/>
    <property type="match status" value="1"/>
</dbReference>
<dbReference type="SUPFAM" id="SSF57184">
    <property type="entry name" value="Growth factor receptor domain"/>
    <property type="match status" value="2"/>
</dbReference>
<dbReference type="SUPFAM" id="SSF52058">
    <property type="entry name" value="L domain-like"/>
    <property type="match status" value="2"/>
</dbReference>
<dbReference type="SUPFAM" id="SSF56112">
    <property type="entry name" value="Protein kinase-like (PK-like)"/>
    <property type="match status" value="1"/>
</dbReference>
<dbReference type="PROSITE" id="PS00107">
    <property type="entry name" value="PROTEIN_KINASE_ATP"/>
    <property type="match status" value="1"/>
</dbReference>
<dbReference type="PROSITE" id="PS50011">
    <property type="entry name" value="PROTEIN_KINASE_DOM"/>
    <property type="match status" value="1"/>
</dbReference>
<dbReference type="PROSITE" id="PS00109">
    <property type="entry name" value="PROTEIN_KINASE_TYR"/>
    <property type="match status" value="1"/>
</dbReference>
<reference key="1">
    <citation type="journal article" date="1984" name="Nature">
        <title>Human epidermal growth factor receptor cDNA sequence and aberrant expression of the amplified gene in A431 epidermoid carcinoma cells.</title>
        <authorList>
            <person name="Ullrich A."/>
            <person name="Coussens L."/>
            <person name="Hayflick J.S."/>
            <person name="Dull T.J."/>
            <person name="Gray A."/>
            <person name="Tam A.W."/>
            <person name="Lee J."/>
            <person name="Yarden Y."/>
            <person name="Libermann T.A."/>
            <person name="Schlessinger J."/>
            <person name="Downward J."/>
            <person name="Mayes E.L.V."/>
            <person name="Whittle N."/>
            <person name="Waterfield M.D."/>
            <person name="Seeburg P.H."/>
        </authorList>
    </citation>
    <scope>NUCLEOTIDE SEQUENCE [MRNA] (ISOFORM 1)</scope>
    <scope>PROTEIN SEQUENCE OF 25-32</scope>
</reference>
<reference key="2">
    <citation type="journal article" date="1995" name="Mol. Reprod. Dev.">
        <title>Possible role of variant RNA transcripts in the regulation of epidermal growth factor receptor expression in human placenta.</title>
        <authorList>
            <person name="Ilekis J.V."/>
            <person name="Stark B.C."/>
            <person name="Scoccia B."/>
        </authorList>
    </citation>
    <scope>NUCLEOTIDE SEQUENCE [MRNA] (ISOFORM 2)</scope>
    <source>
        <tissue>Placenta</tissue>
    </source>
</reference>
<reference key="3">
    <citation type="journal article" date="1996" name="Nucleic Acids Res.">
        <title>A 1.8 kb alternative transcript from the human epidermal growth factor receptor gene encodes a truncated form of the receptor.</title>
        <authorList>
            <person name="Reiter J.L."/>
            <person name="Maihle N.J."/>
        </authorList>
    </citation>
    <scope>NUCLEOTIDE SEQUENCE [GENOMIC DNA / MRNA] (ISOFORM 2)</scope>
    <source>
        <tissue>Placenta</tissue>
    </source>
</reference>
<reference key="4">
    <citation type="journal article" date="1997" name="Gynecol. Oncol.">
        <title>Expression of a truncated epidermal growth factor receptor-like protein (TEGFR) in ovarian cancer.</title>
        <authorList>
            <person name="Ilekis J.V."/>
            <person name="Gariti J."/>
            <person name="Niederberger C."/>
            <person name="Scoccia B."/>
        </authorList>
    </citation>
    <scope>NUCLEOTIDE SEQUENCE [MRNA] (ISOFORM 2)</scope>
    <source>
        <tissue>Placenta</tissue>
    </source>
</reference>
<reference key="5">
    <citation type="journal article" date="2001" name="Genomics">
        <title>Comparative genomic sequence analysis and isolation of human and mouse alternative EGFR transcripts encoding truncated receptor isoforms.</title>
        <authorList>
            <person name="Reiter J.L."/>
            <person name="Threadgill D.W."/>
            <person name="Eley G.D."/>
            <person name="Strunk K.E."/>
            <person name="Danielsen A.J."/>
            <person name="Schehl Sinclair C."/>
            <person name="Pearsall R.S."/>
            <person name="Green P.J."/>
            <person name="Yee D."/>
            <person name="Lampland A.L."/>
            <person name="Balasubramaniam S."/>
            <person name="Crossley T.D."/>
            <person name="Magnuson T.R."/>
            <person name="James C.D."/>
            <person name="Maihle N.J."/>
        </authorList>
    </citation>
    <scope>NUCLEOTIDE SEQUENCE [GENOMIC DNA / MRNA] (ISOFORMS 3 AND 4)</scope>
    <source>
        <tissue>Placenta</tissue>
    </source>
</reference>
<reference key="6">
    <citation type="submission" date="2004-07" db="EMBL/GenBank/DDBJ databases">
        <title>Cloning of the cDNA for a short EGF receptor from human placenta.</title>
        <authorList>
            <person name="Xu L."/>
            <person name="Hong A."/>
            <person name="He X."/>
        </authorList>
    </citation>
    <scope>NUCLEOTIDE SEQUENCE [MRNA] (ISOFORM 2)</scope>
</reference>
<reference key="7">
    <citation type="submission" date="2004-04" db="EMBL/GenBank/DDBJ databases">
        <authorList>
            <consortium name="NIEHS SNPs program"/>
        </authorList>
    </citation>
    <scope>NUCLEOTIDE SEQUENCE [GENOMIC DNA]</scope>
    <scope>VARIANTS GLN-98; ARG-266; LYS-521; ILE-674; GLY-962 AND PRO-988</scope>
</reference>
<reference key="8">
    <citation type="submission" date="1999-02" db="EMBL/GenBank/DDBJ databases">
        <title>Human and mouse alternative EGFR transcripts encoding only the extracellular domain of the receptor.</title>
        <authorList>
            <person name="Reiter J.L."/>
            <person name="Threadgill D.W."/>
            <person name="Danielsen A.J."/>
            <person name="Schehl C.M."/>
            <person name="Lampland A.L."/>
            <person name="Balasubramaniam S."/>
            <person name="Crossley T.O."/>
            <person name="Magnuson T.R."/>
            <person name="Maihle N.J."/>
        </authorList>
    </citation>
    <scope>NUCLEOTIDE SEQUENCE [GENOMIC DNA] OF 575-687</scope>
</reference>
<reference key="9">
    <citation type="journal article" date="1984" name="Science">
        <title>Expression cloning of human EGF receptor complementary DNA: gene amplification and three related messenger RNA products in A431 cells.</title>
        <authorList>
            <person name="Lin C.R."/>
            <person name="Chen W.S."/>
            <person name="Kruiger W."/>
            <person name="Stolarsky L.S."/>
            <person name="Weber W."/>
            <person name="Evans R.M."/>
            <person name="Verma I.M."/>
            <person name="Gill G.N."/>
            <person name="Rosenfeld M.G."/>
        </authorList>
    </citation>
    <scope>NUCLEOTIDE SEQUENCE [MRNA] OF 713-924</scope>
</reference>
<reference key="10">
    <citation type="journal article" date="1984" name="Nature">
        <title>Human epidermal growth factor receptor cDNA is homologous to a variety of RNAs overproduced in A431 carcinoma cells.</title>
        <authorList>
            <person name="Xu Y.H."/>
            <person name="Ishii S."/>
            <person name="Clark A.J.L."/>
            <person name="Sullivan M."/>
            <person name="Wilson R.K."/>
            <person name="Ma D.P."/>
            <person name="Roe B.A."/>
            <person name="Merlino G.T."/>
            <person name="Pastan I."/>
        </authorList>
    </citation>
    <scope>NUCLEOTIDE SEQUENCE [MRNA] OF 150-962</scope>
</reference>
<reference key="11">
    <citation type="journal article" date="1984" name="Biochem. Biophys. Res. Commun.">
        <title>Isolation of an evolutionarily conserved epidermal growth factor receptor cDNA from human A431 carcinoma cells.</title>
        <authorList>
            <person name="Simmen F.A."/>
            <person name="Gope M.L."/>
            <person name="Schulz T.Z."/>
            <person name="Wright D.A."/>
            <person name="Carpenter G."/>
            <person name="O'Malley B.W."/>
        </authorList>
    </citation>
    <scope>NUCLEOTIDE SEQUENCE [MRNA] OF 1028-1210</scope>
</reference>
<reference key="12">
    <citation type="journal article" date="1987" name="Oncogene Res.">
        <title>The human EGF receptor gene: structure of the 110 kb locus and identification of sequences regulating its transcription.</title>
        <authorList>
            <person name="Haley J.D."/>
            <person name="Whittle N."/>
            <person name="Bennett P."/>
            <person name="Kinchington D."/>
            <person name="Ullrich A."/>
            <person name="Waterfield M.D."/>
        </authorList>
    </citation>
    <scope>NUCLEOTIDE SEQUENCE [GENOMIC DNA] OF 1-29</scope>
</reference>
<reference key="13">
    <citation type="journal article" date="1991" name="J. Biol. Chem.">
        <title>Contributory effects of de novo transcription and premature transcript termination in the regulation of human epidermal growth factor receptor proto-oncogene RNA synthesis.</title>
        <authorList>
            <person name="Haley J.D."/>
            <person name="Waterfield M.D."/>
        </authorList>
    </citation>
    <scope>NUCLEOTIDE SEQUENCE [GENOMIC DNA] OF 1-29</scope>
</reference>
<reference key="14">
    <citation type="journal article" date="1985" name="Proc. Natl. Acad. Sci. U.S.A.">
        <title>Characterization and sequence of the promoter region of the human epidermal growth factor receptor gene.</title>
        <authorList>
            <person name="Ishii S."/>
            <person name="Xu Y.H."/>
            <person name="Stratton R.H."/>
            <person name="Roe B.A."/>
            <person name="Merlino G.T."/>
            <person name="Pastan I."/>
        </authorList>
    </citation>
    <scope>NUCLEOTIDE SEQUENCE [GENOMIC DNA] OF 1-29</scope>
</reference>
<reference key="15">
    <citation type="journal article" date="1984" name="Science">
        <title>Production of an epidermal growth factor receptor-related protein.</title>
        <authorList>
            <person name="Weber W."/>
            <person name="Gill G.N."/>
            <person name="Spiess J."/>
        </authorList>
    </citation>
    <scope>NUCLEOTIDE SEQUENCE [MRNA] OF 25-49</scope>
</reference>
<reference key="16">
    <citation type="submission" date="1997-09" db="UniProtKB">
        <authorList>
            <person name="Kohda D."/>
        </authorList>
    </citation>
    <scope>PROTEIN SEQUENCE OF 540</scope>
</reference>
<reference key="17">
    <citation type="journal article" date="1988" name="J. Biol. Chem.">
        <title>Epidermal growth factor receptor threonine and serine residues phosphorylated in vivo.</title>
        <authorList>
            <person name="Heisermann G.J."/>
            <person name="Gill G.N."/>
        </authorList>
    </citation>
    <scope>PROTEIN SEQUENCE OF 687-705; 986-998; 1000-1023; 1026-1030 AND 1068-1077</scope>
    <scope>PHOSPHORYLATION AT THR-693; SER-695; SER-1070 AND SER-1071</scope>
</reference>
<reference key="18">
    <citation type="journal article" date="2004" name="Protein Sci.">
        <title>Signal peptide prediction based on analysis of experimentally verified cleavage sites.</title>
        <authorList>
            <person name="Zhang Z."/>
            <person name="Henzel W.J."/>
        </authorList>
    </citation>
    <scope>PROTEIN SEQUENCE OF 25-39</scope>
</reference>
<reference key="19">
    <citation type="journal article" date="1985" name="J. Biol. Chem.">
        <title>Identification of residues in the nucleotide binding site of the epidermal growth factor receptor/kinase.</title>
        <authorList>
            <person name="Russo M.W."/>
            <person name="Lukas T.J."/>
            <person name="Cohen S."/>
            <person name="Staros J.V."/>
        </authorList>
    </citation>
    <scope>PROTEIN SEQUENCE OF 740-744 AND 746-747</scope>
</reference>
<reference key="20">
    <citation type="journal article" date="2006" name="Mol. Cell">
        <title>Differential regulation of EGF receptor internalization and degradation by multiubiquitination within the kinase domain.</title>
        <authorList>
            <person name="Huang F."/>
            <person name="Kirkpatrick D."/>
            <person name="Jiang X."/>
            <person name="Gygi S.P."/>
            <person name="Sorkin A."/>
        </authorList>
    </citation>
    <scope>PROTEIN SEQUENCE OF 861-875 AND 914-932</scope>
    <scope>UBIQUITINATION AT LYS-716; LYS-737; LYS-754; LYS-867; LYS-929 AND LYS-970</scope>
    <scope>IDENTIFICATION BY MASS SPECTROMETRY</scope>
</reference>
<reference key="21">
    <citation type="journal article" date="1998" name="J. Biol. Chem.">
        <title>Disulfide bond structure of human epidermal growth factor receptor.</title>
        <authorList>
            <person name="Abe Y."/>
            <person name="Odaka M."/>
            <person name="Inagaki F."/>
            <person name="Lax I."/>
            <person name="Schlessinger J."/>
            <person name="Kohda D."/>
        </authorList>
    </citation>
    <scope>PARTIAL PROTEIN SEQUENCE</scope>
    <scope>DISULFIDE BONDS</scope>
</reference>
<reference key="22">
    <citation type="journal article" date="1984" name="Nature">
        <title>ATP-stimulated interaction between epidermal growth factor receptor and supercoiled DNA.</title>
        <authorList>
            <person name="Mroczkowski B."/>
            <person name="Mosig G."/>
            <person name="Cohen S."/>
        </authorList>
    </citation>
    <scope>RECEPTOR ACTIVITY</scope>
</reference>
<reference key="23">
    <citation type="journal article" date="1987" name="Annu. Rev. Biochem.">
        <title>Receptors for epidermal growth factor and other polypeptide mitogens.</title>
        <authorList>
            <person name="Carpenter G."/>
        </authorList>
    </citation>
    <scope>REVIEW</scope>
</reference>
<reference key="24">
    <citation type="journal article" date="1989" name="Cell">
        <title>Functional independence of the epidermal growth factor receptor from a domain required for ligand-induced internalization and calcium regulation.</title>
        <authorList>
            <person name="Chen W.S."/>
            <person name="Lazar C.S."/>
            <person name="Lund K.A."/>
            <person name="Welsh J.B."/>
            <person name="Chang C.P."/>
            <person name="Walton G.M."/>
            <person name="Der C.J."/>
            <person name="Wiley H.S."/>
            <person name="Gill G.N."/>
            <person name="Rosenfeld M.G."/>
        </authorList>
    </citation>
    <scope>FUNCTION</scope>
    <scope>SUBCELLULAR LOCATION</scope>
    <scope>LIGAND-BINDING</scope>
</reference>
<reference key="25">
    <citation type="journal article" date="1989" name="J. Biol. Chem.">
        <title>All autophosphorylation sites of epidermal growth factor (EGF) receptor and HER2/neu are located in their carboxyl-terminal tails. Identification of a novel site in EGF receptor.</title>
        <authorList>
            <person name="Margolis B.L."/>
            <person name="Lax I."/>
            <person name="Kris R."/>
            <person name="Dombalagian M."/>
            <person name="Honegger A.M."/>
            <person name="Howk R."/>
            <person name="Givol D."/>
            <person name="Ullrich A."/>
            <person name="Schlessinger J."/>
        </authorList>
    </citation>
    <scope>PHOSPHORYLATION AT TYR-1110</scope>
</reference>
<reference key="26">
    <citation type="journal article" date="1993" name="J. Biol. Chem.">
        <title>Amphiregulin induces tyrosine phosphorylation of the epidermal growth factor receptor and p185erbB2. Evidence that amphiregulin acts exclusively through the epidermal growth factor receptor at the surface of human epithelial cells.</title>
        <authorList>
            <person name="Johnson G.R."/>
            <person name="Kannan B."/>
            <person name="Shoyab M."/>
            <person name="Stromberg K."/>
        </authorList>
    </citation>
    <scope>IDENTIFICATION OF AREG AS LIGAND</scope>
    <scope>FUNCTION</scope>
</reference>
<reference key="27">
    <citation type="journal article" date="1996" name="Science">
        <title>Binding of zinc finger protein ZPR1 to the epidermal growth factor receptor.</title>
        <authorList>
            <person name="Galcheva-Gargova Z."/>
            <person name="Konstantinov K.N."/>
            <person name="Wu I.-H."/>
            <person name="Klier F.G."/>
            <person name="Barrett T."/>
            <person name="Davis R.J."/>
        </authorList>
    </citation>
    <scope>INTERACTION WITH ZPR1</scope>
</reference>
<reference key="28">
    <citation type="journal article" date="1998" name="J. Cell Biol.">
        <title>Interaction of ZPR1 with translation elongation factor-1alpha in proliferating cells.</title>
        <authorList>
            <person name="Gangwani L."/>
            <person name="Mikrut M."/>
            <person name="Galcheva-Gargova Z."/>
            <person name="Davis R.J."/>
        </authorList>
    </citation>
    <scope>INTERACTION WITH ZPR1</scope>
</reference>
<reference key="29">
    <citation type="journal article" date="1999" name="EMBO J.">
        <title>Cell-type specific phosphorylation of threonines T654 and T669 by PKD defines the signal capacity of the EGF receptor.</title>
        <authorList>
            <person name="Bagowski C.P."/>
            <person name="Stein-Gerlach M."/>
            <person name="Choidas A."/>
            <person name="Ullrich A."/>
        </authorList>
    </citation>
    <scope>PHOSPHORYLATION AT THR-678 AND THR-693</scope>
</reference>
<reference key="30">
    <citation type="journal article" date="1994" name="J. Biol. Chem.">
        <title>Recombinant human betacellulin. Molecular structure, biological activities, and receptor interaction.</title>
        <authorList>
            <person name="Watanabe T."/>
            <person name="Shintani A."/>
            <person name="Nakata M."/>
            <person name="Shing Y."/>
            <person name="Folkman J."/>
            <person name="Igarashi K."/>
            <person name="Sasada R."/>
        </authorList>
    </citation>
    <scope>IDENTIFICATION OF BETACELLULIN/BTC AS LIGAND</scope>
</reference>
<reference key="31">
    <citation type="journal article" date="1995" name="J. Biol. Chem.">
        <title>Tyrosine phosphorylation of the c-cbl proto-oncogene protein product and association with epidermal growth factor (EGF) receptor upon EGF stimulation.</title>
        <authorList>
            <person name="Galisteo M.L."/>
            <person name="Dikic I."/>
            <person name="Batzer A.G."/>
            <person name="Langdon W.Y."/>
            <person name="Schlessinger J."/>
        </authorList>
    </citation>
    <scope>FUNCTION IN PHOSPHORYLATION OF CBL</scope>
    <scope>INTERACTION WITH CBL</scope>
</reference>
<reference key="32">
    <citation type="journal article" date="1996" name="Growth Factors">
        <title>Analysis of the glycosylation patterns of the extracellular domain of the epidermal growth factor receptor expressed in Chinese hamster ovary fibroblasts.</title>
        <authorList>
            <person name="Smith K.D."/>
            <person name="Davies M.J."/>
            <person name="Bailey D."/>
            <person name="Renouf D.V."/>
            <person name="Hounsell E.F."/>
        </authorList>
    </citation>
    <scope>GLYCOSYLATION AT ASN-128; ASN-175; ASN-413; ASN-444 AND ASN-528</scope>
</reference>
<reference key="33">
    <citation type="journal article" date="1997" name="Oncogene">
        <title>Epiregulin binds to epidermal growth factor receptor and ErbB-4 and induces tyrosine phosphorylation of epidermal growth factor receptor, ErbB-2, ErbB-3 and ErbB-4.</title>
        <authorList>
            <person name="Komurasaki T."/>
            <person name="Toyoda H."/>
            <person name="Uchida D."/>
            <person name="Morimoto S."/>
        </authorList>
    </citation>
    <scope>IDENTIFICATION OF EPIREGULIN/EREG AS LIGAND</scope>
    <scope>FUNCTION</scope>
</reference>
<reference key="34">
    <citation type="journal article" date="1998" name="Mol. Cell. Biol.">
        <title>Epidermal growth factor receptor and the adaptor protein p52Shc are specific substrates of T-cell protein tyrosine phosphatase.</title>
        <authorList>
            <person name="Tiganis T."/>
            <person name="Bennett A.M."/>
            <person name="Ravichandran K.S."/>
            <person name="Tonks N.K."/>
        </authorList>
    </citation>
    <scope>PHOSPHORYLATION</scope>
    <scope>DEPHOSPHORYLATION BY PTPN1 AND PTPN2</scope>
</reference>
<reference key="35">
    <citation type="journal article" date="1999" name="EMBO J.">
        <title>Inhibition of the receptor-binding function of clathrin adaptor protein AP-2 by dominant-negative mutant mu2 subunit and its effects on endocytosis.</title>
        <authorList>
            <person name="Nesterov A."/>
            <person name="Carter R.E."/>
            <person name="Sorkina T."/>
            <person name="Gill G.N."/>
            <person name="Sorkin A."/>
        </authorList>
    </citation>
    <scope>INTERACTION WITH AP2M1</scope>
</reference>
<reference key="36">
    <citation type="journal article" date="1999" name="J. Biol. Chem.">
        <title>Identification of Grb4/Nckbeta, a src homology 2 and 3 domain-containing adapter protein having similar binding and biological properties to Nck.</title>
        <authorList>
            <person name="Braverman L.E."/>
            <person name="Quilliam L.A."/>
        </authorList>
    </citation>
    <scope>INTERACTION WITH GRB2; NCK1 AND NCK2</scope>
</reference>
<reference key="37">
    <citation type="journal article" date="2000" name="J. Biochem.">
        <title>Characterization of the N-oligosaccharides attached to the atypical Asn-X-Cys sequence of recombinant human epidermal growth factor receptor.</title>
        <authorList>
            <person name="Sato C."/>
            <person name="Kim J.-H."/>
            <person name="Abe Y."/>
            <person name="Saito K."/>
            <person name="Yokoyama S."/>
            <person name="Kohda D."/>
        </authorList>
    </citation>
    <scope>GLYCOSYLATION AT ASN-56; ASN-352; ASN-361; ASN-568 AND ASN-603</scope>
</reference>
<reference key="38">
    <citation type="journal article" date="2001" name="J. Biol. Chem.">
        <title>RGS16 function is regulated by epidermal growth factor receptor-mediated tyrosine phosphorylation.</title>
        <authorList>
            <person name="Derrien A."/>
            <person name="Druey K.M."/>
        </authorList>
    </citation>
    <scope>FUNCTION IN PHOSPHORYLATION OF RGS16</scope>
</reference>
<reference key="39">
    <citation type="journal article" date="2003" name="Biochemistry">
        <title>Characterization of glycosylation sites of the epidermal growth factor receptor.</title>
        <authorList>
            <person name="Zhen Y."/>
            <person name="Caprioli R.M."/>
            <person name="Staros J.V."/>
        </authorList>
    </citation>
    <scope>GLYCOSYLATION AT ASN-56; ASN-128; ASN-175; ASN-196; ASN-352; ASN-361; ASN-413; ASN-444; ASN-528; ASN-568; ASN-603 AND ASN-623</scope>
</reference>
<reference key="40">
    <citation type="journal article" date="2003" name="Cancer Res.">
        <title>Identification and characterization of signal transducer and activator of transcription 3 recruitment sites within the epidermal growth factor receptor.</title>
        <authorList>
            <person name="Shao H."/>
            <person name="Cheng H.Y."/>
            <person name="Cook R.G."/>
            <person name="Tweardy D.J."/>
        </authorList>
    </citation>
    <scope>FUNCTION IN CELL PROLIFERATION</scope>
    <scope>INTERACTION WITH STAT3</scope>
    <scope>PHOSPHORYLATION AT TYR-1092 AND TYR-1110</scope>
</reference>
<reference key="41">
    <citation type="journal article" date="2004" name="EMBO J.">
        <title>LRIG1 restricts growth factor signaling by enhancing receptor ubiquitylation and degradation.</title>
        <authorList>
            <person name="Gur G."/>
            <person name="Rubin C."/>
            <person name="Katz M."/>
            <person name="Amit I."/>
            <person name="Citri A."/>
            <person name="Nilsson J."/>
            <person name="Amariglio N."/>
            <person name="Henriksson R."/>
            <person name="Rechavi G."/>
            <person name="Hedman H."/>
            <person name="Wides R."/>
            <person name="Yarden Y."/>
        </authorList>
    </citation>
    <scope>ACTIVITY REGULATION</scope>
    <scope>INTERACTION WITH LRIG1</scope>
</reference>
<reference key="42">
    <citation type="journal article" date="2000" name="Mol. Cell. Biol.">
        <title>Class II phosphoinositide 3-kinases are downstream targets of activated polypeptide growth factor receptors.</title>
        <authorList>
            <person name="Arcaro A."/>
            <person name="Zvelebil M.J."/>
            <person name="Wallasch C."/>
            <person name="Ullrich A."/>
            <person name="Waterfield M.D."/>
            <person name="Domin J."/>
        </authorList>
    </citation>
    <scope>FUNCTION IN EGFR SIGNALING</scope>
    <scope>IDENTIFICATION IN A COMPLEX WITH PIK3C2A AND ERBB2</scope>
    <scope>IDENTIFICATION IN A COMPLEX WITH PIK3C2B AND ERBB2</scope>
    <scope>INTERACTION WITH PIK3C2B</scope>
    <scope>MUTAGENESIS OF TYR-1016; TYR-1092; TYR-1110; TYR-1172 AND TYR-1197</scope>
</reference>
<reference key="43">
    <citation type="journal article" date="2001" name="J. Biol. Chem.">
        <title>The epidermal growth factor receptor engages receptor interacting protein and nuclear factor-kappa B (NF-kappa B)-inducing kinase to activate NF-kappa B. Identification of a novel receptor-tyrosine kinase signalosome.</title>
        <authorList>
            <person name="Habib A.A."/>
            <person name="Chatterjee S."/>
            <person name="Park S.-K."/>
            <person name="Ratan R.R."/>
            <person name="Lefebvre S."/>
            <person name="Vartanian T."/>
        </authorList>
    </citation>
    <scope>FUNCTION IN NF-KAPPA-B ACTIVATION</scope>
    <scope>INTERACTION WITH RIPK1</scope>
</reference>
<reference key="44">
    <citation type="journal article" date="2001" name="J. Biol. Chem.">
        <title>The epidermal growth factor receptor regulates interaction of the human DF3/MUC1 carcinoma antigen with c-Src and beta-catenin.</title>
        <authorList>
            <person name="Li Y."/>
            <person name="Ren J."/>
            <person name="Yu W."/>
            <person name="Li Q."/>
            <person name="Kuwahara H."/>
            <person name="Yin L."/>
            <person name="Carraway K.L. III"/>
            <person name="Kufe D."/>
        </authorList>
    </citation>
    <scope>FUNCTION IN PHOSPHORYLATION OF MUC1</scope>
    <scope>INTERACTION WITH MUC1</scope>
</reference>
<reference key="45">
    <citation type="journal article" date="2005" name="J. Biol. Chem.">
        <title>Suppressors of cytokine signaling 4 and 5 regulate epidermal growth factor receptor signaling.</title>
        <authorList>
            <person name="Kario E."/>
            <person name="Marmor M.D."/>
            <person name="Adamsky K."/>
            <person name="Citri A."/>
            <person name="Amit I."/>
            <person name="Amariglio N."/>
            <person name="Rechavi G."/>
            <person name="Yarden Y."/>
        </authorList>
    </citation>
    <scope>FUNCTION</scope>
    <scope>ACTIVITY REGULATION</scope>
    <scope>INTERACTION WITH SOCS5</scope>
</reference>
<reference key="46">
    <citation type="journal article" date="2005" name="J. Biol. Chem.">
        <title>Epigen, the last ligand of ErbB receptors, reveals intricate relationships between affinity and mitogenicity.</title>
        <authorList>
            <person name="Kochupurakkal B.S."/>
            <person name="Harari D."/>
            <person name="Di-Segni A."/>
            <person name="Maik-Rachline G."/>
            <person name="Lyass L."/>
            <person name="Gur G."/>
            <person name="Kerber G."/>
            <person name="Citri A."/>
            <person name="Lavi S."/>
            <person name="Eilam R."/>
            <person name="Chalifa-Caspi V."/>
            <person name="Eshhar Z."/>
            <person name="Pikarsky E."/>
            <person name="Pinkas-Kramarski R."/>
            <person name="Bacus S.S."/>
            <person name="Yarden Y."/>
        </authorList>
    </citation>
    <scope>IDENTIFICATION OF EPIGEN/EPGN AS A LIGAND</scope>
    <scope>FUNCTION</scope>
</reference>
<reference key="47">
    <citation type="journal article" date="2005" name="J. Proteome Res.">
        <title>Extended Range Proteomic Analysis (ERPA): a new and sensitive LC-MS platform for high sequence coverage of complex proteins with extensive post-translational modifications-comprehensive analysis of beta-casein and epidermal growth factor receptor (EGFR).</title>
        <authorList>
            <person name="Wu S.L."/>
            <person name="Kim J."/>
            <person name="Hancock W.S."/>
            <person name="Karger B."/>
        </authorList>
    </citation>
    <scope>GLYCOSYLATION AT ASN-56; ASN-128; ASN-175; ASN-196; ASN-352; ASN-361; ASN-413; ASN-444; ASN-528; ASN-568 AND ASN-603</scope>
    <scope>PHOSPHORYLATION AT THR-693; SER-991 AND SER-1026</scope>
    <scope>IDENTIFICATION BY MASS SPECTROMETRY</scope>
</reference>
<reference key="48">
    <citation type="journal article" date="2005" name="Cancer Res.">
        <title>Functional implications of altered subcellular localization of PELP1 in breast cancer cells.</title>
        <authorList>
            <person name="Vadlamudi R.K."/>
            <person name="Manavathi B."/>
            <person name="Balasenthil S."/>
            <person name="Nair S.S."/>
            <person name="Yang Z."/>
            <person name="Sahin A.A."/>
            <person name="Kumar R."/>
        </authorList>
    </citation>
    <scope>INTERACTION WITH PELP1</scope>
</reference>
<reference key="49">
    <citation type="journal article" date="2006" name="Cell">
        <title>Global, in vivo, and site-specific phosphorylation dynamics in signaling networks.</title>
        <authorList>
            <person name="Olsen J.V."/>
            <person name="Blagoev B."/>
            <person name="Gnad F."/>
            <person name="Macek B."/>
            <person name="Kumar C."/>
            <person name="Mortensen P."/>
            <person name="Mann M."/>
        </authorList>
    </citation>
    <scope>PHOSPHORYLATION [LARGE SCALE ANALYSIS] AT TYR-1172 AND TYR-1197</scope>
    <scope>IDENTIFICATION BY MASS SPECTROMETRY [LARGE SCALE ANALYSIS]</scope>
    <source>
        <tissue>Cervix carcinoma</tissue>
    </source>
</reference>
<reference key="50">
    <citation type="journal article" date="2006" name="Nat. Cell Biol.">
        <title>Tyrosine phosphorylation controls PCNA function through protein stability.</title>
        <authorList>
            <person name="Wang S.C."/>
            <person name="Nakajima Y."/>
            <person name="Yu Y.L."/>
            <person name="Xia W."/>
            <person name="Chen C.T."/>
            <person name="Yang C.C."/>
            <person name="McIntush E.W."/>
            <person name="Li L.Y."/>
            <person name="Hawke D.H."/>
            <person name="Kobayashi R."/>
            <person name="Hung M.C."/>
        </authorList>
    </citation>
    <scope>FUNCTION IN CELL PROLIFERATION</scope>
    <scope>FUNCTION IN PCNA PHOSPHORYLATION</scope>
    <scope>INTERACTION WITH PCNA</scope>
    <scope>SUBCELLULAR LOCATION</scope>
</reference>
<reference key="51">
    <citation type="journal article" date="2006" name="Traffic">
        <title>Syntaxin 9 is enriched in skin hair follicle epithelium and interacts with the epidermal growth factor receptor.</title>
        <authorList>
            <person name="Wang Y."/>
            <person name="Foo L.Y."/>
            <person name="Guo K."/>
            <person name="Gan B.Q."/>
            <person name="Zeng Q."/>
            <person name="Hong W."/>
            <person name="Tang B.L."/>
        </authorList>
    </citation>
    <scope>INTERACTION WITH STX19</scope>
</reference>
<reference key="52">
    <citation type="journal article" date="2007" name="Cancer Res.">
        <title>The phosphoinositide kinase PIKfyve mediates epidermal growth factor receptor trafficking to the nucleus.</title>
        <authorList>
            <person name="Kim J."/>
            <person name="Jahng W.J."/>
            <person name="Di Vizio D."/>
            <person name="Lee J.S."/>
            <person name="Jhaveri R."/>
            <person name="Rubin M.A."/>
            <person name="Shisheva A."/>
            <person name="Freeman M.R."/>
        </authorList>
    </citation>
    <scope>INTERACTION WITH PIKFYVE</scope>
    <scope>SUBCELLULAR LOCATION</scope>
    <scope>FUNCTION</scope>
</reference>
<reference key="53">
    <citation type="journal article" date="2007" name="J. Clin. Invest.">
        <title>Impaired basolateral sorting of pro-EGF causes isolated recessive renal hypomagnesemia.</title>
        <authorList>
            <person name="Groenestege W.M.T."/>
            <person name="Thebault S."/>
            <person name="van der Wijst J."/>
            <person name="van den Berg D."/>
            <person name="Janssen R."/>
            <person name="Tejpar S."/>
            <person name="van den Heuvel L.P."/>
            <person name="van Cutsem E."/>
            <person name="Hoenderop J.G."/>
            <person name="Knoers N.V."/>
            <person name="Bindels R.J."/>
        </authorList>
    </citation>
    <scope>TISSUE SPECIFICITY</scope>
</reference>
<reference key="54">
    <citation type="journal article" date="2007" name="Mol. Biol. Cell">
        <title>Activated Cdc42-associated kinase 1 is a component of EGF receptor signaling complex and regulates EGF receptor degradation.</title>
        <authorList>
            <person name="Shen F."/>
            <person name="Lin Q."/>
            <person name="Gu Y."/>
            <person name="Childress C."/>
            <person name="Yang W."/>
        </authorList>
    </citation>
    <scope>INTERACTION WITH TNF2</scope>
    <scope>SUBCELLULAR LOCATION</scope>
</reference>
<reference key="55">
    <citation type="journal article" date="2007" name="Oncogene">
        <title>A crucial role of plasma membrane-associated sialidase in the survival of human cancer cells.</title>
        <authorList>
            <person name="Wada T."/>
            <person name="Hata K."/>
            <person name="Yamaguchi K."/>
            <person name="Shiozaki K."/>
            <person name="Koseki K."/>
            <person name="Moriya S."/>
            <person name="Miyagi T."/>
        </authorList>
    </citation>
    <scope>INTERACTION WITH NEU3</scope>
    <scope>ACTIVITY REGULATION</scope>
</reference>
<reference key="56">
    <citation type="journal article" date="2008" name="Cell. Signal.">
        <title>Ataxin-2 associates with the endocytosis complex and affects EGF receptor trafficking.</title>
        <authorList>
            <person name="Nonis D."/>
            <person name="Schmidt M.H."/>
            <person name="van de Loo S."/>
            <person name="Eich F."/>
            <person name="Dikic I."/>
            <person name="Nowock J."/>
            <person name="Auburger G."/>
        </authorList>
    </citation>
    <scope>INTERACTION WITH ATXN2</scope>
</reference>
<reference key="57">
    <citation type="journal article" date="2008" name="EMBO J.">
        <title>Phosphorylation-dependent binding of 14-3-3 terminates signalling by the Gab2 docking protein.</title>
        <authorList>
            <person name="Brummer T."/>
            <person name="Larance M."/>
            <person name="Herrera Abreu M.T."/>
            <person name="Lyons R.J."/>
            <person name="Timpson P."/>
            <person name="Emmerich C.H."/>
            <person name="Fleuren E.D.G."/>
            <person name="Lehrbach G.M."/>
            <person name="Schramek D."/>
            <person name="Guilhaus M."/>
            <person name="James D.E."/>
            <person name="Daly R.J."/>
        </authorList>
    </citation>
    <scope>INTERACTION WITH GAB2</scope>
</reference>
<reference key="58">
    <citation type="journal article" date="2008" name="J. Proteome Res.">
        <title>Combining protein-based IMAC, peptide-based IMAC, and MudPIT for efficient phosphoproteomic analysis.</title>
        <authorList>
            <person name="Cantin G.T."/>
            <person name="Yi W."/>
            <person name="Lu B."/>
            <person name="Park S.K."/>
            <person name="Xu T."/>
            <person name="Lee J.-D."/>
            <person name="Yates J.R. III"/>
        </authorList>
    </citation>
    <scope>IDENTIFICATION BY MASS SPECTROMETRY [LARGE SCALE ANALYSIS]</scope>
    <source>
        <tissue>Cervix carcinoma</tissue>
    </source>
</reference>
<reference key="59">
    <citation type="journal article" date="2008" name="Mol. Cell">
        <title>Kinase-selective enrichment enables quantitative phosphoproteomics of the kinome across the cell cycle.</title>
        <authorList>
            <person name="Daub H."/>
            <person name="Olsen J.V."/>
            <person name="Bairlein M."/>
            <person name="Gnad F."/>
            <person name="Oppermann F.S."/>
            <person name="Korner R."/>
            <person name="Greff Z."/>
            <person name="Keri G."/>
            <person name="Stemmann O."/>
            <person name="Mann M."/>
        </authorList>
    </citation>
    <scope>PHOSPHORYLATION [LARGE SCALE ANALYSIS] AT THR-693; SER-695; SER-1064; SER-1081; SER-1166 AND TYR-1197</scope>
    <scope>IDENTIFICATION BY MASS SPECTROMETRY [LARGE SCALE ANALYSIS]</scope>
    <source>
        <tissue>Cervix carcinoma</tissue>
    </source>
</reference>
<reference key="60">
    <citation type="journal article" date="2008" name="Proc. Natl. Acad. Sci. U.S.A.">
        <title>A quantitative atlas of mitotic phosphorylation.</title>
        <authorList>
            <person name="Dephoure N."/>
            <person name="Zhou C."/>
            <person name="Villen J."/>
            <person name="Beausoleil S.A."/>
            <person name="Bakalarski C.E."/>
            <person name="Elledge S.J."/>
            <person name="Gygi S.P."/>
        </authorList>
    </citation>
    <scope>PHOSPHORYLATION [LARGE SCALE ANALYSIS] AT SER-991; SER-995; TYR-998; SER-1039; THR-1041; SER-1042; SER-1064 AND SER-1166</scope>
    <scope>IDENTIFICATION BY MASS SPECTROMETRY [LARGE SCALE ANALYSIS]</scope>
    <source>
        <tissue>Cervix carcinoma</tissue>
    </source>
</reference>
<reference key="61">
    <citation type="journal article" date="2009" name="Anal. Chem.">
        <title>Lys-N and trypsin cover complementary parts of the phosphoproteome in a refined SCX-based approach.</title>
        <authorList>
            <person name="Gauci S."/>
            <person name="Helbig A.O."/>
            <person name="Slijper M."/>
            <person name="Krijgsveld J."/>
            <person name="Heck A.J."/>
            <person name="Mohammed S."/>
        </authorList>
    </citation>
    <scope>IDENTIFICATION BY MASS SPECTROMETRY [LARGE SCALE ANALYSIS]</scope>
</reference>
<reference key="62">
    <citation type="journal article" date="2009" name="Curr. Biol.">
        <title>An unbiased screen identifies DEP-1 tumor suppressor as a phosphatase controlling EGFR endocytosis.</title>
        <authorList>
            <person name="Tarcic G."/>
            <person name="Boguslavsky S.K."/>
            <person name="Wakim J."/>
            <person name="Kiuchi T."/>
            <person name="Liu A."/>
            <person name="Reinitz F."/>
            <person name="Nathanson D."/>
            <person name="Takahashi T."/>
            <person name="Mischel P.S."/>
            <person name="Ng T."/>
            <person name="Yarden Y."/>
        </authorList>
    </citation>
    <scope>ACTIVITY REGULATION BY PTPRJ AND PTPRK</scope>
    <scope>PHOSPHORYLATION AT TYR-1197</scope>
    <scope>DEPHOSPHORYLATION BY PTPRJ</scope>
    <scope>SUBCELLULAR LOCATION</scope>
    <scope>INTERACTION WITH CBL AND GRB2</scope>
</reference>
<reference key="63">
    <citation type="journal article" date="2009" name="J. Biol. Chem.">
        <title>GAREM, a novel adaptor protein for growth factor receptor-bound protein 2, contributes to cellular transformation through the activation of extracellular signal-regulated kinase signaling.</title>
        <authorList>
            <person name="Tashiro K."/>
            <person name="Tsunematsu T."/>
            <person name="Okubo H."/>
            <person name="Ohta T."/>
            <person name="Sano E."/>
            <person name="Yamauchi E."/>
            <person name="Taniguchi H."/>
            <person name="Konishi H."/>
        </authorList>
    </citation>
    <scope>INTERACTION WITH GAREM1</scope>
</reference>
<reference key="64">
    <citation type="journal article" date="2009" name="J. Proteome Res.">
        <title>Glycoproteomics analysis of human liver tissue by combination of multiple enzyme digestion and hydrazide chemistry.</title>
        <authorList>
            <person name="Chen R."/>
            <person name="Jiang X."/>
            <person name="Sun D."/>
            <person name="Han G."/>
            <person name="Wang F."/>
            <person name="Ye M."/>
            <person name="Wang L."/>
            <person name="Zou H."/>
        </authorList>
    </citation>
    <scope>GLYCOSYLATION [LARGE SCALE ANALYSIS] AT ASN-352; ASN-413 AND ASN-568</scope>
    <source>
        <tissue>Liver</tissue>
    </source>
</reference>
<reference key="65">
    <citation type="journal article" date="2009" name="Mol. Cell. Proteomics">
        <title>Large-scale proteomics analysis of the human kinome.</title>
        <authorList>
            <person name="Oppermann F.S."/>
            <person name="Gnad F."/>
            <person name="Olsen J.V."/>
            <person name="Hornberger R."/>
            <person name="Greff Z."/>
            <person name="Keri G."/>
            <person name="Mann M."/>
            <person name="Daub H."/>
        </authorList>
    </citation>
    <scope>IDENTIFICATION BY MASS SPECTROMETRY [LARGE SCALE ANALYSIS]</scope>
</reference>
<reference key="66">
    <citation type="journal article" date="2009" name="Mol. Endocrinol.">
        <title>G protein-coupled receptor 30 expression is up-regulated by EGF and TGF alpha in estrogen receptor alpha-positive cancer cells.</title>
        <authorList>
            <person name="Vivacqua A."/>
            <person name="Lappano R."/>
            <person name="De Marco P."/>
            <person name="Sisci D."/>
            <person name="Aquila S."/>
            <person name="De Amicis F."/>
            <person name="Fuqua S.A."/>
            <person name="Ando S."/>
            <person name="Maggiolini M."/>
        </authorList>
    </citation>
    <scope>INTERACTION WITH GPER1</scope>
</reference>
<reference key="67">
    <citation type="journal article" date="2009" name="Nature">
        <title>ErbB2 resembles an autoinhibited invertebrate epidermal growth factor receptor.</title>
        <authorList>
            <person name="Alvarado D."/>
            <person name="Klein D.E."/>
            <person name="Lemmon M.A."/>
        </authorList>
    </citation>
    <scope>MUTAGENESIS OF 525-SER--ALA-1210; ASP-587; HIS-590 AND LYS-609</scope>
</reference>
<reference key="68">
    <citation type="journal article" date="2010" name="Biochem. Biophys. Res. Commun.">
        <title>COPI-mediated retrograde trafficking from the Golgi to the ER regulates EGFR nuclear transport.</title>
        <authorList>
            <person name="Wang Y.N."/>
            <person name="Wang H."/>
            <person name="Yamaguchi H."/>
            <person name="Lee H.J."/>
            <person name="Lee H.H."/>
            <person name="Hung M.C."/>
        </authorList>
    </citation>
    <scope>INTERACTION WITH COPG1</scope>
    <scope>SUBCELLULAR LOCATION</scope>
    <scope>TOPOLOGY</scope>
</reference>
<reference key="69">
    <citation type="journal article" date="2010" name="Cancer Res.">
        <title>Nuclear alternate estrogen receptor GPR30 mediates 17beta-estradiol-induced gene expression and migration in breast cancer-associated fibroblasts.</title>
        <authorList>
            <person name="Madeo A."/>
            <person name="Maggiolini M."/>
        </authorList>
    </citation>
    <scope>INTERACTION WITH GPER1</scope>
    <scope>SUBCELLULAR LOCATION</scope>
</reference>
<reference key="70">
    <citation type="journal article" date="2010" name="Mol. Biol. Cell">
        <title>A G{alpha}i-GIV molecular complex binds epidermal growth factor receptor and determines whether cells migrate or proliferate.</title>
        <authorList>
            <person name="Ghosh P."/>
            <person name="Beas A.O."/>
            <person name="Bornheimer S.J."/>
            <person name="Garcia-Marcos M."/>
            <person name="Forry E.P."/>
            <person name="Johannson C."/>
            <person name="Ear J."/>
            <person name="Jung B.H."/>
            <person name="Cabrera B."/>
            <person name="Carethers J.M."/>
            <person name="Farquhar M.G."/>
        </authorList>
    </citation>
    <scope>FUNCTION</scope>
    <scope>IDENTIFICATION IN COMPLEX WITH CCDC88A AND GNAI3</scope>
    <scope>SUBCELLULAR LOCATION</scope>
    <scope>PHOSPHORYLATION</scope>
</reference>
<reference key="71">
    <citation type="journal article" date="2010" name="Sci. Signal.">
        <title>Quantitative phosphoproteomics reveals widespread full phosphorylation site occupancy during mitosis.</title>
        <authorList>
            <person name="Olsen J.V."/>
            <person name="Vermeulen M."/>
            <person name="Santamaria A."/>
            <person name="Kumar C."/>
            <person name="Miller M.L."/>
            <person name="Jensen L.J."/>
            <person name="Gnad F."/>
            <person name="Cox J."/>
            <person name="Jensen T.S."/>
            <person name="Nigg E.A."/>
            <person name="Brunak S."/>
            <person name="Mann M."/>
        </authorList>
    </citation>
    <scope>PHOSPHORYLATION [LARGE SCALE ANALYSIS] AT THR-693; SER-991; SER-1064 AND TYR-1197</scope>
    <scope>IDENTIFICATION BY MASS SPECTROMETRY [LARGE SCALE ANALYSIS]</scope>
    <source>
        <tissue>Cervix carcinoma</tissue>
    </source>
</reference>
<reference key="72">
    <citation type="journal article" date="2011" name="BMC Syst. Biol.">
        <title>Initial characterization of the human central proteome.</title>
        <authorList>
            <person name="Burkard T.R."/>
            <person name="Planyavsky M."/>
            <person name="Kaupe I."/>
            <person name="Breitwieser F.P."/>
            <person name="Buerckstuemmer T."/>
            <person name="Bennett K.L."/>
            <person name="Superti-Furga G."/>
            <person name="Colinge J."/>
        </authorList>
    </citation>
    <scope>IDENTIFICATION BY MASS SPECTROMETRY [LARGE SCALE ANALYSIS]</scope>
</reference>
<reference key="73">
    <citation type="journal article" date="2011" name="J. Biol. Chem.">
        <title>Nuclear translocation of epidermal growth factor receptor by Akt-dependent phosphorylation enhances breast cancer-resistant protein expression in gefitinib-resistant cells.</title>
        <authorList>
            <person name="Huang W.C."/>
            <person name="Chen Y.J."/>
            <person name="Li L.Y."/>
            <person name="Wei Y.L."/>
            <person name="Hsu S.C."/>
            <person name="Tsai S.L."/>
            <person name="Chiu P.C."/>
            <person name="Huang W.P."/>
            <person name="Wang Y.N."/>
            <person name="Chen C.H."/>
            <person name="Chang W.C."/>
            <person name="Chang W.C."/>
            <person name="Chen A.J."/>
            <person name="Tsai C.H."/>
            <person name="Hung M.C."/>
        </authorList>
    </citation>
    <scope>PHOSPHORYLATION AT SER-229</scope>
</reference>
<reference key="74">
    <citation type="journal article" date="2011" name="Nat. Cell Biol.">
        <title>Crosstalk between Arg 1175 methylation and Tyr 1173 phosphorylation negatively modulates EGFR-mediated ERK activation.</title>
        <authorList>
            <person name="Hsu J.M."/>
            <person name="Chen C.T."/>
            <person name="Chou C.K."/>
            <person name="Kuo H.P."/>
            <person name="Li L.Y."/>
            <person name="Lin C.Y."/>
            <person name="Lee H.J."/>
            <person name="Wang Y.N."/>
            <person name="Liu M."/>
            <person name="Liao H.W."/>
            <person name="Shi B."/>
            <person name="Lai C.C."/>
            <person name="Bedford M.T."/>
            <person name="Tsai C.H."/>
            <person name="Hung M.C."/>
        </authorList>
    </citation>
    <scope>FUNCTION IN CELL PROLIFERATION AND CELL MIGRATION</scope>
    <scope>METHYLATION AT ARG-1199 BY PRMT5</scope>
    <scope>INTERACTION WITH PRMT5 AND PTPN6</scope>
</reference>
<reference key="75">
    <citation type="journal article" date="2011" name="Nat. Med.">
        <title>EGFR and EphA2 are host factors for hepatitis C virus entry and possible targets for antiviral therapy.</title>
        <authorList>
            <person name="Lupberger J."/>
            <person name="Zeisel M.B."/>
            <person name="Xiao F."/>
            <person name="Thumann C."/>
            <person name="Fofana I."/>
            <person name="Zona L."/>
            <person name="Davis C."/>
            <person name="Mee C.J."/>
            <person name="Turek M."/>
            <person name="Gorke S."/>
            <person name="Royer C."/>
            <person name="Fischer B."/>
            <person name="Zahid M.N."/>
            <person name="Lavillette D."/>
            <person name="Fresquet J."/>
            <person name="Cosset F.L."/>
            <person name="Rothenberg S.M."/>
            <person name="Pietschmann T."/>
            <person name="Patel A.H."/>
            <person name="Pessaux P."/>
            <person name="Doffoel M."/>
            <person name="Raffelsberger W."/>
            <person name="Poch O."/>
            <person name="McKeating J.A."/>
            <person name="Brino L."/>
            <person name="Baumert T.F."/>
        </authorList>
    </citation>
    <scope>FUNCTION (MICROBIAL INFECTION)</scope>
</reference>
<reference key="76">
    <citation type="journal article" date="2011" name="Proc. Natl. Acad. Sci. U.S.A.">
        <title>FER tyrosine kinase (FER) overexpression mediates resistance to quinacrine through EGF-dependent activation of NF-kappaB.</title>
        <authorList>
            <person name="Guo C."/>
            <person name="Stark G.R."/>
        </authorList>
    </citation>
    <scope>INTERACTION WITH FER</scope>
    <scope>PHOSPHORYLATION</scope>
</reference>
<reference key="77">
    <citation type="journal article" date="2012" name="Mol. Biol. Cell">
        <title>The Ankrd 13 family of UIM-bearing proteins regulates EGF receptor endocytosis from the plasma membrane.</title>
        <authorList>
            <person name="Tanno H."/>
            <person name="Yamaguchi T."/>
            <person name="Goto E."/>
            <person name="Ishido S."/>
            <person name="Komada M."/>
        </authorList>
    </citation>
    <scope>INTERACTION WITH ANKRD13A; ANKRD13B AND ANKRD13D</scope>
    <scope>UBIQUITINATION</scope>
    <scope>SUBCELLULAR LOCATION</scope>
</reference>
<reference key="78">
    <citation type="journal article" date="2012" name="Oncogene">
        <title>Deubiquitination of EGFR by Cezanne-1 contributes to cancer progression.</title>
        <authorList>
            <person name="Pareja F."/>
            <person name="Ferraro D.A."/>
            <person name="Rubin C."/>
            <person name="Cohen-Dvashi H."/>
            <person name="Zhang F."/>
            <person name="Aulmann S."/>
            <person name="Ben-Chetrit N."/>
            <person name="Pines G."/>
            <person name="Navon R."/>
            <person name="Crosetto N."/>
            <person name="Kostler W."/>
            <person name="Carvalho S."/>
            <person name="Lavi S."/>
            <person name="Schmitt F."/>
            <person name="Dikic I."/>
            <person name="Yakhini Z."/>
            <person name="Sinn P."/>
            <person name="Mills G.B."/>
            <person name="Yarden Y."/>
        </authorList>
    </citation>
    <scope>UBIQUITINATION</scope>
    <scope>DEUBIQUITINATION BY OTUD7B</scope>
</reference>
<reference key="79">
    <citation type="journal article" date="2013" name="Cancer Res.">
        <title>CTEN prolongs signaling by EGFR through reducing its ligand-induced degradation.</title>
        <authorList>
            <person name="Hong S.Y."/>
            <person name="Shih Y.P."/>
            <person name="Li T."/>
            <person name="Carraway K.L. III"/>
            <person name="Lo S.H."/>
        </authorList>
    </citation>
    <scope>INTERACTION WITH CBL</scope>
    <scope>PHOSPHORYLATION AT TYR-869; TYR-1016; TYR-1069; TYR-1092 AND TYR-1197</scope>
</reference>
<reference key="80">
    <citation type="journal article" date="2013" name="J. Cell Sci.">
        <title>The E3 ubiquitin ligases RNF126 and Rabring7 regulate endosomal sorting of the epidermal growth factor receptor.</title>
        <authorList>
            <person name="Smith C.J."/>
            <person name="Berry D.M."/>
            <person name="McGlade C.J."/>
        </authorList>
    </citation>
    <scope>INTERACTION WITH RNF115 AND RNF126</scope>
</reference>
<reference key="81">
    <citation type="journal article" date="2013" name="J. Proteome Res.">
        <title>Toward a comprehensive characterization of a human cancer cell phosphoproteome.</title>
        <authorList>
            <person name="Zhou H."/>
            <person name="Di Palma S."/>
            <person name="Preisinger C."/>
            <person name="Peng M."/>
            <person name="Polat A.N."/>
            <person name="Heck A.J."/>
            <person name="Mohammed S."/>
        </authorList>
    </citation>
    <scope>PHOSPHORYLATION [LARGE SCALE ANALYSIS] AT THR-693 AND SER-1064</scope>
    <scope>IDENTIFICATION BY MASS SPECTROMETRY [LARGE SCALE ANALYSIS]</scope>
    <source>
        <tissue>Cervix carcinoma</tissue>
    </source>
</reference>
<reference key="82">
    <citation type="journal article" date="2014" name="J. Proteomics">
        <title>An enzyme assisted RP-RPLC approach for in-depth analysis of human liver phosphoproteome.</title>
        <authorList>
            <person name="Bian Y."/>
            <person name="Song C."/>
            <person name="Cheng K."/>
            <person name="Dong M."/>
            <person name="Wang F."/>
            <person name="Huang J."/>
            <person name="Sun D."/>
            <person name="Wang L."/>
            <person name="Ye M."/>
            <person name="Zou H."/>
        </authorList>
    </citation>
    <scope>PHOSPHORYLATION [LARGE SCALE ANALYSIS] AT THR-693; SER-991; SER-1026 AND SER-1166</scope>
    <scope>IDENTIFICATION BY MASS SPECTROMETRY [LARGE SCALE ANALYSIS]</scope>
    <source>
        <tissue>Liver</tissue>
    </source>
</reference>
<reference key="83">
    <citation type="journal article" date="2014" name="Mol. Biol. Cell">
        <title>Structural basis for activation of trimeric Gi proteins by multiple growth factor receptors via GIV/Girdin.</title>
        <authorList>
            <person name="Lin C."/>
            <person name="Ear J."/>
            <person name="Midde K."/>
            <person name="Lopez-Sanchez I."/>
            <person name="Aznar N."/>
            <person name="Garcia-Marcos M."/>
            <person name="Kufareva I."/>
            <person name="Abagyan R."/>
            <person name="Ghosh P."/>
        </authorList>
    </citation>
    <scope>INTERACTION WITH CCDC88A AND GNAI3</scope>
</reference>
<reference key="84">
    <citation type="journal article" date="2013" name="J. Biol. Chem.">
        <title>Transforming growth factor-beta1 (TGF-beta1)-stimulated fibroblast to myofibroblast differentiation is mediated by hyaluronan (HA)-facilitated epidermal growth factor receptor (EGFR) and CD44 co-localization in lipid rafts.</title>
        <authorList>
            <person name="Midgley A.C."/>
            <person name="Rogers M."/>
            <person name="Hallett M.B."/>
            <person name="Clayton A."/>
            <person name="Bowen T."/>
            <person name="Phillips A.O."/>
            <person name="Steadman R."/>
        </authorList>
    </citation>
    <scope>SUBCELLULAR LOCATION</scope>
    <scope>INTERACTION WITH CD44</scope>
</reference>
<reference key="85">
    <citation type="journal article" date="2014" name="Mol. Cancer">
        <title>EGFR phosphorylates and inhibits lung tumor suppressor GPRC5A in lung cancer.</title>
        <authorList>
            <person name="Lin X."/>
            <person name="Zhong S."/>
            <person name="Ye X."/>
            <person name="Liao Y."/>
            <person name="Yao F."/>
            <person name="Yang X."/>
            <person name="Sun B."/>
            <person name="Zhang J."/>
            <person name="Li Q."/>
            <person name="Gao Y."/>
            <person name="Wang Y."/>
            <person name="Liu J."/>
            <person name="Han B."/>
            <person name="Chin Y.E."/>
            <person name="Zhou B.P."/>
            <person name="Deng J."/>
        </authorList>
    </citation>
    <scope>INTERACTION WITH GPRC5A</scope>
</reference>
<reference key="86">
    <citation type="journal article" date="2014" name="Oncogene">
        <title>Hyperactivation of EGFR and downstream effector phospholipase D1 by oncogenic FAM83B.</title>
        <authorList>
            <person name="Cipriano R."/>
            <person name="Bryson B.L."/>
            <person name="Miskimen K.L."/>
            <person name="Bartel C.A."/>
            <person name="Hernandez-Sanchez W."/>
            <person name="Bruntz R.C."/>
            <person name="Scott S.A."/>
            <person name="Lindsley C.W."/>
            <person name="Brown H.A."/>
            <person name="Jackson M.W."/>
        </authorList>
    </citation>
    <scope>INTERACTION WITH FAM83B</scope>
</reference>
<reference key="87">
    <citation type="journal article" date="2015" name="Glycobiology">
        <title>NEU3 activity enhances EGFR activation without affecting EGFR expression and acts on its sialylation levels.</title>
        <authorList>
            <person name="Mozzi A."/>
            <person name="Forcella M."/>
            <person name="Riva A."/>
            <person name="Difrancesco C."/>
            <person name="Molinari F."/>
            <person name="Martin V."/>
            <person name="Papini N."/>
            <person name="Bernasconi B."/>
            <person name="Nonnis S."/>
            <person name="Tedeschi G."/>
            <person name="Mazzucchelli L."/>
            <person name="Monti E."/>
            <person name="Fusi P."/>
            <person name="Frattini M."/>
        </authorList>
    </citation>
    <scope>GLYCOSYLATION AT ASN-528</scope>
    <scope>ACTIVITY REGULATION</scope>
</reference>
<reference key="88">
    <citation type="journal article" date="2016" name="Mol. Cell">
        <title>Inhibition of DHHC20-Mediated EGFR Palmitoylation Creates a Dependence on EGFR Signaling.</title>
        <authorList>
            <person name="Runkle K.B."/>
            <person name="Kharbanda A."/>
            <person name="Stypulkowski E."/>
            <person name="Cao X.J."/>
            <person name="Wang W."/>
            <person name="Garcia B.A."/>
            <person name="Witze E.S."/>
        </authorList>
    </citation>
    <scope>FUNCTION</scope>
    <scope>PALMITOYLATION AT CYS-1049 AND CYS-1146</scope>
    <scope>IDENTIFICATION BY MASS SPECTROMETRY</scope>
    <scope>UBIQUITINATION</scope>
    <scope>PHOSPHORYLATION AT TYR-1092; TYR-1172 AND TYR-1197</scope>
    <scope>SUBCELLULAR LOCATION</scope>
    <scope>MUTAGENESIS OF 1048-ALA--ALA-1210; CYS-1049 AND CYS-1146</scope>
</reference>
<reference key="89">
    <citation type="journal article" date="2016" name="Nat. Commun.">
        <title>Haem-dependent dimerization of PGRMC1/Sigma-2 receptor facilitates cancer proliferation and chemoresistance.</title>
        <authorList>
            <person name="Kabe Y."/>
            <person name="Nakane T."/>
            <person name="Koike I."/>
            <person name="Yamamoto T."/>
            <person name="Sugiura Y."/>
            <person name="Harada E."/>
            <person name="Sugase K."/>
            <person name="Shimamura T."/>
            <person name="Ohmura M."/>
            <person name="Muraoka K."/>
            <person name="Yamamoto A."/>
            <person name="Uchida T."/>
            <person name="Iwata S."/>
            <person name="Yamaguchi Y."/>
            <person name="Krayukhina E."/>
            <person name="Noda M."/>
            <person name="Handa H."/>
            <person name="Ishimori K."/>
            <person name="Uchiyama S."/>
            <person name="Kobayashi T."/>
            <person name="Suematsu M."/>
        </authorList>
    </citation>
    <scope>INTERACTION WITH PGRMC1</scope>
</reference>
<reference key="90">
    <citation type="journal article" date="2017" name="Gene">
        <title>Beclin1 antagonizes LAPTM4B-mediated EGFR overactivation in gastric cancer cells.</title>
        <authorList>
            <person name="Tian M."/>
            <person name="Chen Y."/>
            <person name="Tian D."/>
            <person name="Qiao X."/>
            <person name="Ma Z."/>
            <person name="Li J."/>
        </authorList>
    </citation>
    <scope>INTERACTION WITH LAPTM4B</scope>
</reference>
<reference key="91">
    <citation type="journal article" date="2018" name="Cell Res.">
        <title>Landscape of the regulatory elements for lysine 2-hydroxyisobutyrylation pathway.</title>
        <authorList>
            <person name="Huang H."/>
            <person name="Luo Z."/>
            <person name="Qi S."/>
            <person name="Huang J."/>
            <person name="Xu P."/>
            <person name="Wang X."/>
            <person name="Gao L."/>
            <person name="Li F."/>
            <person name="Wang J."/>
            <person name="Zhao W."/>
            <person name="Gu W."/>
            <person name="Chen Z."/>
            <person name="Dai L."/>
            <person name="Dai J."/>
            <person name="Zhao Y."/>
        </authorList>
    </citation>
    <scope>HYDROXYBUTYRYLATION AT LYS-745</scope>
</reference>
<reference key="92">
    <citation type="journal article" date="2018" name="Proc. Natl. Acad. Sci. U.S.A.">
        <title>TRAF4 binds to the juxtamembrane region of EGFR directly and promotes kinase activation.</title>
        <authorList>
            <person name="Cai G."/>
            <person name="Zhu L."/>
            <person name="Chen X."/>
            <person name="Sun K."/>
            <person name="Liu C."/>
            <person name="Sen G.C."/>
            <person name="Stark G.R."/>
            <person name="Qin J."/>
            <person name="Li X."/>
        </authorList>
    </citation>
    <scope>INTERACTION WITH TRAF4</scope>
</reference>
<reference key="93">
    <citation type="journal article" date="2021" name="Front. Cell Dev. Biol.">
        <title>ZNRF1 Mediates Epidermal Growth Factor Receptor Ubiquitination to Control Receptor Lysosomal Trafficking and Degradation.</title>
        <authorList>
            <person name="Shen C.H."/>
            <person name="Chou C.C."/>
            <person name="Lai T.Y."/>
            <person name="Hsu J.E."/>
            <person name="Lin Y.S."/>
            <person name="Liu H.Y."/>
            <person name="Chen Y.K."/>
            <person name="Ho I.L."/>
            <person name="Hsu P.H."/>
            <person name="Chuang T.H."/>
            <person name="Lee C.Y."/>
            <person name="Hsu L.C."/>
        </authorList>
    </citation>
    <scope>UBIQUITINATION BY ZNRF1 AND CBL</scope>
</reference>
<reference key="94">
    <citation type="journal article" date="2022" name="Acta Biochim. Biophys. Sin.">
        <title>CD82 palmitoylation site mutations at Cys5+Cys74 affect EGFR internalization and metabolism through recycling pathway.</title>
        <authorList>
            <person name="Bu J."/>
            <person name="Zhong W."/>
            <person name="Li M."/>
            <person name="He S."/>
            <person name="Zhang M."/>
            <person name="Zhang Y."/>
            <person name="Li Y."/>
        </authorList>
    </citation>
    <scope>FUNCTION</scope>
    <scope>SUBCELLULAR LOCATION</scope>
    <scope>INTERACTION WITH CD82</scope>
</reference>
<reference evidence="102" key="95">
    <citation type="journal article" date="2002" name="Cell">
        <title>Crystal structure of a truncated epidermal growth factor receptor extracellular domain bound to transforming growth factor alpha.</title>
        <authorList>
            <person name="Garrett T.P."/>
            <person name="McKern N.M."/>
            <person name="Lou M."/>
            <person name="Elleman T.C."/>
            <person name="Adams T.E."/>
            <person name="Lovrecz G.O."/>
            <person name="Zhu H.J."/>
            <person name="Walker F."/>
            <person name="Frenkel M.J."/>
            <person name="Hoyne P.A."/>
            <person name="Jorissen R.N."/>
            <person name="Nice E.C."/>
            <person name="Burgess A.W."/>
            <person name="Ward C.W."/>
        </authorList>
    </citation>
    <scope>X-RAY CRYSTALLOGRAPHY (2.50 ANGSTROMS) OF 25-525 IN COMPLEX WITH TGFA</scope>
    <scope>FUNCTION</scope>
    <scope>GLYCOSYLATION AT ASN-56; ASN-196 AND ASN-352</scope>
    <scope>DISULFIDE BONDS</scope>
</reference>
<reference evidence="101" key="96">
    <citation type="journal article" date="2002" name="Cell">
        <title>Crystal structure of the complex of human epidermal growth factor and receptor extracellular domains.</title>
        <authorList>
            <person name="Ogiso H."/>
            <person name="Ishitani R."/>
            <person name="Nureki O."/>
            <person name="Fukai S."/>
            <person name="Yamanaka M."/>
            <person name="Kim J.H."/>
            <person name="Saito K."/>
            <person name="Sakamoto A."/>
            <person name="Inoue M."/>
            <person name="Shirouzu M."/>
            <person name="Yokoyama S."/>
        </authorList>
    </citation>
    <scope>X-RAY CRYSTALLOGRAPHY (3.3 ANGSTROMS) OF 25-646 IN COMPLEX WITH EGF</scope>
    <scope>FUNCTION IN MAPK1 AND/OR MAPK3 ACTIVATION</scope>
    <scope>SUBUNIT</scope>
    <scope>SUBCELLULAR LOCATION</scope>
    <scope>MUTAGENESIS OF TYR-275; PHE-287; ARG-309 AND ARG-429</scope>
    <scope>DISULFIDE BONDS</scope>
    <scope>GLYCOSYLATION AT ASN-56; ASN-175; ASN-196; ASN-352; ASN-361 AND ASN-444</scope>
</reference>
<reference evidence="103" key="97">
    <citation type="journal article" date="2003" name="Mol. Cell">
        <title>EGF activates its receptor by removing interactions that autoinhibit ectodomain dimerization.</title>
        <authorList>
            <person name="Ferguson K.M."/>
            <person name="Berger M.B."/>
            <person name="Mendrola J.M."/>
            <person name="Cho H.S."/>
            <person name="Leahy D.J."/>
            <person name="Lemmon M.A."/>
        </authorList>
    </citation>
    <scope>X-RAY CRYSTALLOGRAPHY (2.8 ANGSTROMS) OF 25-642 IN COMPLEX WITH EGF</scope>
    <scope>FUNCTION</scope>
    <scope>SUBUNIT</scope>
    <scope>MUTAGENESIS OF 587-ASP--HIS-590 AND LYS-609</scope>
    <scope>DISULFIDE BONDS</scope>
    <scope>GLYCOSYLATION AT ASN-352; ASN-361; ASN-444; ASN-528; ASN-568 AND ASN-603</scope>
</reference>
<reference evidence="104" key="98">
    <citation type="journal article" date="2004" name="Cancer Res.">
        <title>A unique structure for epidermal growth factor receptor bound to GW572016 (Lapatinib): relationships among protein conformation, inhibitor off-rate, and receptor activity in tumor cells.</title>
        <authorList>
            <person name="Wood E.R."/>
            <person name="Truesdale A.T."/>
            <person name="McDonald O.B."/>
            <person name="Yuan D."/>
            <person name="Hassell A."/>
            <person name="Dickerson S.H."/>
            <person name="Ellis B."/>
            <person name="Pennisi C."/>
            <person name="Horne E."/>
            <person name="Lackey K."/>
            <person name="Alligood K.J."/>
            <person name="Rusnak D.W."/>
            <person name="Gilmer T.M."/>
            <person name="Shewchuk L."/>
        </authorList>
    </citation>
    <scope>X-RAY CRYSTALLOGRAPHY (2.40 ANGSTROMS) OF 695-1022 IN COMPLEX WITH GW572016</scope>
    <scope>CATALYTIC ACTIVITY</scope>
    <scope>FUNCTION</scope>
</reference>
<reference evidence="105" key="99">
    <citation type="journal article" date="2005" name="Cancer Cell">
        <title>Structural basis for inhibition of the epidermal growth factor receptor by cetuximab.</title>
        <authorList>
            <person name="Li S."/>
            <person name="Schmitz K.R."/>
            <person name="Jeffrey P.D."/>
            <person name="Wiltzius J.J."/>
            <person name="Kussie P."/>
            <person name="Ferguson K.M."/>
        </authorList>
    </citation>
    <scope>X-RAY CRYSTALLOGRAPHY (2.60 ANGSTROMS) OF 25-642 IN COMPLEX WITH CETUXIMAB</scope>
</reference>
<reference key="100">
    <citation type="journal article" date="2005" name="J. Biol. Chem.">
        <title>A structural model for the membrane-bound form of the juxtamembrane domain of the epidermal growth factor receptor.</title>
        <authorList>
            <person name="Choowongkomon K."/>
            <person name="Carlin C.R."/>
            <person name="Sonnichsen F.D."/>
        </authorList>
    </citation>
    <scope>STRUCTURE BY NMR OF 669-721</scope>
</reference>
<reference evidence="108 109 110 111 112 113 114 116" key="101">
    <citation type="journal article" date="2007" name="Cancer Cell">
        <title>Structures of lung cancer-derived EGFR mutants and inhibitor complexes: mechanism of activation and insights into differential inhibitor sensitivity.</title>
        <authorList>
            <person name="Yun C.H."/>
            <person name="Boggon T.J."/>
            <person name="Li Y."/>
            <person name="Woo M.S."/>
            <person name="Greulich H."/>
            <person name="Meyerson M."/>
            <person name="Eck M.J."/>
        </authorList>
    </citation>
    <scope>X-RAY CRYSTALLOGRAPHY (2.47 ANGSTROMS) OF 696-1022 OF WILD-TYPE AND VARIANTS SER-719 AND ARG-858 IN COMPLEXES WITH ATP ANALOGS AND SYNTHETIC INHIBITORS</scope>
    <scope>CATALYTIC ACTIVITY</scope>
    <scope>AUTOPHOSPHORYLATION</scope>
    <scope>CHARACTERIZATION OF VARIANTS SER-719 AND ARG-858</scope>
</reference>
<reference key="102">
    <citation type="journal article" date="2007" name="Nature">
        <title>Inhibition of the EGF receptor by binding of MIG6 to an activating kinase domain interface.</title>
        <authorList>
            <person name="Zhang X."/>
            <person name="Pickin K.A."/>
            <person name="Bose R."/>
            <person name="Jura N."/>
            <person name="Cole P.A."/>
            <person name="Kuriyan J."/>
        </authorList>
    </citation>
    <scope>X-RAY CRYSTALLOGRAPHY (2.90 ANGSTROMS) OF 702-1022 IN COMPLEX WITH ERRFI1</scope>
    <scope>ACTIVITY REGULATION</scope>
    <scope>CATALYTIC ACTIVITY</scope>
    <scope>AUTOPHOSPHORYLATION</scope>
    <scope>SUBUNIT</scope>
    <scope>INTERACTION WITH ERRFI1</scope>
</reference>
<reference evidence="117 118 119" key="103">
    <citation type="journal article" date="2008" name="Proc. Natl. Acad. Sci. U.S.A.">
        <title>The T790M mutation in EGFR kinase causes drug resistance by increasing the affinity for ATP.</title>
        <authorList>
            <person name="Yun C.H."/>
            <person name="Mengwasser K.E."/>
            <person name="Toms A.V."/>
            <person name="Woo M.S."/>
            <person name="Greulich H."/>
            <person name="Wong K.K."/>
            <person name="Meyerson M."/>
            <person name="Eck M.J."/>
        </authorList>
    </citation>
    <scope>X-RAY CRYSTALLOGRAPHY (3.05 ANGSTROMS) OF 695-1022 OF VARIANT MET-790</scope>
    <scope>CATALYTIC ACTIVITY</scope>
    <scope>CHARACTERIZATION OF VARIANT MET-790</scope>
</reference>
<reference evidence="125" key="104">
    <citation type="journal article" date="2009" name="Cell">
        <title>Mechanism for activation of the EGF receptor catalytic domain by the juxtamembrane segment.</title>
        <authorList>
            <person name="Jura N."/>
            <person name="Endres N.F."/>
            <person name="Engel K."/>
            <person name="Deindl S."/>
            <person name="Das R."/>
            <person name="Lamers M.H."/>
            <person name="Wemmer D.E."/>
            <person name="Zhang X."/>
            <person name="Kuriyan J."/>
        </authorList>
    </citation>
    <scope>X-RAY CRYSTALLOGRAPHY (2.96 ANGSTROMS) OF 696-1022</scope>
    <scope>CATALYTIC ACTIVITY</scope>
    <scope>PHOSPHORYLATION AT TYR-998; TYR-1016 AND TYR-1197</scope>
    <scope>MUTAGENESIS OF LEU-688; GLU-690; LEU-692; ARG-977 AND 1005-GLU-ASP-1006</scope>
    <scope>SUBUNIT</scope>
</reference>
<reference key="105">
    <citation type="journal article" date="2009" name="Mol. Cell">
        <title>The juxtamembrane region of the EGF receptor functions as an activation domain.</title>
        <authorList>
            <person name="Red Brewer M."/>
            <person name="Choi S.H."/>
            <person name="Alvarado D."/>
            <person name="Moravcevic K."/>
            <person name="Pozzi A."/>
            <person name="Lemmon M.A."/>
            <person name="Carpenter G."/>
        </authorList>
    </citation>
    <scope>X-RAY CRYSTALLOGRAPHY (2.80 ANGSTROMS) OF 669-1022 OF MUTANT MET-745</scope>
    <scope>CATALYTIC ACTIVITY</scope>
    <scope>FUNCTION</scope>
    <scope>SUBUNIT</scope>
    <scope>SUBCELLULAR LOCATION</scope>
    <scope>AUTOPHOSPHORYLATION</scope>
    <scope>MUTAGENESIS OF LEU-688; VAL-689; GLU-690; LEU-692; THR-693; PRO-694; PRO-699; ASN-700; LEU-704; ARG-705; ILE-706 AND LYS-745</scope>
</reference>
<reference key="106">
    <citation type="journal article" date="2010" name="J. Mol. Biol.">
        <title>Spatial structure of the transmembrane domain heterodimer of ErbB1 and ErbB2 receptor tyrosine kinases.</title>
        <authorList>
            <person name="Mineev K.S."/>
            <person name="Bocharov E.V."/>
            <person name="Pustovalova Y.E."/>
            <person name="Bocharova O.V."/>
            <person name="Chupin V.V."/>
            <person name="Arseniev A.S."/>
        </authorList>
    </citation>
    <scope>STRUCTURE BY NMR OF 634-677 IN COMPLEX WITH ERBB2</scope>
    <scope>SUBUNIT</scope>
</reference>
<reference evidence="126" key="107">
    <citation type="journal article" date="2010" name="Mol. Cell. Biol.">
        <title>Structural evidence for loose linkage between ligand binding and kinase activation in the epidermal growth factor receptor.</title>
        <authorList>
            <person name="Lu C."/>
            <person name="Mi L.Z."/>
            <person name="Grey M.J."/>
            <person name="Zhu J."/>
            <person name="Graef E."/>
            <person name="Yokoyama S."/>
            <person name="Springer T.A."/>
        </authorList>
    </citation>
    <scope>X-RAY CRYSTALLOGRAPHY (3.3 ANGSTROMS) OF 25-638 IN COMPLEX WITH EGF</scope>
    <scope>FUNCTION</scope>
    <scope>SUBUNIT</scope>
    <scope>DISULFIDE BONDS</scope>
    <scope>GLYCOSYLATION AT ASN-56; ASN-73; ASN-175; ASN-196; ASN-352; ASN-361; ASN-444 AND ASN-528</scope>
</reference>
<reference key="108">
    <citation type="submission" date="2010-10" db="PDB data bank">
        <title>Crystal structure of Cbl-b TKB domain in complex with EGFR pY1069 peptide.</title>
        <authorList>
            <consortium name="Structural genomics consortium"/>
        </authorList>
    </citation>
    <scope>X-RAY CRYSTALLOGRAPHY (2.27 ANGSTROMS) OF 1066-1076 IN COMPLEX WITH CBLB</scope>
    <scope>INTERACTION WITH CBLB</scope>
</reference>
<reference key="109">
    <citation type="journal article" date="2012" name="J. Biochem.">
        <title>Structural flexibility regulates phosphopeptide-binding activity of the tyrosine kinase binding domain of Cbl-c.</title>
        <authorList>
            <person name="Takeshita K."/>
            <person name="Tezuka T."/>
            <person name="Isozaki Y."/>
            <person name="Yamashita E."/>
            <person name="Suzuki M."/>
            <person name="Kim M."/>
            <person name="Yamanashi Y."/>
            <person name="Yamamoto T."/>
            <person name="Nakagawa A."/>
        </authorList>
    </citation>
    <scope>X-RAY CRYSTALLOGRAPHY (1.52 ANGSTROMS) OF 1062-1074 IN COMPLEX WITH CBLC</scope>
    <scope>PHOSPHORYLATION AT TYR-1069</scope>
    <scope>INTERACTION WITH CBLC</scope>
    <scope>MUTAGENESIS OF GLN-1067; ARG-1068 AND TYR-1069</scope>
</reference>
<reference key="110">
    <citation type="journal article" date="2004" name="Clin. Cancer Res.">
        <title>High frequency of epidermal growth factor receptor mutations with complex patterns in non-small cell lung cancers related to gefitinib responsiveness in Taiwan.</title>
        <authorList>
            <person name="Huang S.F."/>
            <person name="Liu H.P."/>
            <person name="Li L.H."/>
            <person name="Ku Y.C."/>
            <person name="Fu Y.N."/>
            <person name="Tsai H.Y."/>
            <person name="Chen Y.T."/>
            <person name="Lin Y.F."/>
            <person name="Chang W.C."/>
            <person name="Kuo H.P."/>
            <person name="Wu Y.C."/>
            <person name="Chen Y.R."/>
            <person name="Tsai S.F."/>
        </authorList>
    </citation>
    <scope>VARIANTS ALA-709; GLY-709; CYS-719; SER-719; 746-GLU--ALA-750 DEL; 746-GLU--THR-751 DELINS ALA; 746-GLU--SER-752 DELINS ASP; 747-LEU--THR-751 DEL; ILE-768; MET-769; VAL-833; LEU-835; VAL-838; ARG-858 AND GLN-861</scope>
</reference>
<reference key="111">
    <citation type="journal article" date="2004" name="Science">
        <title>EGFR mutations in lung cancer: correlation with clinical response to gefitinib therapy.</title>
        <authorList>
            <person name="Paez J.G."/>
            <person name="Janne P.A."/>
            <person name="Lee J.C."/>
            <person name="Tracy S."/>
            <person name="Greulich H."/>
            <person name="Gabriel S."/>
            <person name="Herman P."/>
            <person name="Kaye F.J."/>
            <person name="Lindeman N."/>
            <person name="Boggon T.J."/>
            <person name="Naoki K."/>
            <person name="Sasaki H."/>
            <person name="Fujii Y."/>
            <person name="Eck M.J."/>
            <person name="Sellers W.R."/>
            <person name="Johnson B.E."/>
            <person name="Meyerson M."/>
        </authorList>
    </citation>
    <scope>VARIANTS SER-719 AND ARG-858</scope>
    <scope>POSSIBLE INVOLVEMENT IN LUNG CANCER</scope>
</reference>
<reference key="112">
    <citation type="journal article" date="2006" name="Clin. Cancer Res.">
        <title>Distinct epidermal growth factor receptor and KRAS mutation patterns in non-small cell lung cancer patients with different tobacco exposure and clinicopathologic features.</title>
        <authorList>
            <person name="Tam I.Y.S."/>
            <person name="Chung L.P."/>
            <person name="Suen W.S."/>
            <person name="Wang E."/>
            <person name="Wong M.C.M."/>
            <person name="Ho K.K."/>
            <person name="Lam W.K."/>
            <person name="Chiu S.W."/>
            <person name="Girard L."/>
            <person name="Minna J.D."/>
            <person name="Gazdar A.F."/>
            <person name="Wong M.P."/>
        </authorList>
    </citation>
    <scope>VARIANTS ALA-709; LYS-709; ALA-719; ASP-719; CYS-719; SER-719; SER-724; LYS-734; GLU-746 DEL; PHE-747; 747-LEU--GLU-749 DEL; PRO-748; 752-SER--ILE-759 DEL; ARG-787; MET-790; VAL-833; LEU-834; MET-858; ARG-858; GLN-861 AND GLU-873</scope>
    <scope>POSSIBLE INVOLVEMENT IN LUNG CANCER</scope>
</reference>
<reference key="113">
    <citation type="journal article" date="2006" name="Oncogene">
        <title>Distinctive activation patterns in constitutively active and gefitinib-sensitive EGFR mutants.</title>
        <authorList>
            <person name="Chen Y.R."/>
            <person name="Fu Y.N."/>
            <person name="Lin C.H."/>
            <person name="Yang S.T."/>
            <person name="Hu S.F."/>
            <person name="Chen Y.T."/>
            <person name="Tsai S.F."/>
            <person name="Huang S.F."/>
        </authorList>
    </citation>
    <scope>CHARACTERIZATION OF VARIANTS ALA-709; GLY-709; SER-719; ILE-768; VAL-833; LEU-835; VAL-838; ARG-858 AND GLN-861</scope>
</reference>
<reference key="114">
    <citation type="journal article" date="2006" name="Proc. Natl. Acad. Sci. U.S.A.">
        <title>Epidermal growth factor receptor variant III mutations in lung tumorigenesis and sensitivity to tyrosine kinase inhibitors.</title>
        <authorList>
            <person name="Ji H."/>
            <person name="Zhao X."/>
            <person name="Yuza Y."/>
            <person name="Shimamura T."/>
            <person name="Li D."/>
            <person name="Protopopov A."/>
            <person name="Jung B.L."/>
            <person name="McNamara K."/>
            <person name="Xia H."/>
            <person name="Glatt K.A."/>
            <person name="Thomas R.K."/>
            <person name="Sasaki H."/>
            <person name="Horner J.W."/>
            <person name="Eck M."/>
            <person name="Mitchell A."/>
            <person name="Sun Y."/>
            <person name="Al-Hashem R."/>
            <person name="Bronson R.T."/>
            <person name="Rabindran S.K."/>
            <person name="Discafani C.M."/>
            <person name="Maher E."/>
            <person name="Shapiro G.I."/>
            <person name="Meyerson M."/>
            <person name="Wong K.K."/>
        </authorList>
    </citation>
    <scope>VARIANT 30-VAL--ARG-297 DEL</scope>
    <scope>POSSIBLE INVOLVEMENT IN LUNG CANCER</scope>
</reference>
<reference key="115">
    <citation type="journal article" date="2007" name="Nature">
        <title>Patterns of somatic mutation in human cancer genomes.</title>
        <authorList>
            <person name="Greenman C."/>
            <person name="Stephens P."/>
            <person name="Smith R."/>
            <person name="Dalgliesh G.L."/>
            <person name="Hunter C."/>
            <person name="Bignell G."/>
            <person name="Davies H."/>
            <person name="Teague J."/>
            <person name="Butler A."/>
            <person name="Stevens C."/>
            <person name="Edkins S."/>
            <person name="O'Meara S."/>
            <person name="Vastrik I."/>
            <person name="Schmidt E.E."/>
            <person name="Avis T."/>
            <person name="Barthorpe S."/>
            <person name="Bhamra G."/>
            <person name="Buck G."/>
            <person name="Choudhury B."/>
            <person name="Clements J."/>
            <person name="Cole J."/>
            <person name="Dicks E."/>
            <person name="Forbes S."/>
            <person name="Gray K."/>
            <person name="Halliday K."/>
            <person name="Harrison R."/>
            <person name="Hills K."/>
            <person name="Hinton J."/>
            <person name="Jenkinson A."/>
            <person name="Jones D."/>
            <person name="Menzies A."/>
            <person name="Mironenko T."/>
            <person name="Perry J."/>
            <person name="Raine K."/>
            <person name="Richardson D."/>
            <person name="Shepherd R."/>
            <person name="Small A."/>
            <person name="Tofts C."/>
            <person name="Varian J."/>
            <person name="Webb T."/>
            <person name="West S."/>
            <person name="Widaa S."/>
            <person name="Yates A."/>
            <person name="Cahill D.P."/>
            <person name="Louis D.N."/>
            <person name="Goldstraw P."/>
            <person name="Nicholson A.G."/>
            <person name="Brasseur F."/>
            <person name="Looijenga L."/>
            <person name="Weber B.L."/>
            <person name="Chiew Y.-E."/>
            <person name="DeFazio A."/>
            <person name="Greaves M.F."/>
            <person name="Green A.R."/>
            <person name="Campbell P."/>
            <person name="Birney E."/>
            <person name="Easton D.F."/>
            <person name="Chenevix-Trench G."/>
            <person name="Tan M.-H."/>
            <person name="Khoo S.K."/>
            <person name="Teh B.T."/>
            <person name="Yuen S.T."/>
            <person name="Leung S.Y."/>
            <person name="Wooster R."/>
            <person name="Futreal P.A."/>
            <person name="Stratton M.R."/>
        </authorList>
    </citation>
    <scope>VARIANTS [LARGE SCALE ANALYSIS] LYS-521; ARG-1034 AND VAL-1210</scope>
</reference>
<reference key="116">
    <citation type="journal article" date="2014" name="J. Invest. Dermatol.">
        <title>Epithelial inflammation resulting from an inherited loss-of-function mutation in EGFR.</title>
        <authorList>
            <person name="Campbell P."/>
            <person name="Morton P.E."/>
            <person name="Takeichi T."/>
            <person name="Salam A."/>
            <person name="Roberts N."/>
            <person name="Proudfoot L.E."/>
            <person name="Mellerio J.E."/>
            <person name="Aminu K."/>
            <person name="Wellington C."/>
            <person name="Patil S.N."/>
            <person name="Akiyama M."/>
            <person name="Liu L."/>
            <person name="McMillan J.R."/>
            <person name="Aristodemou S."/>
            <person name="Ishida-Yamamoto A."/>
            <person name="Abdul-Wahab A."/>
            <person name="Petrof G."/>
            <person name="Fong K."/>
            <person name="Harnchoowong S."/>
            <person name="Stone K.L."/>
            <person name="Harper J.I."/>
            <person name="McLean W.H."/>
            <person name="Simpson M.A."/>
            <person name="Parsons M."/>
            <person name="McGrath J.A."/>
        </authorList>
    </citation>
    <scope>VARIANT NNCIS ASP-428</scope>
    <scope>CHARACTERIZATION OF VARIANT NNCIS ASP-428</scope>
    <scope>INVOLVEMENT IN NNCIS</scope>
</reference>
<proteinExistence type="evidence at protein level"/>
<protein>
    <recommendedName>
        <fullName evidence="97">Epidermal growth factor receptor</fullName>
        <ecNumber>2.7.10.1</ecNumber>
    </recommendedName>
    <alternativeName>
        <fullName>Proto-oncogene c-ErbB-1</fullName>
    </alternativeName>
    <alternativeName>
        <fullName>Receptor tyrosine-protein kinase erbB-1</fullName>
    </alternativeName>
</protein>
<accession>P00533</accession>
<accession>O00688</accession>
<accession>O00732</accession>
<accession>P06268</accession>
<accession>Q14225</accession>
<accession>Q68GS5</accession>
<accession>Q92795</accession>
<accession>Q9BZS2</accession>
<accession>Q9GZX1</accession>
<accession>Q9H2C9</accession>
<accession>Q9H3C9</accession>
<accession>Q9UMD7</accession>
<accession>Q9UMD8</accession>
<accession>Q9UMG5</accession>
<gene>
    <name evidence="100" type="primary">EGFR</name>
    <name type="synonym">ERBB</name>
    <name type="synonym">ERBB1</name>
    <name type="synonym">HER1</name>
</gene>
<name>EGFR_HUMAN</name>
<evidence type="ECO:0000250" key="1">
    <source>
        <dbReference type="UniProtKB" id="Q01279"/>
    </source>
</evidence>
<evidence type="ECO:0000255" key="2"/>
<evidence type="ECO:0000255" key="3">
    <source>
        <dbReference type="PROSITE-ProRule" id="PRU00159"/>
    </source>
</evidence>
<evidence type="ECO:0000255" key="4">
    <source>
        <dbReference type="PROSITE-ProRule" id="PRU10028"/>
    </source>
</evidence>
<evidence type="ECO:0000256" key="5">
    <source>
        <dbReference type="SAM" id="MobiDB-lite"/>
    </source>
</evidence>
<evidence type="ECO:0000269" key="6">
    <source>
    </source>
</evidence>
<evidence type="ECO:0000269" key="7">
    <source>
    </source>
</evidence>
<evidence type="ECO:0000269" key="8">
    <source>
    </source>
</evidence>
<evidence type="ECO:0000269" key="9">
    <source>
    </source>
</evidence>
<evidence type="ECO:0000269" key="10">
    <source>
    </source>
</evidence>
<evidence type="ECO:0000269" key="11">
    <source>
    </source>
</evidence>
<evidence type="ECO:0000269" key="12">
    <source>
    </source>
</evidence>
<evidence type="ECO:0000269" key="13">
    <source>
    </source>
</evidence>
<evidence type="ECO:0000269" key="14">
    <source>
    </source>
</evidence>
<evidence type="ECO:0000269" key="15">
    <source>
    </source>
</evidence>
<evidence type="ECO:0000269" key="16">
    <source>
    </source>
</evidence>
<evidence type="ECO:0000269" key="17">
    <source>
    </source>
</evidence>
<evidence type="ECO:0000269" key="18">
    <source>
    </source>
</evidence>
<evidence type="ECO:0000269" key="19">
    <source>
    </source>
</evidence>
<evidence type="ECO:0000269" key="20">
    <source>
    </source>
</evidence>
<evidence type="ECO:0000269" key="21">
    <source>
    </source>
</evidence>
<evidence type="ECO:0000269" key="22">
    <source>
    </source>
</evidence>
<evidence type="ECO:0000269" key="23">
    <source>
    </source>
</evidence>
<evidence type="ECO:0000269" key="24">
    <source>
    </source>
</evidence>
<evidence type="ECO:0000269" key="25">
    <source>
    </source>
</evidence>
<evidence type="ECO:0000269" key="26">
    <source>
    </source>
</evidence>
<evidence type="ECO:0000269" key="27">
    <source>
    </source>
</evidence>
<evidence type="ECO:0000269" key="28">
    <source>
    </source>
</evidence>
<evidence type="ECO:0000269" key="29">
    <source>
    </source>
</evidence>
<evidence type="ECO:0000269" key="30">
    <source>
    </source>
</evidence>
<evidence type="ECO:0000269" key="31">
    <source>
    </source>
</evidence>
<evidence type="ECO:0000269" key="32">
    <source>
    </source>
</evidence>
<evidence type="ECO:0000269" key="33">
    <source>
    </source>
</evidence>
<evidence type="ECO:0000269" key="34">
    <source>
    </source>
</evidence>
<evidence type="ECO:0000269" key="35">
    <source>
    </source>
</evidence>
<evidence type="ECO:0000269" key="36">
    <source>
    </source>
</evidence>
<evidence type="ECO:0000269" key="37">
    <source>
    </source>
</evidence>
<evidence type="ECO:0000269" key="38">
    <source>
    </source>
</evidence>
<evidence type="ECO:0000269" key="39">
    <source>
    </source>
</evidence>
<evidence type="ECO:0000269" key="40">
    <source>
    </source>
</evidence>
<evidence type="ECO:0000269" key="41">
    <source>
    </source>
</evidence>
<evidence type="ECO:0000269" key="42">
    <source>
    </source>
</evidence>
<evidence type="ECO:0000269" key="43">
    <source>
    </source>
</evidence>
<evidence type="ECO:0000269" key="44">
    <source>
    </source>
</evidence>
<evidence type="ECO:0000269" key="45">
    <source>
    </source>
</evidence>
<evidence type="ECO:0000269" key="46">
    <source>
    </source>
</evidence>
<evidence type="ECO:0000269" key="47">
    <source>
    </source>
</evidence>
<evidence type="ECO:0000269" key="48">
    <source>
    </source>
</evidence>
<evidence type="ECO:0000269" key="49">
    <source>
    </source>
</evidence>
<evidence type="ECO:0000269" key="50">
    <source>
    </source>
</evidence>
<evidence type="ECO:0000269" key="51">
    <source>
    </source>
</evidence>
<evidence type="ECO:0000269" key="52">
    <source>
    </source>
</evidence>
<evidence type="ECO:0000269" key="53">
    <source>
    </source>
</evidence>
<evidence type="ECO:0000269" key="54">
    <source>
    </source>
</evidence>
<evidence type="ECO:0000269" key="55">
    <source>
    </source>
</evidence>
<evidence type="ECO:0000269" key="56">
    <source>
    </source>
</evidence>
<evidence type="ECO:0000269" key="57">
    <source>
    </source>
</evidence>
<evidence type="ECO:0000269" key="58">
    <source>
    </source>
</evidence>
<evidence type="ECO:0000269" key="59">
    <source>
    </source>
</evidence>
<evidence type="ECO:0000269" key="60">
    <source>
    </source>
</evidence>
<evidence type="ECO:0000269" key="61">
    <source>
    </source>
</evidence>
<evidence type="ECO:0000269" key="62">
    <source>
    </source>
</evidence>
<evidence type="ECO:0000269" key="63">
    <source>
    </source>
</evidence>
<evidence type="ECO:0000269" key="64">
    <source>
    </source>
</evidence>
<evidence type="ECO:0000269" key="65">
    <source>
    </source>
</evidence>
<evidence type="ECO:0000269" key="66">
    <source>
    </source>
</evidence>
<evidence type="ECO:0000269" key="67">
    <source>
    </source>
</evidence>
<evidence type="ECO:0000269" key="68">
    <source>
    </source>
</evidence>
<evidence type="ECO:0000269" key="69">
    <source>
    </source>
</evidence>
<evidence type="ECO:0000269" key="70">
    <source>
    </source>
</evidence>
<evidence type="ECO:0000269" key="71">
    <source>
    </source>
</evidence>
<evidence type="ECO:0000269" key="72">
    <source>
    </source>
</evidence>
<evidence type="ECO:0000269" key="73">
    <source>
    </source>
</evidence>
<evidence type="ECO:0000269" key="74">
    <source>
    </source>
</evidence>
<evidence type="ECO:0000269" key="75">
    <source>
    </source>
</evidence>
<evidence type="ECO:0000269" key="76">
    <source>
    </source>
</evidence>
<evidence type="ECO:0000269" key="77">
    <source>
    </source>
</evidence>
<evidence type="ECO:0000269" key="78">
    <source>
    </source>
</evidence>
<evidence type="ECO:0000269" key="79">
    <source>
    </source>
</evidence>
<evidence type="ECO:0000269" key="80">
    <source>
    </source>
</evidence>
<evidence type="ECO:0000269" key="81">
    <source>
    </source>
</evidence>
<evidence type="ECO:0000269" key="82">
    <source>
    </source>
</evidence>
<evidence type="ECO:0000269" key="83">
    <source>
    </source>
</evidence>
<evidence type="ECO:0000269" key="84">
    <source>
    </source>
</evidence>
<evidence type="ECO:0000269" key="85">
    <source>
    </source>
</evidence>
<evidence type="ECO:0000269" key="86">
    <source>
    </source>
</evidence>
<evidence type="ECO:0000269" key="87">
    <source>
    </source>
</evidence>
<evidence type="ECO:0000269" key="88">
    <source>
    </source>
</evidence>
<evidence type="ECO:0000269" key="89">
    <source ref="108"/>
</evidence>
<evidence type="ECO:0000269" key="90">
    <source ref="16"/>
</evidence>
<evidence type="ECO:0000269" key="91">
    <source ref="7"/>
</evidence>
<evidence type="ECO:0000303" key="92">
    <source>
    </source>
</evidence>
<evidence type="ECO:0000303" key="93">
    <source>
    </source>
</evidence>
<evidence type="ECO:0000303" key="94">
    <source>
    </source>
</evidence>
<evidence type="ECO:0000303" key="95">
    <source>
    </source>
</evidence>
<evidence type="ECO:0000303" key="96">
    <source ref="6"/>
</evidence>
<evidence type="ECO:0000305" key="97"/>
<evidence type="ECO:0000305" key="98">
    <source>
    </source>
</evidence>
<evidence type="ECO:0000305" key="99">
    <source>
    </source>
</evidence>
<evidence type="ECO:0000312" key="100">
    <source>
        <dbReference type="HGNC" id="HGNC:3236"/>
    </source>
</evidence>
<evidence type="ECO:0007744" key="101">
    <source>
        <dbReference type="PDB" id="1IVO"/>
    </source>
</evidence>
<evidence type="ECO:0007744" key="102">
    <source>
        <dbReference type="PDB" id="1MOX"/>
    </source>
</evidence>
<evidence type="ECO:0007744" key="103">
    <source>
        <dbReference type="PDB" id="1NQL"/>
    </source>
</evidence>
<evidence type="ECO:0007744" key="104">
    <source>
        <dbReference type="PDB" id="1XKK"/>
    </source>
</evidence>
<evidence type="ECO:0007744" key="105">
    <source>
        <dbReference type="PDB" id="1YY9"/>
    </source>
</evidence>
<evidence type="ECO:0007744" key="106">
    <source>
        <dbReference type="PDB" id="2EB3"/>
    </source>
</evidence>
<evidence type="ECO:0007744" key="107">
    <source>
        <dbReference type="PDB" id="2GS7"/>
    </source>
</evidence>
<evidence type="ECO:0007744" key="108">
    <source>
        <dbReference type="PDB" id="2ITN"/>
    </source>
</evidence>
<evidence type="ECO:0007744" key="109">
    <source>
        <dbReference type="PDB" id="2ITO"/>
    </source>
</evidence>
<evidence type="ECO:0007744" key="110">
    <source>
        <dbReference type="PDB" id="2ITP"/>
    </source>
</evidence>
<evidence type="ECO:0007744" key="111">
    <source>
        <dbReference type="PDB" id="2ITQ"/>
    </source>
</evidence>
<evidence type="ECO:0007744" key="112">
    <source>
        <dbReference type="PDB" id="2ITT"/>
    </source>
</evidence>
<evidence type="ECO:0007744" key="113">
    <source>
        <dbReference type="PDB" id="2ITU"/>
    </source>
</evidence>
<evidence type="ECO:0007744" key="114">
    <source>
        <dbReference type="PDB" id="2ITV"/>
    </source>
</evidence>
<evidence type="ECO:0007744" key="115">
    <source>
        <dbReference type="PDB" id="2ITX"/>
    </source>
</evidence>
<evidence type="ECO:0007744" key="116">
    <source>
        <dbReference type="PDB" id="2J6M"/>
    </source>
</evidence>
<evidence type="ECO:0007744" key="117">
    <source>
        <dbReference type="PDB" id="2JIT"/>
    </source>
</evidence>
<evidence type="ECO:0007744" key="118">
    <source>
        <dbReference type="PDB" id="2JIU"/>
    </source>
</evidence>
<evidence type="ECO:0007744" key="119">
    <source>
        <dbReference type="PDB" id="2JIV"/>
    </source>
</evidence>
<evidence type="ECO:0007744" key="120">
    <source>
        <dbReference type="PDB" id="3B2U"/>
    </source>
</evidence>
<evidence type="ECO:0007744" key="121">
    <source>
        <dbReference type="PDB" id="3B2V"/>
    </source>
</evidence>
<evidence type="ECO:0007744" key="122">
    <source>
        <dbReference type="PDB" id="3C09"/>
    </source>
</evidence>
<evidence type="ECO:0007744" key="123">
    <source>
        <dbReference type="PDB" id="3G5V"/>
    </source>
</evidence>
<evidence type="ECO:0007744" key="124">
    <source>
        <dbReference type="PDB" id="3G5Y"/>
    </source>
</evidence>
<evidence type="ECO:0007744" key="125">
    <source>
        <dbReference type="PDB" id="3GT8"/>
    </source>
</evidence>
<evidence type="ECO:0007744" key="126">
    <source>
        <dbReference type="PDB" id="3NJP"/>
    </source>
</evidence>
<evidence type="ECO:0007744" key="127">
    <source>
        <dbReference type="PDB" id="3P0Y"/>
    </source>
</evidence>
<evidence type="ECO:0007744" key="128">
    <source>
        <dbReference type="PDB" id="3QWQ"/>
    </source>
</evidence>
<evidence type="ECO:0007744" key="129">
    <source>
        <dbReference type="PDB" id="3VJN"/>
    </source>
</evidence>
<evidence type="ECO:0007744" key="130">
    <source>
        <dbReference type="PDB" id="3VJO"/>
    </source>
</evidence>
<evidence type="ECO:0007744" key="131">
    <source>
        <dbReference type="PDB" id="4KRL"/>
    </source>
</evidence>
<evidence type="ECO:0007744" key="132">
    <source>
        <dbReference type="PDB" id="4KRM"/>
    </source>
</evidence>
<evidence type="ECO:0007744" key="133">
    <source>
        <dbReference type="PDB" id="4KRO"/>
    </source>
</evidence>
<evidence type="ECO:0007744" key="134">
    <source>
        <dbReference type="PDB" id="4KRP"/>
    </source>
</evidence>
<evidence type="ECO:0007744" key="135">
    <source>
        <dbReference type="PDB" id="4RIW"/>
    </source>
</evidence>
<evidence type="ECO:0007744" key="136">
    <source>
        <dbReference type="PDB" id="4RIX"/>
    </source>
</evidence>
<evidence type="ECO:0007744" key="137">
    <source>
        <dbReference type="PDB" id="4RIY"/>
    </source>
</evidence>
<evidence type="ECO:0007744" key="138">
    <source>
        <dbReference type="PDB" id="4UIP"/>
    </source>
</evidence>
<evidence type="ECO:0007744" key="139">
    <source>
        <dbReference type="PDB" id="4UV7"/>
    </source>
</evidence>
<evidence type="ECO:0007744" key="140">
    <source>
        <dbReference type="PDB" id="4ZSE"/>
    </source>
</evidence>
<evidence type="ECO:0007744" key="141">
    <source>
        <dbReference type="PDB" id="5CNN"/>
    </source>
</evidence>
<evidence type="ECO:0007744" key="142">
    <source>
        <dbReference type="PDB" id="5CNO"/>
    </source>
</evidence>
<evidence type="ECO:0007744" key="143">
    <source>
        <dbReference type="PDB" id="5D41"/>
    </source>
</evidence>
<evidence type="ECO:0007744" key="144">
    <source>
        <dbReference type="PDB" id="5SX4"/>
    </source>
</evidence>
<evidence type="ECO:0007744" key="145">
    <source>
        <dbReference type="PDB" id="5SX5"/>
    </source>
</evidence>
<evidence type="ECO:0007744" key="146">
    <source>
        <dbReference type="PDB" id="5WB7"/>
    </source>
</evidence>
<evidence type="ECO:0007744" key="147">
    <source>
        <dbReference type="PDB" id="5WB8"/>
    </source>
</evidence>
<evidence type="ECO:0007744" key="148">
    <source>
        <dbReference type="PDB" id="5XWD"/>
    </source>
</evidence>
<evidence type="ECO:0007744" key="149">
    <source>
        <dbReference type="PDB" id="6B3S"/>
    </source>
</evidence>
<evidence type="ECO:0007744" key="150">
    <source>
    </source>
</evidence>
<evidence type="ECO:0007744" key="151">
    <source>
    </source>
</evidence>
<evidence type="ECO:0007744" key="152">
    <source>
    </source>
</evidence>
<evidence type="ECO:0007744" key="153">
    <source>
    </source>
</evidence>
<evidence type="ECO:0007744" key="154">
    <source>
    </source>
</evidence>
<evidence type="ECO:0007744" key="155">
    <source>
    </source>
</evidence>
<evidence type="ECO:0007829" key="156">
    <source>
        <dbReference type="PDB" id="1IVO"/>
    </source>
</evidence>
<evidence type="ECO:0007829" key="157">
    <source>
        <dbReference type="PDB" id="1MOX"/>
    </source>
</evidence>
<evidence type="ECO:0007829" key="158">
    <source>
        <dbReference type="PDB" id="1YY9"/>
    </source>
</evidence>
<evidence type="ECO:0007829" key="159">
    <source>
        <dbReference type="PDB" id="1Z9I"/>
    </source>
</evidence>
<evidence type="ECO:0007829" key="160">
    <source>
        <dbReference type="PDB" id="2KS1"/>
    </source>
</evidence>
<evidence type="ECO:0007829" key="161">
    <source>
        <dbReference type="PDB" id="3B2V"/>
    </source>
</evidence>
<evidence type="ECO:0007829" key="162">
    <source>
        <dbReference type="PDB" id="3G5Y"/>
    </source>
</evidence>
<evidence type="ECO:0007829" key="163">
    <source>
        <dbReference type="PDB" id="3GOP"/>
    </source>
</evidence>
<evidence type="ECO:0007829" key="164">
    <source>
        <dbReference type="PDB" id="3P0Y"/>
    </source>
</evidence>
<evidence type="ECO:0007829" key="165">
    <source>
        <dbReference type="PDB" id="3PFV"/>
    </source>
</evidence>
<evidence type="ECO:0007829" key="166">
    <source>
        <dbReference type="PDB" id="3QWQ"/>
    </source>
</evidence>
<evidence type="ECO:0007829" key="167">
    <source>
        <dbReference type="PDB" id="3W2S"/>
    </source>
</evidence>
<evidence type="ECO:0007829" key="168">
    <source>
        <dbReference type="PDB" id="4KRL"/>
    </source>
</evidence>
<evidence type="ECO:0007829" key="169">
    <source>
        <dbReference type="PDB" id="4KRO"/>
    </source>
</evidence>
<evidence type="ECO:0007829" key="170">
    <source>
        <dbReference type="PDB" id="4KRP"/>
    </source>
</evidence>
<evidence type="ECO:0007829" key="171">
    <source>
        <dbReference type="PDB" id="4UV7"/>
    </source>
</evidence>
<evidence type="ECO:0007829" key="172">
    <source>
        <dbReference type="PDB" id="5CZH"/>
    </source>
</evidence>
<evidence type="ECO:0007829" key="173">
    <source>
        <dbReference type="PDB" id="5HG8"/>
    </source>
</evidence>
<evidence type="ECO:0007829" key="174">
    <source>
        <dbReference type="PDB" id="5JEB"/>
    </source>
</evidence>
<evidence type="ECO:0007829" key="175">
    <source>
        <dbReference type="PDB" id="5SX4"/>
    </source>
</evidence>
<evidence type="ECO:0007829" key="176">
    <source>
        <dbReference type="PDB" id="5UG9"/>
    </source>
</evidence>
<evidence type="ECO:0007829" key="177">
    <source>
        <dbReference type="PDB" id="5XWD"/>
    </source>
</evidence>
<evidence type="ECO:0007829" key="178">
    <source>
        <dbReference type="PDB" id="5ZWJ"/>
    </source>
</evidence>
<evidence type="ECO:0007829" key="179">
    <source>
        <dbReference type="PDB" id="6S89"/>
    </source>
</evidence>
<evidence type="ECO:0007829" key="180">
    <source>
        <dbReference type="PDB" id="6V66"/>
    </source>
</evidence>
<evidence type="ECO:0007829" key="181">
    <source>
        <dbReference type="PDB" id="7JXW"/>
    </source>
</evidence>
<evidence type="ECO:0007829" key="182">
    <source>
        <dbReference type="PDB" id="7LEN"/>
    </source>
</evidence>
<evidence type="ECO:0007829" key="183">
    <source>
        <dbReference type="PDB" id="7SYE"/>
    </source>
</evidence>
<evidence type="ECO:0007829" key="184">
    <source>
        <dbReference type="PDB" id="7VRA"/>
    </source>
</evidence>
<evidence type="ECO:0007829" key="185">
    <source>
        <dbReference type="PDB" id="8A27"/>
    </source>
</evidence>
<evidence type="ECO:0007829" key="186">
    <source>
        <dbReference type="PDB" id="8A2A"/>
    </source>
</evidence>
<evidence type="ECO:0007829" key="187">
    <source>
        <dbReference type="PDB" id="8A2D"/>
    </source>
</evidence>
<evidence type="ECO:0007829" key="188">
    <source>
        <dbReference type="PDB" id="8PO0"/>
    </source>
</evidence>
<evidence type="ECO:0007829" key="189">
    <source>
        <dbReference type="PDB" id="8PO2"/>
    </source>
</evidence>
<evidence type="ECO:0007829" key="190">
    <source>
        <dbReference type="PDB" id="8S1M"/>
    </source>
</evidence>
<evidence type="ECO:0007829" key="191">
    <source>
        <dbReference type="PDB" id="8UKW"/>
    </source>
</evidence>
<feature type="signal peptide" evidence="21 81 90">
    <location>
        <begin position="1"/>
        <end position="24"/>
    </location>
</feature>
<feature type="chain" id="PRO_0000016665" description="Epidermal growth factor receptor">
    <location>
        <begin position="25"/>
        <end position="1210"/>
    </location>
</feature>
<feature type="topological domain" description="Extracellular" evidence="2">
    <location>
        <begin position="25"/>
        <end position="645"/>
    </location>
</feature>
<feature type="transmembrane region" description="Helical" evidence="2">
    <location>
        <begin position="646"/>
        <end position="668"/>
    </location>
</feature>
<feature type="topological domain" description="Cytoplasmic" evidence="2">
    <location>
        <begin position="669"/>
        <end position="1210"/>
    </location>
</feature>
<feature type="repeat" description="Approximate">
    <location>
        <begin position="75"/>
        <end position="300"/>
    </location>
</feature>
<feature type="repeat" description="Approximate">
    <location>
        <begin position="390"/>
        <end position="600"/>
    </location>
</feature>
<feature type="domain" description="Protein kinase" evidence="3">
    <location>
        <begin position="712"/>
        <end position="979"/>
    </location>
</feature>
<feature type="region of interest" description="Important for dimerization, phosphorylation and activation">
    <location>
        <begin position="688"/>
        <end position="704"/>
    </location>
</feature>
<feature type="region of interest" description="Disordered" evidence="5">
    <location>
        <begin position="1097"/>
        <end position="1137"/>
    </location>
</feature>
<feature type="compositionally biased region" description="Polar residues" evidence="5">
    <location>
        <begin position="1104"/>
        <end position="1115"/>
    </location>
</feature>
<feature type="compositionally biased region" description="Polar residues" evidence="5">
    <location>
        <begin position="1128"/>
        <end position="1137"/>
    </location>
</feature>
<feature type="active site" description="Proton acceptor" evidence="3 4">
    <location>
        <position position="837"/>
    </location>
</feature>
<feature type="binding site" evidence="48 107 125 140 141 142 143">
    <location>
        <begin position="718"/>
        <end position="726"/>
    </location>
    <ligand>
        <name>ATP</name>
        <dbReference type="ChEBI" id="CHEBI:30616"/>
    </ligand>
</feature>
<feature type="binding site" evidence="38 48 106 107 108 125 129 130 135 137 140 141 142 143">
    <location>
        <position position="745"/>
    </location>
    <ligand>
        <name>ATP</name>
        <dbReference type="ChEBI" id="CHEBI:30616"/>
    </ligand>
</feature>
<feature type="binding site" evidence="38 48 106 107 108 114 115 125 129 130 135 136 137 140 141 142 143">
    <location>
        <begin position="790"/>
        <end position="791"/>
    </location>
    <ligand>
        <name>ATP</name>
        <dbReference type="ChEBI" id="CHEBI:30616"/>
    </ligand>
</feature>
<feature type="binding site" evidence="38 48 106 107 108 114 115 125 129 135 136 137 140 141 142 143">
    <location>
        <position position="855"/>
    </location>
    <ligand>
        <name>ATP</name>
        <dbReference type="ChEBI" id="CHEBI:30616"/>
    </ligand>
</feature>
<feature type="site" description="Important for interaction with PIK3C2B">
    <location>
        <position position="1016"/>
    </location>
</feature>
<feature type="modified residue" description="Phosphoserine" evidence="58">
    <location>
        <position position="229"/>
    </location>
</feature>
<feature type="modified residue" description="Phosphothreonine; by PKC and PKD/PRKD1" evidence="8">
    <location>
        <position position="678"/>
    </location>
</feature>
<feature type="modified residue" description="Phosphothreonine; by PKD/PRKD1" evidence="8 27 78 152 153 154 155">
    <location>
        <position position="693"/>
    </location>
</feature>
<feature type="modified residue" description="Phosphoserine" evidence="78 152">
    <location>
        <position position="695"/>
    </location>
</feature>
<feature type="modified residue" description="N6-(2-hydroxyisobutyryl)lysine" evidence="77">
    <location>
        <position position="745"/>
    </location>
</feature>
<feature type="modified residue" description="Phosphotyrosine" evidence="66">
    <location>
        <position position="869"/>
    </location>
</feature>
<feature type="modified residue" description="Phosphoserine" evidence="27 151 153 155">
    <location>
        <position position="991"/>
    </location>
</feature>
<feature type="modified residue" description="Phosphoserine" evidence="151">
    <location>
        <position position="995"/>
    </location>
</feature>
<feature type="modified residue" description="Phosphotyrosine; by autocatalysis" evidence="48 151">
    <location>
        <position position="998"/>
    </location>
</feature>
<feature type="modified residue" description="Phosphotyrosine; by autocatalysis" evidence="48 66">
    <location>
        <position position="1016"/>
    </location>
</feature>
<feature type="modified residue" description="Phosphoserine" evidence="27 155">
    <location>
        <position position="1026"/>
    </location>
</feature>
<feature type="modified residue" description="Phosphoserine" evidence="151">
    <location>
        <position position="1039"/>
    </location>
</feature>
<feature type="modified residue" description="Phosphothreonine" evidence="151">
    <location>
        <position position="1041"/>
    </location>
</feature>
<feature type="modified residue" description="Phosphoserine" evidence="151">
    <location>
        <position position="1042"/>
    </location>
</feature>
<feature type="modified residue" description="Phosphoserine" evidence="151 152 153 154">
    <location>
        <position position="1064"/>
    </location>
</feature>
<feature type="modified residue" description="Phosphotyrosine" evidence="66 99">
    <location>
        <position position="1069"/>
    </location>
</feature>
<feature type="modified residue" description="Phosphoserine" evidence="78">
    <location>
        <position position="1070"/>
    </location>
</feature>
<feature type="modified residue" description="Phosphoserine" evidence="78">
    <location>
        <position position="1071"/>
    </location>
</feature>
<feature type="modified residue" description="Phosphoserine" evidence="152">
    <location>
        <position position="1081"/>
    </location>
</feature>
<feature type="modified residue" description="Phosphotyrosine; by autocatalysis" evidence="18 66 74">
    <location>
        <position position="1092"/>
    </location>
</feature>
<feature type="modified residue" description="Phosphotyrosine; by autocatalysis" evidence="18 71">
    <location>
        <position position="1110"/>
    </location>
</feature>
<feature type="modified residue" description="Phosphoserine" evidence="151 152 155">
    <location>
        <position position="1166"/>
    </location>
</feature>
<feature type="modified residue" description="Phosphotyrosine; by autocatalysis" evidence="74 150">
    <location>
        <position position="1172"/>
    </location>
</feature>
<feature type="modified residue" description="Phosphotyrosine; by autocatalysis" evidence="48 51 66 74 150 152 153">
    <location>
        <position position="1197"/>
    </location>
</feature>
<feature type="modified residue" description="Omega-N-methylarginine" evidence="57">
    <location>
        <position position="1199"/>
    </location>
</feature>
<feature type="lipid moiety-binding region" description="S-palmitoyl cysteine" evidence="74">
    <location>
        <position position="1049"/>
    </location>
</feature>
<feature type="lipid moiety-binding region" description="S-palmitoyl cysteine" evidence="74">
    <location>
        <position position="1146"/>
    </location>
</feature>
<feature type="glycosylation site" id="CAR_000227" description="N-linked (GlcNAc...) (complex) asparagine; atypical; partial" evidence="9 14 15 17 27 56 101 102 126 128">
    <location>
        <position position="56"/>
    </location>
</feature>
<feature type="glycosylation site" description="N-linked (GlcNAc...) asparagine; atypical" evidence="56 126">
    <location>
        <position position="73"/>
    </location>
</feature>
<feature type="glycosylation site" description="N-linked (GlcNAc...) asparagine" evidence="17 27 86">
    <location>
        <position position="128"/>
    </location>
</feature>
<feature type="glycosylation site" description="N-linked (GlcNAc...) asparagine" evidence="15 17 27 56 86 101 126">
    <location>
        <position position="175"/>
    </location>
</feature>
<feature type="glycosylation site" description="N-linked (GlcNAc...) asparagine" evidence="14 15 17 27 56 101 102 126">
    <location>
        <position position="196"/>
    </location>
</feature>
<feature type="glycosylation site" description="N-linked (GlcNAc...) asparagine" evidence="9 14 15 16 17 27 44 56 101 102 103 105 120 121 126 127 128 131 132 133 134 138 139">
    <location>
        <position position="352"/>
    </location>
</feature>
<feature type="glycosylation site" description="N-linked (GlcNAc...) asparagine" evidence="9 15 16 17 27 56 101 103 105 120 126 128 131 132 133 134 139">
    <location>
        <position position="361"/>
    </location>
</feature>
<feature type="glycosylation site" description="N-linked (GlcNAc...) asparagine" evidence="17 27 44 86 105 120 121 127 128 133 134">
    <location>
        <position position="413"/>
    </location>
</feature>
<feature type="glycosylation site" description="N-linked (GlcNAc...) asparagine" evidence="15 16 17 27 56 86 101 103 105 120 121 126 127 128 131 132 133 134 138 139">
    <location>
        <position position="444"/>
    </location>
</feature>
<feature type="glycosylation site" description="N-linked (GlcNAc...) asparagine" evidence="16 17 27 56 72 86 103 105 121 126 128 134 138 139">
    <location>
        <position position="528"/>
    </location>
</feature>
<feature type="glycosylation site" description="N-linked (GlcNAc...) asparagine; partial" evidence="9 16 17 27 44 103 105">
    <location>
        <position position="568"/>
    </location>
</feature>
<feature type="glycosylation site" description="N-linked (GlcNAc...) asparagine; partial" evidence="9 16 17 27 103 105">
    <location>
        <position position="603"/>
    </location>
</feature>
<feature type="glycosylation site" description="N-linked (GlcNAc...) (high mannose) asparagine" evidence="98">
    <location>
        <position position="623"/>
    </location>
</feature>
<feature type="disulfide bond" evidence="16 26 56 103 105 126 128 133 134 138 139 146 147 148">
    <location>
        <begin position="31"/>
        <end position="58"/>
    </location>
</feature>
<feature type="disulfide bond" evidence="14 15 16 26 56 101 102 103 105 126 128 133 146 147 148">
    <location>
        <begin position="157"/>
        <end position="187"/>
    </location>
</feature>
<feature type="disulfide bond" evidence="14 15 16 26 56 101 102 103 105 126 128 133 138 139 146 147 148">
    <location>
        <begin position="190"/>
        <end position="199"/>
    </location>
</feature>
<feature type="disulfide bond" evidence="14 15 16 26 56 101 102 103 105 126 128 133 138 139 146 147 148">
    <location>
        <begin position="194"/>
        <end position="207"/>
    </location>
</feature>
<feature type="disulfide bond" evidence="14 15 16 26 56 101 102 103 105 126 128 138 139 146 147 148">
    <location>
        <begin position="215"/>
        <end position="223"/>
    </location>
</feature>
<feature type="disulfide bond" evidence="14 15 16 26 56 101 102 103 105 126 128 138 139 146 147 148">
    <location>
        <begin position="219"/>
        <end position="231"/>
    </location>
</feature>
<feature type="disulfide bond" evidence="14 15 16 26 56 101 102 103 105 126 128 133 134 138 139 146 147 148">
    <location>
        <begin position="232"/>
        <end position="240"/>
    </location>
</feature>
<feature type="disulfide bond" evidence="14 15 16 26 56 101 102 103 105 126 128 133 134 138 139 146 147 148">
    <location>
        <begin position="236"/>
        <end position="248"/>
    </location>
</feature>
<feature type="disulfide bond" evidence="14 15 16 26 56 101 102 103 105 126 128 133 134 138 139 146 147 148">
    <location>
        <begin position="251"/>
        <end position="260"/>
    </location>
</feature>
<feature type="disulfide bond" evidence="14 15 16 26 56 101 102 103 105 121 126 128 133 134 138 139 146 147 148">
    <location>
        <begin position="264"/>
        <end position="291"/>
    </location>
</feature>
<feature type="disulfide bond" evidence="101 102 103 105 121 126 128 133 134 138 139 146 147 148">
    <location>
        <begin position="295"/>
        <end position="307"/>
    </location>
</feature>
<feature type="disulfide bond" evidence="14 15 16 26 56 101 102 103 105 121 123 124 126 128 133 134 139 146 147 148">
    <location>
        <begin position="311"/>
        <end position="326"/>
    </location>
</feature>
<feature type="disulfide bond" evidence="101 102 103 105 121 126 128 133 134 138 139 146 147 148">
    <location>
        <begin position="329"/>
        <end position="333"/>
    </location>
</feature>
<feature type="disulfide bond" evidence="14 15 16 26 56 101 102 103 105 120 121 122 126 127 128 131 132 133 134 138 139 144 145 146 147 148 149">
    <location>
        <begin position="337"/>
        <end position="362"/>
    </location>
</feature>
<feature type="disulfide bond" evidence="101 102 103 105 120 121 122 126 127 128 131 132 133 134 138 139 144 145 146 147 148 149">
    <location>
        <begin position="470"/>
        <end position="499"/>
    </location>
</feature>
<feature type="disulfide bond" evidence="14 15 16 26 56 101 102 103 105 120 121 126 127 128 131 132 133 134 138 139 144 145 146 147 148 149">
    <location>
        <begin position="506"/>
        <end position="515"/>
    </location>
</feature>
<feature type="disulfide bond" evidence="14 15 16 26 56 101 102 103 105 120 121 122 126 127 128 131 132 133 134 138 139 144 145 146 147 148 149">
    <location>
        <begin position="510"/>
        <end position="523"/>
    </location>
</feature>
<feature type="disulfide bond" evidence="15 16 26 56 101 103 105 121 126 128 131 132 133 134 138 139 148">
    <location>
        <begin position="526"/>
        <end position="535"/>
    </location>
</feature>
<feature type="disulfide bond" evidence="16 26 56 103 105 121 126 128 133 134 138 139 148">
    <location>
        <begin position="539"/>
        <end position="555"/>
    </location>
</feature>
<feature type="disulfide bond" evidence="16 26 56 103 105 121 126 128 133 134 138 139 148">
    <location>
        <begin position="558"/>
        <end position="571"/>
    </location>
</feature>
<feature type="disulfide bond" evidence="16 26 56 103 105 121 126 128 133 134 138 139 148">
    <location>
        <begin position="562"/>
        <end position="579"/>
    </location>
</feature>
<feature type="disulfide bond" evidence="16 26 56 103 105 121 126 128 133 134 139 148">
    <location>
        <begin position="582"/>
        <end position="591"/>
    </location>
</feature>
<feature type="disulfide bond" evidence="16 26 56 103 105 121 126 128 133 134 138 139 148">
    <location>
        <begin position="595"/>
        <end position="617"/>
    </location>
</feature>
<feature type="disulfide bond" evidence="16 26 56 103 105 121 126 128 133 134 138 139 148">
    <location>
        <begin position="620"/>
        <end position="628"/>
    </location>
</feature>
<feature type="disulfide bond" evidence="16 26 56 103 105 121 126 128 134 139 148">
    <location>
        <begin position="624"/>
        <end position="636"/>
    </location>
</feature>
<feature type="cross-link" description="Glycyl lysine isopeptide (Lys-Gly) (interchain with G-Cter in ubiquitin)" evidence="32 79">
    <location>
        <position position="716"/>
    </location>
</feature>
<feature type="cross-link" description="Glycyl lysine isopeptide (Lys-Gly) (interchain with G-Cter in ubiquitin)" evidence="32 79">
    <location>
        <position position="737"/>
    </location>
</feature>
<feature type="cross-link" description="Glycyl lysine isopeptide (Lys-Gly) (interchain with G-Cter in ubiquitin)" evidence="32 79">
    <location>
        <position position="754"/>
    </location>
</feature>
<feature type="cross-link" description="Glycyl lysine isopeptide (Lys-Gly) (interchain with G-Cter in ubiquitin)" evidence="79">
    <location>
        <position position="757"/>
    </location>
</feature>
<feature type="cross-link" description="Glycyl lysine isopeptide (Lys-Gly) (interchain with G-Cter in ubiquitin)" evidence="32 79">
    <location>
        <position position="867"/>
    </location>
</feature>
<feature type="cross-link" description="Glycyl lysine isopeptide (Lys-Gly) (interchain with G-Cter in ubiquitin)" evidence="32">
    <location>
        <position position="929"/>
    </location>
</feature>
<feature type="cross-link" description="Glycyl lysine isopeptide (Lys-Gly) (interchain with G-Cter in ubiquitin)" evidence="79">
    <location>
        <position position="960"/>
    </location>
</feature>
<feature type="cross-link" description="Glycyl lysine isopeptide (Lys-Gly) (interchain with G-Cter in ubiquitin)" evidence="32">
    <location>
        <position position="970"/>
    </location>
</feature>
<feature type="splice variant" id="VSP_002887" description="In isoform 2." evidence="93 94 95 96">
    <original>FL</original>
    <variation>LS</variation>
    <location>
        <begin position="404"/>
        <end position="405"/>
    </location>
</feature>
<feature type="splice variant" id="VSP_002888" description="In isoform 2." evidence="93 94 95 96">
    <location>
        <begin position="406"/>
        <end position="1210"/>
    </location>
</feature>
<feature type="splice variant" id="VSP_002889" description="In isoform 3." evidence="92">
    <original>CTGPGLEGCPTNGPKIPSIATGMVGALLLLLVVALGIGLFMRRRHIVRKRTLRRLLQERELVEPLTPSGEAPNQALLR</original>
    <variation>PGNESLKAMLFCLFKLSSCNQSNDGSVSHQSGSPAAQESCLGWIPSLLPSEFQLGWGGCSHLHAWPSASVIITASSCH</variation>
    <location>
        <begin position="628"/>
        <end position="705"/>
    </location>
</feature>
<feature type="splice variant" id="VSP_002891" description="In isoform 4." evidence="92">
    <original>C</original>
    <variation>S</variation>
    <location>
        <position position="628"/>
    </location>
</feature>
<feature type="splice variant" id="VSP_002892" description="In isoform 4." evidence="92">
    <location>
        <begin position="629"/>
        <end position="1210"/>
    </location>
</feature>
<feature type="splice variant" id="VSP_002890" description="In isoform 3." evidence="92">
    <location>
        <begin position="706"/>
        <end position="1210"/>
    </location>
</feature>
<feature type="sequence variant" id="VAR_066493" description="Variant EGFR vIII; found in a lung cancer sample; somatic mutation; induces lung cancer when exogenously expressed." evidence="33">
    <location>
        <begin position="30"/>
        <end position="297"/>
    </location>
</feature>
<feature type="sequence variant" id="VAR_019293" description="In dbSNP:rs17289589." evidence="91">
    <original>R</original>
    <variation>Q</variation>
    <location>
        <position position="98"/>
    </location>
</feature>
<feature type="sequence variant" id="VAR_019294" description="In dbSNP:rs17336639." evidence="91">
    <original>P</original>
    <variation>R</variation>
    <location>
        <position position="266"/>
    </location>
</feature>
<feature type="sequence variant" id="VAR_072435" description="In NNCIS; loss of function; the mutant does not localize to the cell membrane; has diffuse cytoplasmic localization; dbSNP:rs606231253." evidence="68">
    <original>G</original>
    <variation>D</variation>
    <location>
        <position position="428"/>
    </location>
</feature>
<feature type="sequence variant" id="VAR_019295" description="In dbSNP:rs2227983." evidence="37 91">
    <original>R</original>
    <variation>K</variation>
    <location>
        <position position="521"/>
    </location>
</feature>
<feature type="sequence variant" id="VAR_019296" description="In dbSNP:rs17337079." evidence="91">
    <original>V</original>
    <variation>I</variation>
    <location>
        <position position="674"/>
    </location>
</feature>
<feature type="sequence variant" id="VAR_026084" description="Found in a lung cancer sample; more sensitive to gefitinib than wild-type; dbSNP:rs397517085." evidence="25 29 31">
    <original>E</original>
    <variation>A</variation>
    <location>
        <position position="709"/>
    </location>
</feature>
<feature type="sequence variant" id="VAR_069498" description="Found in a lung cancer sample; constitutively activated kinase with higher levels of basal autophosphorylation; more sensitive to gefitinib than wild-type; dbSNP:rs397517085." evidence="25 29">
    <original>E</original>
    <variation>G</variation>
    <location>
        <position position="709"/>
    </location>
</feature>
<feature type="sequence variant" id="VAR_026085" description="Found in a lung cancer sample; dbSNP:rs727504256." evidence="31">
    <original>E</original>
    <variation>K</variation>
    <location>
        <position position="709"/>
    </location>
</feature>
<feature type="sequence variant" id="VAR_026086" description="Found in a lung cancer sample; dbSNP:rs121913428." evidence="31">
    <original>G</original>
    <variation>A</variation>
    <location>
        <position position="719"/>
    </location>
</feature>
<feature type="sequence variant" id="VAR_026087" description="Found in a lung cancer sample; dbSNP:rs28929495." evidence="25 31">
    <original>G</original>
    <variation>C</variation>
    <location>
        <position position="719"/>
    </location>
</feature>
<feature type="sequence variant" id="VAR_026088" description="Found in a lung cancer sample; dbSNP:rs121913428." evidence="31">
    <original>G</original>
    <variation>D</variation>
    <location>
        <position position="719"/>
    </location>
</feature>
<feature type="sequence variant" id="VAR_019297" description="Found in a lung cancer sample; somatic mutation; strongly increased kinase activity; constitutively activated kinase with higher levels of basal autophosphorylation; more sensitive to gefitinib than wild-type; dbSNP:rs28929495." evidence="19 25 29 31 38">
    <original>G</original>
    <variation>S</variation>
    <location>
        <position position="719"/>
    </location>
</feature>
<feature type="sequence variant" id="VAR_026089" description="Found in a lung cancer sample; dbSNP:rs1051753269." evidence="31">
    <original>G</original>
    <variation>S</variation>
    <location>
        <position position="724"/>
    </location>
</feature>
<feature type="sequence variant" id="VAR_026090" description="Found in a lung cancer sample; dbSNP:rs121913420." evidence="31">
    <original>E</original>
    <variation>K</variation>
    <location>
        <position position="734"/>
    </location>
</feature>
<feature type="sequence variant" id="VAR_069499" description="Found in a lung cancer sample." evidence="25">
    <original>ELREATS</original>
    <variation>D</variation>
    <location>
        <begin position="746"/>
        <end position="752"/>
    </location>
</feature>
<feature type="sequence variant" id="VAR_069500" description="Found in a lung cancer sample." evidence="25">
    <original>ELREAT</original>
    <variation>A</variation>
    <location>
        <begin position="746"/>
        <end position="751"/>
    </location>
</feature>
<feature type="sequence variant" id="VAR_026092" description="Found in a lung cancer sample." evidence="25">
    <location>
        <begin position="746"/>
        <end position="750"/>
    </location>
</feature>
<feature type="sequence variant" id="VAR_026091" description="Found in a lung cancer sample." evidence="31">
    <location>
        <position position="746"/>
    </location>
</feature>
<feature type="sequence variant" id="VAR_069501" description="Found in a lung cancer sample." evidence="25">
    <location>
        <begin position="747"/>
        <end position="751"/>
    </location>
</feature>
<feature type="sequence variant" id="VAR_026094" description="Found in a lung cancer sample." evidence="31">
    <location>
        <begin position="747"/>
        <end position="749"/>
    </location>
</feature>
<feature type="sequence variant" id="VAR_026093" description="Found in a lung cancer sample; dbSNP:rs2128954811." evidence="31">
    <original>L</original>
    <variation>F</variation>
    <location>
        <position position="747"/>
    </location>
</feature>
<feature type="sequence variant" id="VAR_026095" description="Found in a lung cancer sample." evidence="31">
    <original>R</original>
    <variation>P</variation>
    <location>
        <position position="748"/>
    </location>
</feature>
<feature type="sequence variant" id="VAR_026096" description="Found in a lung cancer sample." evidence="31">
    <location>
        <begin position="752"/>
        <end position="759"/>
    </location>
</feature>
<feature type="sequence variant" id="VAR_069502" description="Found in a lung cancer sample; constitutively activated kinase with higher levels of basal autophosphorylation; more sensitive to gefitinib than wild-type; dbSNP:rs121913465." evidence="25 29">
    <original>S</original>
    <variation>I</variation>
    <location>
        <position position="768"/>
    </location>
</feature>
<feature type="sequence variant" id="VAR_069503" description="Found in a lung cancer sample; dbSNP:rs147149347." evidence="25">
    <original>V</original>
    <variation>M</variation>
    <location>
        <position position="769"/>
    </location>
</feature>
<feature type="sequence variant" id="VAR_026097" description="Found in a lung cancer sample." evidence="31">
    <original>Q</original>
    <variation>R</variation>
    <location>
        <position position="787"/>
    </location>
</feature>
<feature type="sequence variant" id="VAR_026098" description="Found in a lung cancer sample; increased kinase activity; dbSNP:rs121434569." evidence="31 42">
    <original>T</original>
    <variation>M</variation>
    <location>
        <position position="790"/>
    </location>
</feature>
<feature type="sequence variant" id="VAR_026099" description="Found in a lung cancer sample; more sensitive to gefitinib than wild-type; dbSNP:rs397517126." evidence="25 29 31">
    <original>L</original>
    <variation>V</variation>
    <location>
        <position position="833"/>
    </location>
</feature>
<feature type="sequence variant" id="VAR_026100" description="Found in a lung cancer sample; dbSNP:rs397517127." evidence="31">
    <original>V</original>
    <variation>L</variation>
    <location>
        <position position="834"/>
    </location>
</feature>
<feature type="sequence variant" id="VAR_069504" description="Found in a lung cancer sample; more sensitive to gefitinib than wild-type; dbSNP:rs397517128." evidence="25 29">
    <original>H</original>
    <variation>L</variation>
    <location>
        <position position="835"/>
    </location>
</feature>
<feature type="sequence variant" id="VAR_069505" description="Found in a lung cancer sample; more sensitive to gefitinib than wild-type; dbSNP:rs864621996." evidence="25 29">
    <original>L</original>
    <variation>V</variation>
    <location>
        <position position="838"/>
    </location>
</feature>
<feature type="sequence variant" id="VAR_026101" description="Found in a lung cancer sample; dbSNP:rs121913443." evidence="31">
    <original>L</original>
    <variation>M</variation>
    <location>
        <position position="858"/>
    </location>
</feature>
<feature type="sequence variant" id="VAR_019298" description="Found in a lung cancer sample; somatic mutation; constitutively activated enzyme with strongly increased kinase activity; more sensitive to gefitinib than wild-type; dbSNP:rs121434568." evidence="19 25 29 31 38">
    <original>L</original>
    <variation>R</variation>
    <location>
        <position position="858"/>
    </location>
</feature>
<feature type="sequence variant" id="VAR_026102" description="Found in a lung cancer sample; constitutively activated kinase with higher levels of basal autophosphorylation; more sensitive to gefitinib than wild-type; dbSNP:rs121913444." evidence="25 29 31">
    <original>L</original>
    <variation>Q</variation>
    <location>
        <position position="861"/>
    </location>
</feature>
<feature type="sequence variant" id="VAR_026103" description="Found in a lung cancer sample; dbSNP:rs2128964711." evidence="31">
    <original>G</original>
    <variation>E</variation>
    <location>
        <position position="873"/>
    </location>
</feature>
<feature type="sequence variant" id="VAR_019299" description="In dbSNP:rs17337451." evidence="91">
    <original>R</original>
    <variation>G</variation>
    <location>
        <position position="962"/>
    </location>
</feature>
<feature type="sequence variant" id="VAR_019300" description="In dbSNP:rs17290699." evidence="91">
    <original>H</original>
    <variation>P</variation>
    <location>
        <position position="988"/>
    </location>
</feature>
<feature type="sequence variant" id="VAR_042095" description="In dbSNP:rs34352568." evidence="37">
    <original>L</original>
    <variation>R</variation>
    <location>
        <position position="1034"/>
    </location>
</feature>
<feature type="sequence variant" id="VAR_042096" description="In dbSNP:rs35918369." evidence="37">
    <original>A</original>
    <variation>V</variation>
    <location>
        <position position="1210"/>
    </location>
</feature>
<feature type="mutagenesis site" description="Strongly reduced autophosphorylation and activation of downstream kinases; when associated with A-309." evidence="15">
    <original>Y</original>
    <variation>A</variation>
    <location>
        <position position="275"/>
    </location>
</feature>
<feature type="mutagenesis site" description="Strongly reduced autophosphorylation and activation of downstream kinases; when associated with A-309." evidence="15">
    <original>F</original>
    <variation>A</variation>
    <location>
        <position position="287"/>
    </location>
</feature>
<feature type="mutagenesis site" description="Strongly reduced autophosphorylation and activation of downstream kinases; when associated with A-275. Strongly reduced autophosphorylation and activation of downstream kinases; when associated with A-287." evidence="15">
    <original>R</original>
    <variation>S</variation>
    <location>
        <position position="309"/>
    </location>
</feature>
<feature type="mutagenesis site" description="Abolishes autophosphorylation and activation of downstream kinases." evidence="15">
    <original>R</original>
    <variation>E</variation>
    <location>
        <position position="429"/>
    </location>
</feature>
<feature type="mutagenesis site" description="Increased EGF binding." evidence="49">
    <location>
        <begin position="525"/>
        <end position="1210"/>
    </location>
</feature>
<feature type="mutagenesis site" description="Decreases intramolecular interactions and facilitates EGF binding." evidence="16">
    <original>DGPH</original>
    <variation>AGPA</variation>
    <location>
        <begin position="587"/>
        <end position="590"/>
    </location>
</feature>
<feature type="mutagenesis site" description="Increased EGF binding; when associated with A-590 and A-609." evidence="49">
    <original>D</original>
    <variation>A</variation>
    <location>
        <position position="587"/>
    </location>
</feature>
<feature type="mutagenesis site" description="Increased EGF binding; when associated with A-587; A-590 and A-609." evidence="49">
    <original>H</original>
    <variation>A</variation>
    <location>
        <position position="590"/>
    </location>
</feature>
<feature type="mutagenesis site" description="Decreases intramolecular interactions and facilitates EGF binding. Increased EGF binding; when associated with A-587; A-590 and A-609." evidence="16 49">
    <original>K</original>
    <variation>A</variation>
    <location>
        <position position="609"/>
    </location>
</feature>
<feature type="mutagenesis site" description="Strongly reduced phosphorylation." evidence="47 48">
    <original>L</original>
    <variation>A</variation>
    <location>
        <position position="688"/>
    </location>
</feature>
<feature type="mutagenesis site" description="Reduced autophosphorylation." evidence="47">
    <original>V</original>
    <variation>A</variation>
    <location>
        <position position="689"/>
    </location>
</feature>
<feature type="mutagenesis site" description="Constitutively activated kinase." evidence="47">
    <original>V</original>
    <variation>M</variation>
    <location>
        <position position="689"/>
    </location>
</feature>
<feature type="mutagenesis site" description="Reduced phosphorylation." evidence="47 48">
    <original>E</original>
    <variation>A</variation>
    <location>
        <position position="690"/>
    </location>
</feature>
<feature type="mutagenesis site" description="Strongly reduced phosphorylation." evidence="47 48">
    <original>L</original>
    <variation>A</variation>
    <variation>P</variation>
    <location>
        <position position="692"/>
    </location>
</feature>
<feature type="mutagenesis site" description="Increased phosphorylation." evidence="47">
    <original>T</original>
    <variation>A</variation>
    <location>
        <position position="693"/>
    </location>
</feature>
<feature type="mutagenesis site" description="Strongly reduced phosphorylation." evidence="47">
    <original>T</original>
    <variation>D</variation>
    <location>
        <position position="693"/>
    </location>
</feature>
<feature type="mutagenesis site" description="Strongly reduced phosphorylation." evidence="47">
    <original>P</original>
    <variation>A</variation>
    <location>
        <position position="694"/>
    </location>
</feature>
<feature type="mutagenesis site" description="Reduced phosphorylation." evidence="47">
    <original>P</original>
    <variation>A</variation>
    <location>
        <position position="699"/>
    </location>
</feature>
<feature type="mutagenesis site" description="Abolishes phosphorylation." evidence="47">
    <original>N</original>
    <variation>A</variation>
    <location>
        <position position="700"/>
    </location>
</feature>
<feature type="mutagenesis site" description="Abolishes phosphorylation." evidence="47">
    <original>L</original>
    <variation>A</variation>
    <location>
        <position position="704"/>
    </location>
</feature>
<feature type="mutagenesis site" description="Abolishes phosphorylation." evidence="47">
    <original>R</original>
    <variation>A</variation>
    <location>
        <position position="705"/>
    </location>
</feature>
<feature type="mutagenesis site" description="Abolishes phosphorylation." evidence="47">
    <original>I</original>
    <variation>A</variation>
    <location>
        <position position="706"/>
    </location>
</feature>
<feature type="mutagenesis site" description="Abolishes kinase activity." evidence="47">
    <original>K</original>
    <variation>A</variation>
    <variation>M</variation>
    <location>
        <position position="745"/>
    </location>
</feature>
<feature type="mutagenesis site" description="Strongly reduced phosphorylation.">
    <original>D</original>
    <variation>A</variation>
    <location>
        <position position="974"/>
    </location>
</feature>
<feature type="mutagenesis site" description="Reduced phosphorylation." evidence="48">
    <original>R</original>
    <variation>A</variation>
    <location>
        <position position="977"/>
    </location>
</feature>
<feature type="mutagenesis site" description="Constitutively activated kinase." evidence="48">
    <original>ED</original>
    <variation>RK</variation>
    <location>
        <begin position="1005"/>
        <end position="1006"/>
    </location>
</feature>
<feature type="mutagenesis site" description="50% decrease in interaction with PIK3C2B. 65% decrease in interaction with PIK3C2B; when associated with F-1197. Abolishes interaction with PIK3C2B; when associated with F-1197 and F-1092." evidence="10">
    <original>Y</original>
    <variation>F</variation>
    <location>
        <position position="1016"/>
    </location>
</feature>
<feature type="mutagenesis site" description="Abolishes palmitoylation." evidence="74">
    <location>
        <begin position="1048"/>
        <end position="1210"/>
    </location>
</feature>
<feature type="mutagenesis site" description="Decreased palmitoylation." evidence="74">
    <original>C</original>
    <variation>A</variation>
    <location>
        <position position="1049"/>
    </location>
</feature>
<feature type="mutagenesis site" description="No effect on interaction with CBLC." evidence="63">
    <original>Q</original>
    <variation>G</variation>
    <location>
        <position position="1067"/>
    </location>
</feature>
<feature type="mutagenesis site" description="Strongly decreases interaction with CBLC." evidence="63">
    <original>R</original>
    <variation>G</variation>
    <location>
        <position position="1068"/>
    </location>
</feature>
<feature type="mutagenesis site" description="Abolishes interaction with CBLC." evidence="63">
    <original>Y</original>
    <variation>F</variation>
    <location>
        <position position="1069"/>
    </location>
</feature>
<feature type="mutagenesis site" description="No change in interaction with PIK3C2B. Abolishes interaction with PIK3C2B; when associated with F-1197 and F-1016." evidence="10">
    <original>Y</original>
    <variation>F</variation>
    <location>
        <position position="1092"/>
    </location>
</feature>
<feature type="mutagenesis site" description="No change in interaction with PIK3C2B." evidence="10">
    <original>Y</original>
    <variation>F</variation>
    <location>
        <position position="1110"/>
    </location>
</feature>
<feature type="mutagenesis site" description="Decreased palmitoylation." evidence="74">
    <original>C</original>
    <variation>A</variation>
    <location>
        <position position="1146"/>
    </location>
</feature>
<feature type="mutagenesis site" description="No change in interaction with PIK3C2B." evidence="10">
    <original>Y</original>
    <variation>F</variation>
    <location>
        <position position="1172"/>
    </location>
</feature>
<feature type="mutagenesis site" description="No change in interaction with PIK3C2B. 65% decrease in interaction with PIK3C2B; when associated with F-1016. Abolishes interaction with PIK3C2B; when associated with F-1092 and F-1016." evidence="10">
    <original>Y</original>
    <variation>F</variation>
    <location>
        <position position="1197"/>
    </location>
</feature>
<feature type="sequence conflict" description="In Ref. 1; CAA25240." evidence="97" ref="1">
    <original>N</original>
    <variation>K</variation>
    <location>
        <position position="540"/>
    </location>
</feature>
<feature type="strand" evidence="166">
    <location>
        <begin position="40"/>
        <end position="43"/>
    </location>
</feature>
<feature type="helix" evidence="171">
    <location>
        <begin position="44"/>
        <end position="55"/>
    </location>
</feature>
<feature type="strand" evidence="171">
    <location>
        <begin position="60"/>
        <end position="69"/>
    </location>
</feature>
<feature type="helix" evidence="171">
    <location>
        <begin position="77"/>
        <end position="81"/>
    </location>
</feature>
<feature type="strand" evidence="171">
    <location>
        <begin position="84"/>
        <end position="87"/>
    </location>
</feature>
<feature type="strand" evidence="171">
    <location>
        <begin position="89"/>
        <end position="93"/>
    </location>
</feature>
<feature type="helix" evidence="156">
    <location>
        <begin position="101"/>
        <end position="103"/>
    </location>
</feature>
<feature type="turn" evidence="171">
    <location>
        <begin position="114"/>
        <end position="116"/>
    </location>
</feature>
<feature type="strand" evidence="171">
    <location>
        <begin position="117"/>
        <end position="122"/>
    </location>
</feature>
<feature type="strand" evidence="157">
    <location>
        <begin position="125"/>
        <end position="129"/>
    </location>
</feature>
<feature type="strand" evidence="171">
    <location>
        <begin position="145"/>
        <end position="152"/>
    </location>
</feature>
<feature type="helix" evidence="171">
    <location>
        <begin position="159"/>
        <end position="161"/>
    </location>
</feature>
<feature type="helix" evidence="171">
    <location>
        <begin position="164"/>
        <end position="166"/>
    </location>
</feature>
<feature type="helix" evidence="157">
    <location>
        <begin position="170"/>
        <end position="173"/>
    </location>
</feature>
<feature type="strand" evidence="177">
    <location>
        <begin position="183"/>
        <end position="185"/>
    </location>
</feature>
<feature type="helix" evidence="171">
    <location>
        <begin position="195"/>
        <end position="197"/>
    </location>
</feature>
<feature type="strand" evidence="171">
    <location>
        <begin position="199"/>
        <end position="204"/>
    </location>
</feature>
<feature type="strand" evidence="157">
    <location>
        <begin position="211"/>
        <end position="214"/>
    </location>
</feature>
<feature type="strand" evidence="177">
    <location>
        <begin position="217"/>
        <end position="221"/>
    </location>
</feature>
<feature type="strand" evidence="171">
    <location>
        <begin position="223"/>
        <end position="227"/>
    </location>
</feature>
<feature type="helix" evidence="171">
    <location>
        <begin position="228"/>
        <end position="230"/>
    </location>
</feature>
<feature type="strand" evidence="171">
    <location>
        <begin position="236"/>
        <end position="238"/>
    </location>
</feature>
<feature type="strand" evidence="171">
    <location>
        <begin position="240"/>
        <end position="244"/>
    </location>
</feature>
<feature type="turn" evidence="171">
    <location>
        <begin position="245"/>
        <end position="247"/>
    </location>
</feature>
<feature type="strand" evidence="171">
    <location>
        <begin position="248"/>
        <end position="256"/>
    </location>
</feature>
<feature type="strand" evidence="171">
    <location>
        <begin position="259"/>
        <end position="263"/>
    </location>
</feature>
<feature type="strand" evidence="171">
    <location>
        <begin position="267"/>
        <end position="271"/>
    </location>
</feature>
<feature type="turn" evidence="171">
    <location>
        <begin position="272"/>
        <end position="275"/>
    </location>
</feature>
<feature type="strand" evidence="171">
    <location>
        <begin position="276"/>
        <end position="279"/>
    </location>
</feature>
<feature type="strand" evidence="171">
    <location>
        <begin position="285"/>
        <end position="287"/>
    </location>
</feature>
<feature type="strand" evidence="171">
    <location>
        <begin position="290"/>
        <end position="294"/>
    </location>
</feature>
<feature type="turn" evidence="161">
    <location>
        <begin position="296"/>
        <end position="298"/>
    </location>
</feature>
<feature type="strand" evidence="182">
    <location>
        <begin position="299"/>
        <end position="301"/>
    </location>
</feature>
<feature type="strand" evidence="170">
    <location>
        <begin position="303"/>
        <end position="305"/>
    </location>
</feature>
<feature type="strand" evidence="171">
    <location>
        <begin position="306"/>
        <end position="310"/>
    </location>
</feature>
<feature type="strand" evidence="161">
    <location>
        <begin position="313"/>
        <end position="315"/>
    </location>
</feature>
<feature type="strand" evidence="162">
    <location>
        <begin position="318"/>
        <end position="320"/>
    </location>
</feature>
<feature type="strand" evidence="162">
    <location>
        <begin position="323"/>
        <end position="325"/>
    </location>
</feature>
<feature type="strand" evidence="171">
    <location>
        <begin position="330"/>
        <end position="332"/>
    </location>
</feature>
<feature type="strand" evidence="164">
    <location>
        <begin position="336"/>
        <end position="338"/>
    </location>
</feature>
<feature type="turn" evidence="166">
    <location>
        <begin position="340"/>
        <end position="342"/>
    </location>
</feature>
<feature type="helix" evidence="164">
    <location>
        <begin position="343"/>
        <end position="345"/>
    </location>
</feature>
<feature type="strand" evidence="164">
    <location>
        <begin position="349"/>
        <end position="351"/>
    </location>
</feature>
<feature type="turn" evidence="164">
    <location>
        <begin position="353"/>
        <end position="355"/>
    </location>
</feature>
<feature type="helix" evidence="164">
    <location>
        <begin position="356"/>
        <end position="359"/>
    </location>
</feature>
<feature type="strand" evidence="164">
    <location>
        <begin position="363"/>
        <end position="367"/>
    </location>
</feature>
<feature type="strand" evidence="164">
    <location>
        <begin position="369"/>
        <end position="371"/>
    </location>
</feature>
<feature type="helix" evidence="164">
    <location>
        <begin position="373"/>
        <end position="377"/>
    </location>
</feature>
<feature type="turn" evidence="164">
    <location>
        <begin position="380"/>
        <end position="383"/>
    </location>
</feature>
<feature type="helix" evidence="164">
    <location>
        <begin position="389"/>
        <end position="397"/>
    </location>
</feature>
<feature type="strand" evidence="164">
    <location>
        <begin position="400"/>
        <end position="403"/>
    </location>
</feature>
<feature type="strand" evidence="164">
    <location>
        <begin position="405"/>
        <end position="407"/>
    </location>
</feature>
<feature type="helix" evidence="164">
    <location>
        <begin position="418"/>
        <end position="420"/>
    </location>
</feature>
<feature type="turn" evidence="164">
    <location>
        <begin position="433"/>
        <end position="435"/>
    </location>
</feature>
<feature type="strand" evidence="164">
    <location>
        <begin position="436"/>
        <end position="442"/>
    </location>
</feature>
<feature type="strand" evidence="164">
    <location>
        <begin position="458"/>
        <end position="464"/>
    </location>
</feature>
<feature type="helix" evidence="164">
    <location>
        <begin position="472"/>
        <end position="474"/>
    </location>
</feature>
<feature type="helix" evidence="164">
    <location>
        <begin position="477"/>
        <end position="480"/>
    </location>
</feature>
<feature type="strand" evidence="158">
    <location>
        <begin position="481"/>
        <end position="483"/>
    </location>
</feature>
<feature type="strand" evidence="164">
    <location>
        <begin position="488"/>
        <end position="494"/>
    </location>
</feature>
<feature type="helix" evidence="164">
    <location>
        <begin position="496"/>
        <end position="501"/>
    </location>
</feature>
<feature type="strand" evidence="175">
    <location>
        <begin position="508"/>
        <end position="510"/>
    </location>
</feature>
<feature type="strand" evidence="164">
    <location>
        <begin position="515"/>
        <end position="519"/>
    </location>
</feature>
<feature type="helix" evidence="164">
    <location>
        <begin position="520"/>
        <end position="522"/>
    </location>
</feature>
<feature type="strand" evidence="164">
    <location>
        <begin position="523"/>
        <end position="526"/>
    </location>
</feature>
<feature type="strand" evidence="168">
    <location>
        <begin position="531"/>
        <end position="533"/>
    </location>
</feature>
<feature type="strand" evidence="191">
    <location>
        <begin position="534"/>
        <end position="537"/>
    </location>
</feature>
<feature type="strand" evidence="171">
    <location>
        <begin position="540"/>
        <end position="546"/>
    </location>
</feature>
<feature type="strand" evidence="171">
    <location>
        <begin position="548"/>
        <end position="551"/>
    </location>
</feature>
<feature type="strand" evidence="171">
    <location>
        <begin position="554"/>
        <end position="557"/>
    </location>
</feature>
<feature type="strand" evidence="169">
    <location>
        <begin position="560"/>
        <end position="562"/>
    </location>
</feature>
<feature type="strand" evidence="191">
    <location>
        <begin position="566"/>
        <end position="568"/>
    </location>
</feature>
<feature type="strand" evidence="171">
    <location>
        <begin position="570"/>
        <end position="575"/>
    </location>
</feature>
<feature type="strand" evidence="171">
    <location>
        <begin position="578"/>
        <end position="587"/>
    </location>
</feature>
<feature type="strand" evidence="171">
    <location>
        <begin position="590"/>
        <end position="594"/>
    </location>
</feature>
<feature type="strand" evidence="171">
    <location>
        <begin position="597"/>
        <end position="602"/>
    </location>
</feature>
<feature type="strand" evidence="171">
    <location>
        <begin position="606"/>
        <end position="611"/>
    </location>
</feature>
<feature type="strand" evidence="171">
    <location>
        <begin position="615"/>
        <end position="619"/>
    </location>
</feature>
<feature type="strand" evidence="183">
    <location>
        <begin position="622"/>
        <end position="624"/>
    </location>
</feature>
<feature type="strand" evidence="171">
    <location>
        <begin position="629"/>
        <end position="632"/>
    </location>
</feature>
<feature type="helix" evidence="171">
    <location>
        <begin position="633"/>
        <end position="635"/>
    </location>
</feature>
<feature type="strand" evidence="160">
    <location>
        <begin position="643"/>
        <end position="646"/>
    </location>
</feature>
<feature type="helix" evidence="160">
    <location>
        <begin position="648"/>
        <end position="669"/>
    </location>
</feature>
<feature type="strand" evidence="159">
    <location>
        <begin position="671"/>
        <end position="673"/>
    </location>
</feature>
<feature type="helix" evidence="163">
    <location>
        <begin position="679"/>
        <end position="684"/>
    </location>
</feature>
<feature type="helix" evidence="163">
    <location>
        <begin position="685"/>
        <end position="687"/>
    </location>
</feature>
<feature type="strand" evidence="159">
    <location>
        <begin position="688"/>
        <end position="692"/>
    </location>
</feature>
<feature type="strand" evidence="159">
    <location>
        <begin position="694"/>
        <end position="697"/>
    </location>
</feature>
<feature type="strand" evidence="185">
    <location>
        <begin position="703"/>
        <end position="706"/>
    </location>
</feature>
<feature type="helix" evidence="185">
    <location>
        <begin position="709"/>
        <end position="711"/>
    </location>
</feature>
<feature type="strand" evidence="185">
    <location>
        <begin position="712"/>
        <end position="720"/>
    </location>
</feature>
<feature type="strand" evidence="185">
    <location>
        <begin position="722"/>
        <end position="731"/>
    </location>
</feature>
<feature type="turn" evidence="176">
    <location>
        <begin position="734"/>
        <end position="736"/>
    </location>
</feature>
<feature type="strand" evidence="185">
    <location>
        <begin position="740"/>
        <end position="749"/>
    </location>
</feature>
<feature type="helix" evidence="185">
    <location>
        <begin position="753"/>
        <end position="767"/>
    </location>
</feature>
<feature type="turn" evidence="189">
    <location>
        <begin position="771"/>
        <end position="773"/>
    </location>
</feature>
<feature type="strand" evidence="185">
    <location>
        <begin position="777"/>
        <end position="781"/>
    </location>
</feature>
<feature type="strand" evidence="185">
    <location>
        <begin position="783"/>
        <end position="785"/>
    </location>
</feature>
<feature type="strand" evidence="185">
    <location>
        <begin position="787"/>
        <end position="791"/>
    </location>
</feature>
<feature type="strand" evidence="178">
    <location>
        <begin position="794"/>
        <end position="797"/>
    </location>
</feature>
<feature type="helix" evidence="185">
    <location>
        <begin position="798"/>
        <end position="804"/>
    </location>
</feature>
<feature type="helix" evidence="185">
    <location>
        <begin position="806"/>
        <end position="808"/>
    </location>
</feature>
<feature type="helix" evidence="185">
    <location>
        <begin position="811"/>
        <end position="830"/>
    </location>
</feature>
<feature type="helix" evidence="185">
    <location>
        <begin position="840"/>
        <end position="842"/>
    </location>
</feature>
<feature type="strand" evidence="185">
    <location>
        <begin position="843"/>
        <end position="847"/>
    </location>
</feature>
<feature type="strand" evidence="185">
    <location>
        <begin position="850"/>
        <end position="853"/>
    </location>
</feature>
<feature type="helix" evidence="184">
    <location>
        <begin position="856"/>
        <end position="858"/>
    </location>
</feature>
<feature type="turn" evidence="186">
    <location>
        <begin position="859"/>
        <end position="865"/>
    </location>
</feature>
<feature type="helix" evidence="187">
    <location>
        <begin position="866"/>
        <end position="868"/>
    </location>
</feature>
<feature type="strand" evidence="180">
    <location>
        <begin position="871"/>
        <end position="873"/>
    </location>
</feature>
<feature type="strand" evidence="172">
    <location>
        <begin position="875"/>
        <end position="877"/>
    </location>
</feature>
<feature type="helix" evidence="185">
    <location>
        <begin position="878"/>
        <end position="880"/>
    </location>
</feature>
<feature type="helix" evidence="185">
    <location>
        <begin position="883"/>
        <end position="888"/>
    </location>
</feature>
<feature type="helix" evidence="185">
    <location>
        <begin position="893"/>
        <end position="908"/>
    </location>
</feature>
<feature type="turn" evidence="181">
    <location>
        <begin position="909"/>
        <end position="911"/>
    </location>
</feature>
<feature type="turn" evidence="185">
    <location>
        <begin position="914"/>
        <end position="917"/>
    </location>
</feature>
<feature type="helix" evidence="185">
    <location>
        <begin position="920"/>
        <end position="922"/>
    </location>
</feature>
<feature type="helix" evidence="185">
    <location>
        <begin position="923"/>
        <end position="928"/>
    </location>
</feature>
<feature type="strand" evidence="188">
    <location>
        <begin position="937"/>
        <end position="939"/>
    </location>
</feature>
<feature type="helix" evidence="185">
    <location>
        <begin position="941"/>
        <end position="950"/>
    </location>
</feature>
<feature type="strand" evidence="174">
    <location>
        <begin position="951"/>
        <end position="953"/>
    </location>
</feature>
<feature type="helix" evidence="185">
    <location>
        <begin position="955"/>
        <end position="957"/>
    </location>
</feature>
<feature type="helix" evidence="185">
    <location>
        <begin position="961"/>
        <end position="972"/>
    </location>
</feature>
<feature type="helix" evidence="185">
    <location>
        <begin position="975"/>
        <end position="977"/>
    </location>
</feature>
<feature type="helix" evidence="173">
    <location>
        <begin position="984"/>
        <end position="986"/>
    </location>
</feature>
<feature type="turn" evidence="173">
    <location>
        <begin position="992"/>
        <end position="998"/>
    </location>
</feature>
<feature type="turn" evidence="179">
    <location>
        <begin position="999"/>
        <end position="1003"/>
    </location>
</feature>
<feature type="strand" evidence="167">
    <location>
        <begin position="1004"/>
        <end position="1010"/>
    </location>
</feature>
<feature type="helix" evidence="186">
    <location>
        <begin position="1013"/>
        <end position="1016"/>
    </location>
</feature>
<feature type="strand" evidence="165">
    <location>
        <begin position="1068"/>
        <end position="1070"/>
    </location>
</feature>
<feature type="strand" evidence="190">
    <location>
        <begin position="1091"/>
        <end position="1094"/>
    </location>
</feature>